<dbReference type="EMBL" id="X04526">
    <property type="protein sequence ID" value="CAA28207.1"/>
    <property type="molecule type" value="mRNA"/>
</dbReference>
<dbReference type="EMBL" id="AF501882">
    <property type="protein sequence ID" value="AAM15918.1"/>
    <property type="molecule type" value="mRNA"/>
</dbReference>
<dbReference type="EMBL" id="BT007305">
    <property type="protein sequence ID" value="AAP35969.1"/>
    <property type="molecule type" value="mRNA"/>
</dbReference>
<dbReference type="EMBL" id="CR456784">
    <property type="protein sequence ID" value="CAG33065.1"/>
    <property type="molecule type" value="mRNA"/>
</dbReference>
<dbReference type="EMBL" id="AL031282">
    <property type="status" value="NOT_ANNOTATED_CDS"/>
    <property type="molecule type" value="Genomic_DNA"/>
</dbReference>
<dbReference type="EMBL" id="AL109917">
    <property type="status" value="NOT_ANNOTATED_CDS"/>
    <property type="molecule type" value="Genomic_DNA"/>
</dbReference>
<dbReference type="EMBL" id="CH471183">
    <property type="protein sequence ID" value="EAW56147.1"/>
    <property type="molecule type" value="Genomic_DNA"/>
</dbReference>
<dbReference type="EMBL" id="BC004186">
    <property type="protein sequence ID" value="AAH04186.1"/>
    <property type="molecule type" value="mRNA"/>
</dbReference>
<dbReference type="EMBL" id="BC005888">
    <property type="protein sequence ID" value="AAH05888.1"/>
    <property type="molecule type" value="mRNA"/>
</dbReference>
<dbReference type="EMBL" id="BC008991">
    <property type="protein sequence ID" value="AAH08991.1"/>
    <property type="molecule type" value="mRNA"/>
</dbReference>
<dbReference type="EMBL" id="BC114618">
    <property type="protein sequence ID" value="AAI14619.1"/>
    <property type="molecule type" value="mRNA"/>
</dbReference>
<dbReference type="EMBL" id="M36430">
    <property type="protein sequence ID" value="AAA63265.1"/>
    <property type="molecule type" value="mRNA"/>
</dbReference>
<dbReference type="CCDS" id="CCDS34.1">
    <molecule id="P62873-1"/>
</dbReference>
<dbReference type="PIR" id="A24853">
    <property type="entry name" value="RGHUB1"/>
</dbReference>
<dbReference type="RefSeq" id="NP_001269467.1">
    <property type="nucleotide sequence ID" value="NM_001282538.1"/>
</dbReference>
<dbReference type="RefSeq" id="NP_001269468.1">
    <molecule id="P62873-1"/>
    <property type="nucleotide sequence ID" value="NM_001282539.2"/>
</dbReference>
<dbReference type="RefSeq" id="NP_002065.1">
    <molecule id="P62873-1"/>
    <property type="nucleotide sequence ID" value="NM_002074.5"/>
</dbReference>
<dbReference type="RefSeq" id="XP_016856548.1">
    <molecule id="P62873-1"/>
    <property type="nucleotide sequence ID" value="XM_017001059.3"/>
</dbReference>
<dbReference type="RefSeq" id="XP_016856549.1">
    <molecule id="P62873-1"/>
    <property type="nucleotide sequence ID" value="XM_017001060.3"/>
</dbReference>
<dbReference type="RefSeq" id="XP_016856550.1">
    <molecule id="P62873-1"/>
    <property type="nucleotide sequence ID" value="XM_017001061.3"/>
</dbReference>
<dbReference type="RefSeq" id="XP_024302263.1">
    <molecule id="P62873-1"/>
    <property type="nucleotide sequence ID" value="XM_024446495.2"/>
</dbReference>
<dbReference type="RefSeq" id="XP_047273998.1">
    <molecule id="P62873-1"/>
    <property type="nucleotide sequence ID" value="XM_047418042.1"/>
</dbReference>
<dbReference type="RefSeq" id="XP_047273999.1">
    <molecule id="P62873-1"/>
    <property type="nucleotide sequence ID" value="XM_047418043.1"/>
</dbReference>
<dbReference type="RefSeq" id="XP_047274000.1">
    <molecule id="P62873-1"/>
    <property type="nucleotide sequence ID" value="XM_047418044.1"/>
</dbReference>
<dbReference type="RefSeq" id="XP_047274001.1">
    <molecule id="P62873-1"/>
    <property type="nucleotide sequence ID" value="XM_047418045.1"/>
</dbReference>
<dbReference type="RefSeq" id="XP_047274002.1">
    <molecule id="P62873-1"/>
    <property type="nucleotide sequence ID" value="XM_047418046.1"/>
</dbReference>
<dbReference type="RefSeq" id="XP_047274005.1">
    <molecule id="P62873-1"/>
    <property type="nucleotide sequence ID" value="XM_047418049.1"/>
</dbReference>
<dbReference type="RefSeq" id="XP_047274006.1">
    <molecule id="P62873-1"/>
    <property type="nucleotide sequence ID" value="XM_047418050.1"/>
</dbReference>
<dbReference type="RefSeq" id="XP_047274010.1">
    <molecule id="P62873-1"/>
    <property type="nucleotide sequence ID" value="XM_047418054.1"/>
</dbReference>
<dbReference type="RefSeq" id="XP_047274011.1">
    <molecule id="P62873-1"/>
    <property type="nucleotide sequence ID" value="XM_047418055.1"/>
</dbReference>
<dbReference type="RefSeq" id="XP_047274012.1">
    <molecule id="P62873-1"/>
    <property type="nucleotide sequence ID" value="XM_047418056.1"/>
</dbReference>
<dbReference type="RefSeq" id="XP_047274013.1">
    <molecule id="P62873-1"/>
    <property type="nucleotide sequence ID" value="XM_047418057.1"/>
</dbReference>
<dbReference type="RefSeq" id="XP_047274014.1">
    <molecule id="P62873-1"/>
    <property type="nucleotide sequence ID" value="XM_047418058.1"/>
</dbReference>
<dbReference type="RefSeq" id="XP_047274015.1">
    <molecule id="P62873-1"/>
    <property type="nucleotide sequence ID" value="XM_047418059.1"/>
</dbReference>
<dbReference type="RefSeq" id="XP_047274016.1">
    <molecule id="P62873-1"/>
    <property type="nucleotide sequence ID" value="XM_047418060.1"/>
</dbReference>
<dbReference type="RefSeq" id="XP_047274017.1">
    <molecule id="P62873-1"/>
    <property type="nucleotide sequence ID" value="XM_047418061.1"/>
</dbReference>
<dbReference type="RefSeq" id="XP_047274018.1">
    <molecule id="P62873-1"/>
    <property type="nucleotide sequence ID" value="XM_047418062.1"/>
</dbReference>
<dbReference type="RefSeq" id="XP_047274019.1">
    <molecule id="P62873-1"/>
    <property type="nucleotide sequence ID" value="XM_047418063.1"/>
</dbReference>
<dbReference type="RefSeq" id="XP_047274023.1">
    <molecule id="P62873-1"/>
    <property type="nucleotide sequence ID" value="XM_047418067.1"/>
</dbReference>
<dbReference type="RefSeq" id="XP_047274024.1">
    <molecule id="P62873-1"/>
    <property type="nucleotide sequence ID" value="XM_047418068.1"/>
</dbReference>
<dbReference type="RefSeq" id="XP_047274025.1">
    <molecule id="P62873-1"/>
    <property type="nucleotide sequence ID" value="XM_047418069.1"/>
</dbReference>
<dbReference type="RefSeq" id="XP_047274026.1">
    <molecule id="P62873-1"/>
    <property type="nucleotide sequence ID" value="XM_047418070.1"/>
</dbReference>
<dbReference type="RefSeq" id="XP_047274027.1">
    <molecule id="P62873-1"/>
    <property type="nucleotide sequence ID" value="XM_047418071.1"/>
</dbReference>
<dbReference type="RefSeq" id="XP_054192030.1">
    <molecule id="P62873-1"/>
    <property type="nucleotide sequence ID" value="XM_054336055.1"/>
</dbReference>
<dbReference type="RefSeq" id="XP_054192031.1">
    <molecule id="P62873-1"/>
    <property type="nucleotide sequence ID" value="XM_054336056.1"/>
</dbReference>
<dbReference type="RefSeq" id="XP_054192032.1">
    <molecule id="P62873-1"/>
    <property type="nucleotide sequence ID" value="XM_054336057.1"/>
</dbReference>
<dbReference type="RefSeq" id="XP_054192033.1">
    <molecule id="P62873-1"/>
    <property type="nucleotide sequence ID" value="XM_054336058.1"/>
</dbReference>
<dbReference type="RefSeq" id="XP_054192034.1">
    <molecule id="P62873-1"/>
    <property type="nucleotide sequence ID" value="XM_054336059.1"/>
</dbReference>
<dbReference type="RefSeq" id="XP_054192035.1">
    <molecule id="P62873-1"/>
    <property type="nucleotide sequence ID" value="XM_054336060.1"/>
</dbReference>
<dbReference type="RefSeq" id="XP_054192036.1">
    <molecule id="P62873-1"/>
    <property type="nucleotide sequence ID" value="XM_054336061.1"/>
</dbReference>
<dbReference type="RefSeq" id="XP_054192037.1">
    <molecule id="P62873-1"/>
    <property type="nucleotide sequence ID" value="XM_054336062.1"/>
</dbReference>
<dbReference type="RefSeq" id="XP_054192038.1">
    <molecule id="P62873-1"/>
    <property type="nucleotide sequence ID" value="XM_054336063.1"/>
</dbReference>
<dbReference type="RefSeq" id="XP_054192039.1">
    <molecule id="P62873-1"/>
    <property type="nucleotide sequence ID" value="XM_054336064.1"/>
</dbReference>
<dbReference type="RefSeq" id="XP_054192040.1">
    <molecule id="P62873-1"/>
    <property type="nucleotide sequence ID" value="XM_054336065.1"/>
</dbReference>
<dbReference type="RefSeq" id="XP_054192041.1">
    <molecule id="P62873-1"/>
    <property type="nucleotide sequence ID" value="XM_054336066.1"/>
</dbReference>
<dbReference type="RefSeq" id="XP_054192042.1">
    <molecule id="P62873-1"/>
    <property type="nucleotide sequence ID" value="XM_054336067.1"/>
</dbReference>
<dbReference type="RefSeq" id="XP_054192043.1">
    <molecule id="P62873-1"/>
    <property type="nucleotide sequence ID" value="XM_054336068.1"/>
</dbReference>
<dbReference type="RefSeq" id="XP_054192044.1">
    <molecule id="P62873-1"/>
    <property type="nucleotide sequence ID" value="XM_054336069.1"/>
</dbReference>
<dbReference type="RefSeq" id="XP_054192045.1">
    <molecule id="P62873-1"/>
    <property type="nucleotide sequence ID" value="XM_054336070.1"/>
</dbReference>
<dbReference type="RefSeq" id="XP_054192046.1">
    <molecule id="P62873-1"/>
    <property type="nucleotide sequence ID" value="XM_054336071.1"/>
</dbReference>
<dbReference type="RefSeq" id="XP_054192047.1">
    <molecule id="P62873-1"/>
    <property type="nucleotide sequence ID" value="XM_054336072.1"/>
</dbReference>
<dbReference type="RefSeq" id="XP_054192048.1">
    <molecule id="P62873-1"/>
    <property type="nucleotide sequence ID" value="XM_054336073.1"/>
</dbReference>
<dbReference type="RefSeq" id="XP_054192049.1">
    <molecule id="P62873-1"/>
    <property type="nucleotide sequence ID" value="XM_054336074.1"/>
</dbReference>
<dbReference type="RefSeq" id="XP_054192050.1">
    <molecule id="P62873-1"/>
    <property type="nucleotide sequence ID" value="XM_054336075.1"/>
</dbReference>
<dbReference type="RefSeq" id="XP_054192051.1">
    <molecule id="P62873-1"/>
    <property type="nucleotide sequence ID" value="XM_054336076.1"/>
</dbReference>
<dbReference type="RefSeq" id="XP_054192052.1">
    <molecule id="P62873-1"/>
    <property type="nucleotide sequence ID" value="XM_054336077.1"/>
</dbReference>
<dbReference type="RefSeq" id="XP_054192053.1">
    <molecule id="P62873-1"/>
    <property type="nucleotide sequence ID" value="XM_054336078.1"/>
</dbReference>
<dbReference type="RefSeq" id="XP_054192054.1">
    <molecule id="P62873-1"/>
    <property type="nucleotide sequence ID" value="XM_054336079.1"/>
</dbReference>
<dbReference type="RefSeq" id="XP_054192055.1">
    <molecule id="P62873-1"/>
    <property type="nucleotide sequence ID" value="XM_054336080.1"/>
</dbReference>
<dbReference type="RefSeq" id="XP_054192056.1">
    <molecule id="P62873-1"/>
    <property type="nucleotide sequence ID" value="XM_054336081.1"/>
</dbReference>
<dbReference type="PDB" id="4KFM">
    <property type="method" value="X-ray"/>
    <property type="resolution" value="3.45 A"/>
    <property type="chains" value="B=1-340"/>
</dbReference>
<dbReference type="PDB" id="4PNK">
    <property type="method" value="X-ray"/>
    <property type="resolution" value="2.56 A"/>
    <property type="chains" value="B=1-340"/>
</dbReference>
<dbReference type="PDB" id="5HE0">
    <property type="method" value="X-ray"/>
    <property type="resolution" value="2.56 A"/>
    <property type="chains" value="B=2-340"/>
</dbReference>
<dbReference type="PDB" id="5HE1">
    <property type="method" value="X-ray"/>
    <property type="resolution" value="3.15 A"/>
    <property type="chains" value="B=2-340"/>
</dbReference>
<dbReference type="PDB" id="5HE2">
    <property type="method" value="X-ray"/>
    <property type="resolution" value="2.79 A"/>
    <property type="chains" value="B=2-340"/>
</dbReference>
<dbReference type="PDB" id="5HE3">
    <property type="method" value="X-ray"/>
    <property type="resolution" value="2.74 A"/>
    <property type="chains" value="B=2-340"/>
</dbReference>
<dbReference type="PDB" id="5UKK">
    <property type="method" value="X-ray"/>
    <property type="resolution" value="2.60 A"/>
    <property type="chains" value="B=2-340"/>
</dbReference>
<dbReference type="PDB" id="5UKL">
    <property type="method" value="X-ray"/>
    <property type="resolution" value="2.15 A"/>
    <property type="chains" value="B=2-340"/>
</dbReference>
<dbReference type="PDB" id="5UKM">
    <property type="method" value="X-ray"/>
    <property type="resolution" value="3.03 A"/>
    <property type="chains" value="B=2-340"/>
</dbReference>
<dbReference type="PDB" id="5UZ7">
    <property type="method" value="EM"/>
    <property type="resolution" value="4.10 A"/>
    <property type="chains" value="B=2-340"/>
</dbReference>
<dbReference type="PDB" id="6B3J">
    <property type="method" value="EM"/>
    <property type="resolution" value="3.30 A"/>
    <property type="chains" value="B=2-340"/>
</dbReference>
<dbReference type="PDB" id="6CRK">
    <property type="method" value="X-ray"/>
    <property type="resolution" value="2.00 A"/>
    <property type="chains" value="B=2-340"/>
</dbReference>
<dbReference type="PDB" id="6D9H">
    <property type="method" value="EM"/>
    <property type="resolution" value="3.60 A"/>
    <property type="chains" value="B=2-340"/>
</dbReference>
<dbReference type="PDB" id="6DDE">
    <property type="method" value="EM"/>
    <property type="resolution" value="3.50 A"/>
    <property type="chains" value="B=2-340"/>
</dbReference>
<dbReference type="PDB" id="6DDF">
    <property type="method" value="EM"/>
    <property type="resolution" value="3.50 A"/>
    <property type="chains" value="B=2-340"/>
</dbReference>
<dbReference type="PDB" id="6E3Y">
    <property type="method" value="EM"/>
    <property type="resolution" value="3.30 A"/>
    <property type="chains" value="B=2-340"/>
</dbReference>
<dbReference type="PDB" id="6EG8">
    <property type="method" value="X-ray"/>
    <property type="resolution" value="2.80 A"/>
    <property type="chains" value="A/B/D/F=2-340"/>
</dbReference>
<dbReference type="PDB" id="6G79">
    <property type="method" value="EM"/>
    <property type="resolution" value="3.78 A"/>
    <property type="chains" value="B=2-340"/>
</dbReference>
<dbReference type="PDB" id="6GDG">
    <property type="method" value="EM"/>
    <property type="resolution" value="4.11 A"/>
    <property type="chains" value="B=2-340"/>
</dbReference>
<dbReference type="PDB" id="6KPF">
    <property type="method" value="EM"/>
    <property type="resolution" value="2.90 A"/>
    <property type="chains" value="B=1-340"/>
</dbReference>
<dbReference type="PDB" id="6KPG">
    <property type="method" value="EM"/>
    <property type="resolution" value="3.00 A"/>
    <property type="chains" value="B=2-340"/>
</dbReference>
<dbReference type="PDB" id="6LFM">
    <property type="method" value="EM"/>
    <property type="resolution" value="3.50 A"/>
    <property type="chains" value="B=2-340"/>
</dbReference>
<dbReference type="PDB" id="6LFO">
    <property type="method" value="EM"/>
    <property type="resolution" value="3.40 A"/>
    <property type="chains" value="B=2-340"/>
</dbReference>
<dbReference type="PDB" id="6LI3">
    <property type="method" value="EM"/>
    <property type="resolution" value="3.32 A"/>
    <property type="chains" value="B=1-340"/>
</dbReference>
<dbReference type="PDB" id="6LMK">
    <property type="method" value="EM"/>
    <property type="resolution" value="3.70 A"/>
    <property type="chains" value="B=2-340"/>
</dbReference>
<dbReference type="PDB" id="6LML">
    <property type="method" value="EM"/>
    <property type="resolution" value="3.90 A"/>
    <property type="chains" value="B=2-340"/>
</dbReference>
<dbReference type="PDB" id="6M1H">
    <property type="method" value="EM"/>
    <property type="resolution" value="3.60 A"/>
    <property type="chains" value="E=1-340"/>
</dbReference>
<dbReference type="PDB" id="6M1I">
    <property type="method" value="EM"/>
    <property type="resolution" value="3.50 A"/>
    <property type="chains" value="E=1-340"/>
</dbReference>
<dbReference type="PDB" id="6M8S">
    <property type="method" value="X-ray"/>
    <property type="resolution" value="3.71 A"/>
    <property type="chains" value="C/D/G/H/K=2-340"/>
</dbReference>
<dbReference type="PDB" id="6N4B">
    <property type="method" value="EM"/>
    <property type="resolution" value="3.00 A"/>
    <property type="chains" value="B=2-340"/>
</dbReference>
<dbReference type="PDB" id="6NI3">
    <property type="method" value="EM"/>
    <property type="resolution" value="3.80 A"/>
    <property type="chains" value="B=2-340"/>
</dbReference>
<dbReference type="PDB" id="6NIY">
    <property type="method" value="EM"/>
    <property type="resolution" value="3.34 A"/>
    <property type="chains" value="B=1-340"/>
</dbReference>
<dbReference type="PDB" id="6OIJ">
    <property type="method" value="EM"/>
    <property type="resolution" value="3.30 A"/>
    <property type="chains" value="B=2-340"/>
</dbReference>
<dbReference type="PDB" id="6OIK">
    <property type="method" value="EM"/>
    <property type="resolution" value="3.60 A"/>
    <property type="chains" value="B=2-340"/>
</dbReference>
<dbReference type="PDB" id="6OMM">
    <property type="method" value="EM"/>
    <property type="resolution" value="3.17 A"/>
    <property type="chains" value="B=2-340"/>
</dbReference>
<dbReference type="PDB" id="6ORV">
    <property type="method" value="EM"/>
    <property type="resolution" value="3.00 A"/>
    <property type="chains" value="BP=2-340"/>
</dbReference>
<dbReference type="PDB" id="6OS9">
    <property type="method" value="EM"/>
    <property type="resolution" value="3.00 A"/>
    <property type="chains" value="B=2-340"/>
</dbReference>
<dbReference type="PDB" id="6OSA">
    <property type="method" value="EM"/>
    <property type="resolution" value="3.00 A"/>
    <property type="chains" value="B=2-340"/>
</dbReference>
<dbReference type="PDB" id="6OT0">
    <property type="method" value="EM"/>
    <property type="resolution" value="3.90 A"/>
    <property type="chains" value="B=2-340"/>
</dbReference>
<dbReference type="PDB" id="6P9X">
    <property type="method" value="EM"/>
    <property type="resolution" value="2.91 A"/>
    <property type="chains" value="B=2-340"/>
</dbReference>
<dbReference type="PDB" id="6P9Y">
    <property type="method" value="EM"/>
    <property type="resolution" value="3.01 A"/>
    <property type="chains" value="B=2-340"/>
</dbReference>
<dbReference type="PDB" id="6PB0">
    <property type="method" value="EM"/>
    <property type="resolution" value="3.00 A"/>
    <property type="chains" value="B=2-340"/>
</dbReference>
<dbReference type="PDB" id="6PB1">
    <property type="method" value="EM"/>
    <property type="resolution" value="2.80 A"/>
    <property type="chains" value="B=2-340"/>
</dbReference>
<dbReference type="PDB" id="6PT0">
    <property type="method" value="EM"/>
    <property type="resolution" value="3.20 A"/>
    <property type="chains" value="B=2-340"/>
</dbReference>
<dbReference type="PDB" id="6UUN">
    <property type="method" value="EM"/>
    <property type="resolution" value="3.00 A"/>
    <property type="chains" value="B=2-340"/>
</dbReference>
<dbReference type="PDB" id="6UUS">
    <property type="method" value="EM"/>
    <property type="resolution" value="2.40 A"/>
    <property type="chains" value="B=2-340"/>
</dbReference>
<dbReference type="PDB" id="6UVA">
    <property type="method" value="EM"/>
    <property type="resolution" value="2.30 A"/>
    <property type="chains" value="B=2-340"/>
</dbReference>
<dbReference type="PDB" id="6VCB">
    <property type="method" value="EM"/>
    <property type="resolution" value="3.30 A"/>
    <property type="chains" value="B=2-340"/>
</dbReference>
<dbReference type="PDB" id="6VMS">
    <property type="method" value="EM"/>
    <property type="resolution" value="3.80 A"/>
    <property type="chains" value="B=1-340"/>
</dbReference>
<dbReference type="PDB" id="6VN7">
    <property type="method" value="EM"/>
    <property type="resolution" value="3.20 A"/>
    <property type="chains" value="B=2-340"/>
</dbReference>
<dbReference type="PDB" id="6WHA">
    <property type="method" value="EM"/>
    <property type="resolution" value="3.36 A"/>
    <property type="chains" value="C=2-340"/>
</dbReference>
<dbReference type="PDB" id="6WHC">
    <property type="method" value="EM"/>
    <property type="resolution" value="3.40 A"/>
    <property type="chains" value="B=1-340"/>
</dbReference>
<dbReference type="PDB" id="6WI9">
    <property type="method" value="EM"/>
    <property type="resolution" value="4.30 A"/>
    <property type="chains" value="B=1-340"/>
</dbReference>
<dbReference type="PDB" id="6WPW">
    <property type="method" value="EM"/>
    <property type="resolution" value="3.10 A"/>
    <property type="chains" value="D=2-340"/>
</dbReference>
<dbReference type="PDB" id="6WZG">
    <property type="method" value="EM"/>
    <property type="resolution" value="2.30 A"/>
    <property type="chains" value="B=1-340"/>
</dbReference>
<dbReference type="PDB" id="6X18">
    <property type="method" value="EM"/>
    <property type="resolution" value="2.10 A"/>
    <property type="chains" value="B=2-340"/>
</dbReference>
<dbReference type="PDB" id="6X19">
    <property type="method" value="EM"/>
    <property type="resolution" value="2.10 A"/>
    <property type="chains" value="B=2-340"/>
</dbReference>
<dbReference type="PDB" id="6X1A">
    <property type="method" value="EM"/>
    <property type="resolution" value="2.50 A"/>
    <property type="chains" value="B=2-340"/>
</dbReference>
<dbReference type="PDB" id="6XBJ">
    <property type="method" value="EM"/>
    <property type="resolution" value="3.88 A"/>
    <property type="chains" value="B=2-340"/>
</dbReference>
<dbReference type="PDB" id="6XBK">
    <property type="method" value="EM"/>
    <property type="resolution" value="3.24 A"/>
    <property type="chains" value="B=2-340"/>
</dbReference>
<dbReference type="PDB" id="6XBL">
    <property type="method" value="EM"/>
    <property type="resolution" value="3.90 A"/>
    <property type="chains" value="B=2-340"/>
</dbReference>
<dbReference type="PDB" id="6XBM">
    <property type="method" value="EM"/>
    <property type="resolution" value="3.15 A"/>
    <property type="chains" value="B=2-340"/>
</dbReference>
<dbReference type="PDB" id="6XOX">
    <property type="method" value="EM"/>
    <property type="resolution" value="3.10 A"/>
    <property type="chains" value="B=2-340"/>
</dbReference>
<dbReference type="PDB" id="7AUE">
    <property type="method" value="EM"/>
    <property type="resolution" value="2.97 A"/>
    <property type="chains" value="B=2-340"/>
</dbReference>
<dbReference type="PDB" id="7BB6">
    <property type="method" value="EM"/>
    <property type="resolution" value="4.20 A"/>
    <property type="chains" value="C=2-340"/>
</dbReference>
<dbReference type="PDB" id="7BB7">
    <property type="method" value="EM"/>
    <property type="resolution" value="4.40 A"/>
    <property type="chains" value="C=2-340"/>
</dbReference>
<dbReference type="PDB" id="7C2E">
    <property type="method" value="EM"/>
    <property type="resolution" value="4.20 A"/>
    <property type="chains" value="B=2-340"/>
</dbReference>
<dbReference type="PDB" id="7CFM">
    <property type="method" value="EM"/>
    <property type="resolution" value="3.00 A"/>
    <property type="chains" value="B=2-340"/>
</dbReference>
<dbReference type="PDB" id="7CFN">
    <property type="method" value="EM"/>
    <property type="resolution" value="3.00 A"/>
    <property type="chains" value="B=2-340"/>
</dbReference>
<dbReference type="PDB" id="7CKW">
    <property type="method" value="EM"/>
    <property type="resolution" value="3.22 A"/>
    <property type="chains" value="B=2-340"/>
</dbReference>
<dbReference type="PDB" id="7CKX">
    <property type="method" value="EM"/>
    <property type="resolution" value="3.54 A"/>
    <property type="chains" value="B=2-340"/>
</dbReference>
<dbReference type="PDB" id="7CKY">
    <property type="method" value="EM"/>
    <property type="resolution" value="3.20 A"/>
    <property type="chains" value="B=2-340"/>
</dbReference>
<dbReference type="PDB" id="7CKZ">
    <property type="method" value="EM"/>
    <property type="resolution" value="3.10 A"/>
    <property type="chains" value="B=2-340"/>
</dbReference>
<dbReference type="PDB" id="7CMU">
    <property type="method" value="EM"/>
    <property type="resolution" value="3.00 A"/>
    <property type="chains" value="B=2-340"/>
</dbReference>
<dbReference type="PDB" id="7CMV">
    <property type="method" value="EM"/>
    <property type="resolution" value="2.70 A"/>
    <property type="chains" value="B=2-340"/>
</dbReference>
<dbReference type="PDB" id="7CRH">
    <property type="method" value="EM"/>
    <property type="resolution" value="3.30 A"/>
    <property type="chains" value="B=2-340"/>
</dbReference>
<dbReference type="PDB" id="7CX2">
    <property type="method" value="EM"/>
    <property type="resolution" value="2.80 A"/>
    <property type="chains" value="B=2-340"/>
</dbReference>
<dbReference type="PDB" id="7CX3">
    <property type="method" value="EM"/>
    <property type="resolution" value="2.80 A"/>
    <property type="chains" value="B=2-340"/>
</dbReference>
<dbReference type="PDB" id="7CX4">
    <property type="method" value="EM"/>
    <property type="resolution" value="2.90 A"/>
    <property type="chains" value="B=2-340"/>
</dbReference>
<dbReference type="PDB" id="7D76">
    <property type="method" value="EM"/>
    <property type="resolution" value="3.10 A"/>
    <property type="chains" value="B=1-340"/>
</dbReference>
<dbReference type="PDB" id="7D77">
    <property type="method" value="EM"/>
    <property type="resolution" value="2.90 A"/>
    <property type="chains" value="B=1-340"/>
</dbReference>
<dbReference type="PDB" id="7D7M">
    <property type="method" value="EM"/>
    <property type="resolution" value="3.30 A"/>
    <property type="chains" value="B=2-340"/>
</dbReference>
<dbReference type="PDB" id="7DB6">
    <property type="method" value="EM"/>
    <property type="resolution" value="3.30 A"/>
    <property type="chains" value="B=1-340"/>
</dbReference>
<dbReference type="PDB" id="7DFL">
    <property type="method" value="EM"/>
    <property type="resolution" value="3.30 A"/>
    <property type="chains" value="B=2-340"/>
</dbReference>
<dbReference type="PDB" id="7E2X">
    <property type="method" value="EM"/>
    <property type="resolution" value="3.00 A"/>
    <property type="chains" value="B=2-340"/>
</dbReference>
<dbReference type="PDB" id="7E2Y">
    <property type="method" value="EM"/>
    <property type="resolution" value="3.00 A"/>
    <property type="chains" value="B=2-340"/>
</dbReference>
<dbReference type="PDB" id="7E2Z">
    <property type="method" value="EM"/>
    <property type="resolution" value="3.10 A"/>
    <property type="chains" value="B=2-340"/>
</dbReference>
<dbReference type="PDB" id="7E32">
    <property type="method" value="EM"/>
    <property type="resolution" value="2.90 A"/>
    <property type="chains" value="B=2-340"/>
</dbReference>
<dbReference type="PDB" id="7E33">
    <property type="method" value="EM"/>
    <property type="resolution" value="2.90 A"/>
    <property type="chains" value="B=2-340"/>
</dbReference>
<dbReference type="PDB" id="7E9G">
    <property type="method" value="EM"/>
    <property type="resolution" value="3.50 A"/>
    <property type="chains" value="B=2-340"/>
</dbReference>
<dbReference type="PDB" id="7E9H">
    <property type="method" value="EM"/>
    <property type="resolution" value="4.00 A"/>
    <property type="chains" value="B=2-340"/>
</dbReference>
<dbReference type="PDB" id="7EB2">
    <property type="method" value="EM"/>
    <property type="resolution" value="3.50 A"/>
    <property type="chains" value="B=2-340"/>
</dbReference>
<dbReference type="PDB" id="7EJ0">
    <property type="method" value="EM"/>
    <property type="resolution" value="3.20 A"/>
    <property type="chains" value="B=2-340"/>
</dbReference>
<dbReference type="PDB" id="7EJ8">
    <property type="method" value="EM"/>
    <property type="resolution" value="3.00 A"/>
    <property type="chains" value="B=2-340"/>
</dbReference>
<dbReference type="PDB" id="7EJA">
    <property type="method" value="EM"/>
    <property type="resolution" value="3.60 A"/>
    <property type="chains" value="B=2-340"/>
</dbReference>
<dbReference type="PDB" id="7EJK">
    <property type="method" value="EM"/>
    <property type="resolution" value="3.40 A"/>
    <property type="chains" value="B=2-340"/>
</dbReference>
<dbReference type="PDB" id="7EJX">
    <property type="method" value="EM"/>
    <property type="resolution" value="2.40 A"/>
    <property type="chains" value="B=2-340"/>
</dbReference>
<dbReference type="PDB" id="7EO2">
    <property type="method" value="EM"/>
    <property type="resolution" value="2.89 A"/>
    <property type="chains" value="C=2-340"/>
</dbReference>
<dbReference type="PDB" id="7EO4">
    <property type="method" value="EM"/>
    <property type="resolution" value="2.86 A"/>
    <property type="chains" value="C=2-340"/>
</dbReference>
<dbReference type="PDB" id="7EPT">
    <property type="method" value="EM"/>
    <property type="resolution" value="3.00 A"/>
    <property type="chains" value="B=2-340"/>
</dbReference>
<dbReference type="PDB" id="7EUO">
    <property type="method" value="EM"/>
    <property type="resolution" value="2.90 A"/>
    <property type="chains" value="B=2-340"/>
</dbReference>
<dbReference type="PDB" id="7EVY">
    <property type="method" value="EM"/>
    <property type="resolution" value="2.98 A"/>
    <property type="chains" value="B=2-340"/>
</dbReference>
<dbReference type="PDB" id="7EVZ">
    <property type="method" value="EM"/>
    <property type="resolution" value="3.07 A"/>
    <property type="chains" value="B=2-340"/>
</dbReference>
<dbReference type="PDB" id="7EW0">
    <property type="method" value="EM"/>
    <property type="resolution" value="3.42 A"/>
    <property type="chains" value="B=2-340"/>
</dbReference>
<dbReference type="PDB" id="7EW1">
    <property type="method" value="EM"/>
    <property type="resolution" value="3.40 A"/>
    <property type="chains" value="B=2-340"/>
</dbReference>
<dbReference type="PDB" id="7EW2">
    <property type="method" value="EM"/>
    <property type="resolution" value="3.10 A"/>
    <property type="chains" value="B=2-340"/>
</dbReference>
<dbReference type="PDB" id="7EW3">
    <property type="method" value="EM"/>
    <property type="resolution" value="3.10 A"/>
    <property type="chains" value="B=2-340"/>
</dbReference>
<dbReference type="PDB" id="7EW4">
    <property type="method" value="EM"/>
    <property type="resolution" value="3.20 A"/>
    <property type="chains" value="B=2-340"/>
</dbReference>
<dbReference type="PDB" id="7EW7">
    <property type="method" value="EM"/>
    <property type="resolution" value="3.27 A"/>
    <property type="chains" value="B=2-340"/>
</dbReference>
<dbReference type="PDB" id="7EXD">
    <property type="method" value="EM"/>
    <property type="resolution" value="3.40 A"/>
    <property type="chains" value="B=2-340"/>
</dbReference>
<dbReference type="PDB" id="7EZH">
    <property type="method" value="EM"/>
    <property type="resolution" value="3.20 A"/>
    <property type="chains" value="B=2-340"/>
</dbReference>
<dbReference type="PDB" id="7EZK">
    <property type="method" value="EM"/>
    <property type="resolution" value="3.10 A"/>
    <property type="chains" value="B=2-340"/>
</dbReference>
<dbReference type="PDB" id="7EZM">
    <property type="method" value="EM"/>
    <property type="resolution" value="2.90 A"/>
    <property type="chains" value="B=2-340"/>
</dbReference>
<dbReference type="PDB" id="7F0T">
    <property type="method" value="EM"/>
    <property type="resolution" value="3.10 A"/>
    <property type="chains" value="B=2-340"/>
</dbReference>
<dbReference type="PDB" id="7F1O">
    <property type="method" value="EM"/>
    <property type="resolution" value="3.13 A"/>
    <property type="chains" value="B=2-340"/>
</dbReference>
<dbReference type="PDB" id="7F1Q">
    <property type="method" value="EM"/>
    <property type="resolution" value="2.90 A"/>
    <property type="chains" value="B=1-340"/>
</dbReference>
<dbReference type="PDB" id="7F1R">
    <property type="method" value="EM"/>
    <property type="resolution" value="3.00 A"/>
    <property type="chains" value="B=1-340"/>
</dbReference>
<dbReference type="PDB" id="7F1S">
    <property type="method" value="EM"/>
    <property type="resolution" value="2.80 A"/>
    <property type="chains" value="B=1-340"/>
</dbReference>
<dbReference type="PDB" id="7F1Z">
    <property type="method" value="EM"/>
    <property type="resolution" value="3.46 A"/>
    <property type="chains" value="B=2-340"/>
</dbReference>
<dbReference type="PDB" id="7F23">
    <property type="method" value="EM"/>
    <property type="resolution" value="3.58 A"/>
    <property type="chains" value="B=2-340"/>
</dbReference>
<dbReference type="PDB" id="7F24">
    <property type="method" value="EM"/>
    <property type="resolution" value="4.16 A"/>
    <property type="chains" value="B=2-340"/>
</dbReference>
<dbReference type="PDB" id="7F4D">
    <property type="method" value="EM"/>
    <property type="resolution" value="3.00 A"/>
    <property type="chains" value="B=2-340"/>
</dbReference>
<dbReference type="PDB" id="7F4F">
    <property type="method" value="EM"/>
    <property type="resolution" value="2.90 A"/>
    <property type="chains" value="B=2-340"/>
</dbReference>
<dbReference type="PDB" id="7F4H">
    <property type="method" value="EM"/>
    <property type="resolution" value="2.70 A"/>
    <property type="chains" value="B=2-340"/>
</dbReference>
<dbReference type="PDB" id="7F4I">
    <property type="method" value="EM"/>
    <property type="resolution" value="3.10 A"/>
    <property type="chains" value="B=2-340"/>
</dbReference>
<dbReference type="PDB" id="7F53">
    <property type="method" value="EM"/>
    <property type="resolution" value="3.00 A"/>
    <property type="chains" value="B=2-340"/>
</dbReference>
<dbReference type="PDB" id="7F54">
    <property type="method" value="EM"/>
    <property type="resolution" value="3.00 A"/>
    <property type="chains" value="B=2-340"/>
</dbReference>
<dbReference type="PDB" id="7F55">
    <property type="method" value="EM"/>
    <property type="resolution" value="3.10 A"/>
    <property type="chains" value="B=2-340"/>
</dbReference>
<dbReference type="PDB" id="7F58">
    <property type="method" value="EM"/>
    <property type="resolution" value="3.10 A"/>
    <property type="chains" value="B=2-340"/>
</dbReference>
<dbReference type="PDB" id="7F6G">
    <property type="method" value="EM"/>
    <property type="resolution" value="2.90 A"/>
    <property type="chains" value="C=2-340"/>
</dbReference>
<dbReference type="PDB" id="7F6H">
    <property type="method" value="EM"/>
    <property type="resolution" value="2.90 A"/>
    <property type="chains" value="C=2-340"/>
</dbReference>
<dbReference type="PDB" id="7F6I">
    <property type="method" value="EM"/>
    <property type="resolution" value="2.80 A"/>
    <property type="chains" value="C=2-340"/>
</dbReference>
<dbReference type="PDB" id="7F8V">
    <property type="method" value="EM"/>
    <property type="resolution" value="3.30 A"/>
    <property type="chains" value="B=2-340"/>
</dbReference>
<dbReference type="PDB" id="7F8W">
    <property type="method" value="EM"/>
    <property type="resolution" value="3.10 A"/>
    <property type="chains" value="B=2-340"/>
</dbReference>
<dbReference type="PDB" id="7F9Y">
    <property type="method" value="EM"/>
    <property type="resolution" value="2.90 A"/>
    <property type="chains" value="B=2-340"/>
</dbReference>
<dbReference type="PDB" id="7F9Z">
    <property type="method" value="EM"/>
    <property type="resolution" value="3.20 A"/>
    <property type="chains" value="B=2-340"/>
</dbReference>
<dbReference type="PDB" id="7JHJ">
    <property type="method" value="EM"/>
    <property type="resolution" value="3.20 A"/>
    <property type="chains" value="B=2-340"/>
</dbReference>
<dbReference type="PDB" id="7JOZ">
    <property type="method" value="X-ray"/>
    <property type="resolution" value="3.80 A"/>
    <property type="chains" value="B=2-340"/>
</dbReference>
<dbReference type="PDB" id="7JV5">
    <property type="method" value="EM"/>
    <property type="resolution" value="3.00 A"/>
    <property type="chains" value="B=2-340"/>
</dbReference>
<dbReference type="PDB" id="7JVP">
    <property type="method" value="EM"/>
    <property type="resolution" value="2.90 A"/>
    <property type="chains" value="B=2-340"/>
</dbReference>
<dbReference type="PDB" id="7JVQ">
    <property type="method" value="EM"/>
    <property type="resolution" value="3.00 A"/>
    <property type="chains" value="B=2-340"/>
</dbReference>
<dbReference type="PDB" id="7JVR">
    <property type="method" value="EM"/>
    <property type="resolution" value="2.80 A"/>
    <property type="chains" value="B=2-340"/>
</dbReference>
<dbReference type="PDB" id="7K7L">
    <property type="method" value="X-ray"/>
    <property type="resolution" value="2.54 A"/>
    <property type="chains" value="B=2-340"/>
</dbReference>
<dbReference type="PDB" id="7K7Z">
    <property type="method" value="X-ray"/>
    <property type="resolution" value="2.61 A"/>
    <property type="chains" value="B=2-340"/>
</dbReference>
<dbReference type="PDB" id="7KH0">
    <property type="method" value="EM"/>
    <property type="resolution" value="2.80 A"/>
    <property type="chains" value="B=2-340"/>
</dbReference>
<dbReference type="PDB" id="7KI0">
    <property type="method" value="EM"/>
    <property type="resolution" value="2.50 A"/>
    <property type="chains" value="B=2-340"/>
</dbReference>
<dbReference type="PDB" id="7KI1">
    <property type="method" value="EM"/>
    <property type="resolution" value="2.50 A"/>
    <property type="chains" value="B=2-340"/>
</dbReference>
<dbReference type="PDB" id="7L0P">
    <property type="method" value="EM"/>
    <property type="resolution" value="4.10 A"/>
    <property type="chains" value="B=2-340"/>
</dbReference>
<dbReference type="PDB" id="7L0Q">
    <property type="method" value="EM"/>
    <property type="resolution" value="4.30 A"/>
    <property type="chains" value="B=2-340"/>
</dbReference>
<dbReference type="PDB" id="7L0R">
    <property type="method" value="EM"/>
    <property type="resolution" value="4.20 A"/>
    <property type="chains" value="B=2-340"/>
</dbReference>
<dbReference type="PDB" id="7L0S">
    <property type="method" value="EM"/>
    <property type="resolution" value="4.50 A"/>
    <property type="chains" value="B=2-340"/>
</dbReference>
<dbReference type="PDB" id="7L1U">
    <property type="method" value="EM"/>
    <property type="resolution" value="3.20 A"/>
    <property type="chains" value="B=2-340"/>
</dbReference>
<dbReference type="PDB" id="7L1V">
    <property type="method" value="EM"/>
    <property type="resolution" value="3.00 A"/>
    <property type="chains" value="B=2-340"/>
</dbReference>
<dbReference type="PDB" id="7LCI">
    <property type="method" value="EM"/>
    <property type="resolution" value="2.90 A"/>
    <property type="chains" value="B=2-340"/>
</dbReference>
<dbReference type="PDB" id="7LD3">
    <property type="method" value="EM"/>
    <property type="resolution" value="3.20 A"/>
    <property type="chains" value="B=2-340"/>
</dbReference>
<dbReference type="PDB" id="7LD4">
    <property type="method" value="EM"/>
    <property type="resolution" value="3.30 A"/>
    <property type="chains" value="B=2-340"/>
</dbReference>
<dbReference type="PDB" id="7LLL">
    <property type="method" value="EM"/>
    <property type="resolution" value="3.70 A"/>
    <property type="chains" value="B=2-340"/>
</dbReference>
<dbReference type="PDB" id="7LLY">
    <property type="method" value="EM"/>
    <property type="resolution" value="3.30 A"/>
    <property type="chains" value="B=2-340"/>
</dbReference>
<dbReference type="PDB" id="7MTS">
    <property type="method" value="EM"/>
    <property type="resolution" value="3.20 A"/>
    <property type="chains" value="D=2-340"/>
</dbReference>
<dbReference type="PDB" id="7NA7">
    <property type="method" value="EM"/>
    <property type="resolution" value="2.70 A"/>
    <property type="chains" value="B=1-340"/>
</dbReference>
<dbReference type="PDB" id="7NA8">
    <property type="method" value="EM"/>
    <property type="resolution" value="2.70 A"/>
    <property type="chains" value="B=1-340"/>
</dbReference>
<dbReference type="PDB" id="7P00">
    <property type="method" value="EM"/>
    <property type="resolution" value="2.71 A"/>
    <property type="chains" value="B=2-340"/>
</dbReference>
<dbReference type="PDB" id="7P02">
    <property type="method" value="EM"/>
    <property type="resolution" value="2.87 A"/>
    <property type="chains" value="B=2-340"/>
</dbReference>
<dbReference type="PDB" id="7QVM">
    <property type="method" value="EM"/>
    <property type="resolution" value="3.25 A"/>
    <property type="chains" value="B=2-340"/>
</dbReference>
<dbReference type="PDB" id="7RA3">
    <property type="method" value="EM"/>
    <property type="resolution" value="3.24 A"/>
    <property type="chains" value="B=2-340"/>
</dbReference>
<dbReference type="PDB" id="7RAN">
    <property type="method" value="EM"/>
    <property type="resolution" value="3.45 A"/>
    <property type="chains" value="C=1-340"/>
</dbReference>
<dbReference type="PDB" id="7RBT">
    <property type="method" value="EM"/>
    <property type="resolution" value="3.08 A"/>
    <property type="chains" value="B=2-340"/>
</dbReference>
<dbReference type="PDB" id="7RG9">
    <property type="method" value="EM"/>
    <property type="resolution" value="3.20 A"/>
    <property type="chains" value="B=2-340"/>
</dbReference>
<dbReference type="PDB" id="7RGP">
    <property type="method" value="EM"/>
    <property type="resolution" value="2.90 A"/>
    <property type="chains" value="B=2-340"/>
</dbReference>
<dbReference type="PDB" id="7RKF">
    <property type="method" value="EM"/>
    <property type="resolution" value="4.00 A"/>
    <property type="chains" value="B=2-340"/>
</dbReference>
<dbReference type="PDB" id="7RKM">
    <property type="method" value="EM"/>
    <property type="resolution" value="3.50 A"/>
    <property type="chains" value="B=2-340"/>
</dbReference>
<dbReference type="PDB" id="7RKN">
    <property type="method" value="EM"/>
    <property type="resolution" value="3.60 A"/>
    <property type="chains" value="B=2-340"/>
</dbReference>
<dbReference type="PDB" id="7RKX">
    <property type="method" value="EM"/>
    <property type="resolution" value="3.10 A"/>
    <property type="chains" value="B=2-340"/>
</dbReference>
<dbReference type="PDB" id="7RKY">
    <property type="method" value="EM"/>
    <property type="resolution" value="3.80 A"/>
    <property type="chains" value="B=2-340"/>
</dbReference>
<dbReference type="PDB" id="7RMG">
    <property type="method" value="EM"/>
    <property type="resolution" value="3.00 A"/>
    <property type="chains" value="B=2-340"/>
</dbReference>
<dbReference type="PDB" id="7RMH">
    <property type="method" value="EM"/>
    <property type="resolution" value="3.10 A"/>
    <property type="chains" value="B=2-340"/>
</dbReference>
<dbReference type="PDB" id="7RMI">
    <property type="method" value="EM"/>
    <property type="resolution" value="3.20 A"/>
    <property type="chains" value="B=2-340"/>
</dbReference>
<dbReference type="PDB" id="7RTB">
    <property type="method" value="EM"/>
    <property type="resolution" value="2.14 A"/>
    <property type="chains" value="B=2-340"/>
</dbReference>
<dbReference type="PDB" id="7RYC">
    <property type="method" value="EM"/>
    <property type="resolution" value="2.90 A"/>
    <property type="chains" value="C=2-340"/>
</dbReference>
<dbReference type="PDB" id="7S1M">
    <property type="method" value="EM"/>
    <property type="resolution" value="2.41 A"/>
    <property type="chains" value="B=2-340"/>
</dbReference>
<dbReference type="PDB" id="7S3I">
    <property type="method" value="EM"/>
    <property type="resolution" value="2.51 A"/>
    <property type="chains" value="B=2-340"/>
</dbReference>
<dbReference type="PDB" id="7S8L">
    <property type="method" value="EM"/>
    <property type="resolution" value="2.45 A"/>
    <property type="chains" value="C=2-340"/>
</dbReference>
<dbReference type="PDB" id="7S8M">
    <property type="method" value="EM"/>
    <property type="resolution" value="2.54 A"/>
    <property type="chains" value="C=2-340"/>
</dbReference>
<dbReference type="PDB" id="7S8N">
    <property type="method" value="EM"/>
    <property type="resolution" value="2.90 A"/>
    <property type="chains" value="C=2-340"/>
</dbReference>
<dbReference type="PDB" id="7S8O">
    <property type="method" value="EM"/>
    <property type="resolution" value="2.58 A"/>
    <property type="chains" value="C=2-340"/>
</dbReference>
<dbReference type="PDB" id="7S8P">
    <property type="method" value="EM"/>
    <property type="resolution" value="2.60 A"/>
    <property type="chains" value="C=2-340"/>
</dbReference>
<dbReference type="PDB" id="7SBF">
    <property type="method" value="EM"/>
    <property type="resolution" value="2.90 A"/>
    <property type="chains" value="B=2-340"/>
</dbReference>
<dbReference type="PDB" id="7SCG">
    <property type="method" value="EM"/>
    <property type="resolution" value="3.00 A"/>
    <property type="chains" value="B=2-340"/>
</dbReference>
<dbReference type="PDB" id="7SF7">
    <property type="method" value="EM"/>
    <property type="resolution" value="2.90 A"/>
    <property type="chains" value="C=1-340"/>
</dbReference>
<dbReference type="PDB" id="7SF8">
    <property type="method" value="EM"/>
    <property type="resolution" value="2.70 A"/>
    <property type="chains" value="C=1-340"/>
</dbReference>
<dbReference type="PDB" id="7SR8">
    <property type="method" value="EM"/>
    <property type="resolution" value="3.30 A"/>
    <property type="chains" value="B=1-340"/>
</dbReference>
<dbReference type="PDB" id="7SRR">
    <property type="method" value="EM"/>
    <property type="resolution" value="2.90 A"/>
    <property type="chains" value="C=1-340"/>
</dbReference>
<dbReference type="PDB" id="7T10">
    <property type="method" value="EM"/>
    <property type="resolution" value="2.50 A"/>
    <property type="chains" value="B=2-340"/>
</dbReference>
<dbReference type="PDB" id="7T11">
    <property type="method" value="EM"/>
    <property type="resolution" value="2.70 A"/>
    <property type="chains" value="B=2-340"/>
</dbReference>
<dbReference type="PDB" id="7T2G">
    <property type="method" value="EM"/>
    <property type="resolution" value="2.50 A"/>
    <property type="chains" value="B=2-340"/>
</dbReference>
<dbReference type="PDB" id="7T2H">
    <property type="method" value="EM"/>
    <property type="resolution" value="3.20 A"/>
    <property type="chains" value="B=2-340"/>
</dbReference>
<dbReference type="PDB" id="7T6B">
    <property type="method" value="EM"/>
    <property type="resolution" value="3.19 A"/>
    <property type="chains" value="C=2-340"/>
</dbReference>
<dbReference type="PDB" id="7T8X">
    <property type="method" value="EM"/>
    <property type="resolution" value="3.21 A"/>
    <property type="chains" value="C=2-340"/>
</dbReference>
<dbReference type="PDB" id="7T90">
    <property type="method" value="EM"/>
    <property type="resolution" value="3.32 A"/>
    <property type="chains" value="C=2-340"/>
</dbReference>
<dbReference type="PDB" id="7T94">
    <property type="method" value="EM"/>
    <property type="resolution" value="3.16 A"/>
    <property type="chains" value="C=2-340"/>
</dbReference>
<dbReference type="PDB" id="7T96">
    <property type="method" value="EM"/>
    <property type="resolution" value="3.22 A"/>
    <property type="chains" value="C=2-340"/>
</dbReference>
<dbReference type="PDB" id="7T9I">
    <property type="method" value="EM"/>
    <property type="resolution" value="2.90 A"/>
    <property type="chains" value="Y=2-340"/>
</dbReference>
<dbReference type="PDB" id="7T9N">
    <property type="method" value="EM"/>
    <property type="resolution" value="2.90 A"/>
    <property type="chains" value="Y=2-340"/>
</dbReference>
<dbReference type="PDB" id="7TMW">
    <property type="method" value="EM"/>
    <property type="resolution" value="3.20 A"/>
    <property type="chains" value="B=2-340"/>
</dbReference>
<dbReference type="PDB" id="7TRK">
    <property type="method" value="EM"/>
    <property type="resolution" value="2.80 A"/>
    <property type="chains" value="B=2-340"/>
</dbReference>
<dbReference type="PDB" id="7TRP">
    <property type="method" value="EM"/>
    <property type="resolution" value="2.40 A"/>
    <property type="chains" value="B=2-340"/>
</dbReference>
<dbReference type="PDB" id="7TRQ">
    <property type="method" value="EM"/>
    <property type="resolution" value="2.50 A"/>
    <property type="chains" value="B=2-340"/>
</dbReference>
<dbReference type="PDB" id="7TRS">
    <property type="method" value="EM"/>
    <property type="resolution" value="2.80 A"/>
    <property type="chains" value="B=2-340"/>
</dbReference>
<dbReference type="PDB" id="7TUZ">
    <property type="method" value="EM"/>
    <property type="resolution" value="3.12 A"/>
    <property type="chains" value="B=2-340"/>
</dbReference>
<dbReference type="PDB" id="7TYF">
    <property type="method" value="EM"/>
    <property type="resolution" value="2.20 A"/>
    <property type="chains" value="B=2-340"/>
</dbReference>
<dbReference type="PDB" id="7TYH">
    <property type="method" value="EM"/>
    <property type="resolution" value="3.30 A"/>
    <property type="chains" value="B=2-340"/>
</dbReference>
<dbReference type="PDB" id="7TYI">
    <property type="method" value="EM"/>
    <property type="resolution" value="3.30 A"/>
    <property type="chains" value="B=2-340"/>
</dbReference>
<dbReference type="PDB" id="7TYL">
    <property type="method" value="EM"/>
    <property type="resolution" value="3.30 A"/>
    <property type="chains" value="B=2-340"/>
</dbReference>
<dbReference type="PDB" id="7TYN">
    <property type="method" value="EM"/>
    <property type="resolution" value="2.60 A"/>
    <property type="chains" value="B=2-340"/>
</dbReference>
<dbReference type="PDB" id="7TYO">
    <property type="method" value="EM"/>
    <property type="resolution" value="2.70 A"/>
    <property type="chains" value="B=2-340"/>
</dbReference>
<dbReference type="PDB" id="7TYW">
    <property type="method" value="EM"/>
    <property type="resolution" value="3.00 A"/>
    <property type="chains" value="B=2-340"/>
</dbReference>
<dbReference type="PDB" id="7TYX">
    <property type="method" value="EM"/>
    <property type="resolution" value="2.55 A"/>
    <property type="chains" value="B=2-340"/>
</dbReference>
<dbReference type="PDB" id="7TYY">
    <property type="method" value="EM"/>
    <property type="resolution" value="3.00 A"/>
    <property type="chains" value="B=2-340"/>
</dbReference>
<dbReference type="PDB" id="7TZF">
    <property type="method" value="EM"/>
    <property type="resolution" value="2.40 A"/>
    <property type="chains" value="B=2-340"/>
</dbReference>
<dbReference type="PDB" id="7U2K">
    <property type="method" value="EM"/>
    <property type="resolution" value="3.30 A"/>
    <property type="chains" value="B=2-340"/>
</dbReference>
<dbReference type="PDB" id="7U2L">
    <property type="method" value="EM"/>
    <property type="resolution" value="3.20 A"/>
    <property type="chains" value="B=2-340"/>
</dbReference>
<dbReference type="PDB" id="7UM5">
    <property type="method" value="EM"/>
    <property type="resolution" value="2.73 A"/>
    <property type="chains" value="C=2-340"/>
</dbReference>
<dbReference type="PDB" id="7UM6">
    <property type="method" value="EM"/>
    <property type="resolution" value="2.79 A"/>
    <property type="chains" value="C=2-340"/>
</dbReference>
<dbReference type="PDB" id="7UM7">
    <property type="method" value="EM"/>
    <property type="resolution" value="2.75 A"/>
    <property type="chains" value="C=2-340"/>
</dbReference>
<dbReference type="PDB" id="7UTZ">
    <property type="method" value="EM"/>
    <property type="resolution" value="2.40 A"/>
    <property type="chains" value="Y=2-340"/>
</dbReference>
<dbReference type="PDB" id="7V68">
    <property type="method" value="EM"/>
    <property type="resolution" value="3.40 A"/>
    <property type="chains" value="B=2-340"/>
</dbReference>
<dbReference type="PDB" id="7V69">
    <property type="method" value="EM"/>
    <property type="resolution" value="3.40 A"/>
    <property type="chains" value="B=2-340"/>
</dbReference>
<dbReference type="PDB" id="7V6A">
    <property type="method" value="EM"/>
    <property type="resolution" value="3.60 A"/>
    <property type="chains" value="B=2-340"/>
</dbReference>
<dbReference type="PDB" id="7VDH">
    <property type="method" value="EM"/>
    <property type="resolution" value="2.90 A"/>
    <property type="chains" value="B=2-340"/>
</dbReference>
<dbReference type="PDB" id="7VDL">
    <property type="method" value="EM"/>
    <property type="resolution" value="3.22 A"/>
    <property type="chains" value="B=2-340"/>
</dbReference>
<dbReference type="PDB" id="7VDM">
    <property type="method" value="EM"/>
    <property type="resolution" value="2.98 A"/>
    <property type="chains" value="B=2-340"/>
</dbReference>
<dbReference type="PDB" id="7VFX">
    <property type="method" value="EM"/>
    <property type="resolution" value="2.80 A"/>
    <property type="chains" value="B=2-340"/>
</dbReference>
<dbReference type="PDB" id="7VGX">
    <property type="method" value="EM"/>
    <property type="resolution" value="3.20 A"/>
    <property type="chains" value="B=2-340"/>
</dbReference>
<dbReference type="PDB" id="7VIE">
    <property type="method" value="EM"/>
    <property type="resolution" value="2.86 A"/>
    <property type="chains" value="A=2-340"/>
</dbReference>
<dbReference type="PDB" id="7VIF">
    <property type="method" value="EM"/>
    <property type="resolution" value="2.83 A"/>
    <property type="chains" value="A=2-340"/>
</dbReference>
<dbReference type="PDB" id="7VIG">
    <property type="method" value="EM"/>
    <property type="resolution" value="2.89 A"/>
    <property type="chains" value="A=2-340"/>
</dbReference>
<dbReference type="PDB" id="7VIH">
    <property type="method" value="EM"/>
    <property type="resolution" value="2.98 A"/>
    <property type="chains" value="A=2-340"/>
</dbReference>
<dbReference type="PDB" id="7VKT">
    <property type="method" value="EM"/>
    <property type="resolution" value="2.90 A"/>
    <property type="chains" value="C=2-340"/>
</dbReference>
<dbReference type="PDB" id="7VL8">
    <property type="method" value="EM"/>
    <property type="resolution" value="2.90 A"/>
    <property type="chains" value="B=2-340"/>
</dbReference>
<dbReference type="PDB" id="7VL9">
    <property type="method" value="EM"/>
    <property type="resolution" value="2.60 A"/>
    <property type="chains" value="B=2-340"/>
</dbReference>
<dbReference type="PDB" id="7VLA">
    <property type="method" value="EM"/>
    <property type="resolution" value="2.70 A"/>
    <property type="chains" value="B=2-340"/>
</dbReference>
<dbReference type="PDB" id="7VUG">
    <property type="method" value="EM"/>
    <property type="resolution" value="3.20 A"/>
    <property type="chains" value="B=2-340"/>
</dbReference>
<dbReference type="PDB" id="7VUH">
    <property type="method" value="EM"/>
    <property type="resolution" value="3.22 A"/>
    <property type="chains" value="B=2-340"/>
</dbReference>
<dbReference type="PDB" id="7VUI">
    <property type="method" value="EM"/>
    <property type="resolution" value="3.30 A"/>
    <property type="chains" value="B=2-340"/>
</dbReference>
<dbReference type="PDB" id="7VUJ">
    <property type="method" value="EM"/>
    <property type="resolution" value="3.80 A"/>
    <property type="chains" value="B=2-340"/>
</dbReference>
<dbReference type="PDB" id="7VUY">
    <property type="method" value="EM"/>
    <property type="resolution" value="2.84 A"/>
    <property type="chains" value="B=2-340"/>
</dbReference>
<dbReference type="PDB" id="7VUZ">
    <property type="method" value="EM"/>
    <property type="resolution" value="2.89 A"/>
    <property type="chains" value="B=2-340"/>
</dbReference>
<dbReference type="PDB" id="7VV3">
    <property type="method" value="EM"/>
    <property type="resolution" value="2.97 A"/>
    <property type="chains" value="B=2-340"/>
</dbReference>
<dbReference type="PDB" id="7VV5">
    <property type="method" value="EM"/>
    <property type="resolution" value="2.76 A"/>
    <property type="chains" value="B=2-340"/>
</dbReference>
<dbReference type="PDB" id="7W0L">
    <property type="method" value="EM"/>
    <property type="resolution" value="3.57 A"/>
    <property type="chains" value="B=1-340"/>
</dbReference>
<dbReference type="PDB" id="7W0M">
    <property type="method" value="EM"/>
    <property type="resolution" value="3.71 A"/>
    <property type="chains" value="B=1-340"/>
</dbReference>
<dbReference type="PDB" id="7W0N">
    <property type="method" value="EM"/>
    <property type="resolution" value="4.21 A"/>
    <property type="chains" value="B=1-340"/>
</dbReference>
<dbReference type="PDB" id="7W0O">
    <property type="method" value="EM"/>
    <property type="resolution" value="3.78 A"/>
    <property type="chains" value="B=1-340"/>
</dbReference>
<dbReference type="PDB" id="7W0P">
    <property type="method" value="EM"/>
    <property type="resolution" value="3.16 A"/>
    <property type="chains" value="B=1-340"/>
</dbReference>
<dbReference type="PDB" id="7W2Z">
    <property type="method" value="EM"/>
    <property type="resolution" value="2.80 A"/>
    <property type="chains" value="B=2-340"/>
</dbReference>
<dbReference type="PDB" id="7W3Z">
    <property type="method" value="EM"/>
    <property type="resolution" value="3.00 A"/>
    <property type="chains" value="C=2-340"/>
</dbReference>
<dbReference type="PDB" id="7W40">
    <property type="method" value="EM"/>
    <property type="resolution" value="3.00 A"/>
    <property type="chains" value="C=2-340"/>
</dbReference>
<dbReference type="PDB" id="7W53">
    <property type="method" value="EM"/>
    <property type="resolution" value="3.20 A"/>
    <property type="chains" value="B=2-340"/>
</dbReference>
<dbReference type="PDB" id="7W55">
    <property type="method" value="EM"/>
    <property type="resolution" value="2.80 A"/>
    <property type="chains" value="B=2-340"/>
</dbReference>
<dbReference type="PDB" id="7W56">
    <property type="method" value="EM"/>
    <property type="resolution" value="2.90 A"/>
    <property type="chains" value="B=2-340"/>
</dbReference>
<dbReference type="PDB" id="7W57">
    <property type="method" value="EM"/>
    <property type="resolution" value="3.20 A"/>
    <property type="chains" value="B=2-340"/>
</dbReference>
<dbReference type="PDB" id="7W6P">
    <property type="method" value="EM"/>
    <property type="resolution" value="3.47 A"/>
    <property type="chains" value="B=2-340"/>
</dbReference>
<dbReference type="PDB" id="7W7E">
    <property type="method" value="EM"/>
    <property type="resolution" value="3.40 A"/>
    <property type="chains" value="B=2-340"/>
</dbReference>
<dbReference type="PDB" id="7WCM">
    <property type="method" value="EM"/>
    <property type="resolution" value="2.33 A"/>
    <property type="chains" value="B=2-340"/>
</dbReference>
<dbReference type="PDB" id="7WCN">
    <property type="method" value="EM"/>
    <property type="resolution" value="2.87 A"/>
    <property type="chains" value="B=2-340"/>
</dbReference>
<dbReference type="PDB" id="7WF7">
    <property type="method" value="EM"/>
    <property type="resolution" value="3.40 A"/>
    <property type="chains" value="C=2-340"/>
</dbReference>
<dbReference type="PDB" id="7WJ5">
    <property type="method" value="EM"/>
    <property type="resolution" value="3.72 A"/>
    <property type="chains" value="B=2-340"/>
</dbReference>
<dbReference type="PDB" id="7WKD">
    <property type="method" value="EM"/>
    <property type="resolution" value="3.01 A"/>
    <property type="chains" value="B=2-340"/>
</dbReference>
<dbReference type="PDB" id="7WU2">
    <property type="method" value="EM"/>
    <property type="resolution" value="2.80 A"/>
    <property type="chains" value="B=2-340"/>
</dbReference>
<dbReference type="PDB" id="7WU3">
    <property type="method" value="EM"/>
    <property type="resolution" value="3.10 A"/>
    <property type="chains" value="B=2-340"/>
</dbReference>
<dbReference type="PDB" id="7WU4">
    <property type="method" value="EM"/>
    <property type="resolution" value="3.40 A"/>
    <property type="chains" value="B=2-340"/>
</dbReference>
<dbReference type="PDB" id="7WU5">
    <property type="method" value="EM"/>
    <property type="resolution" value="3.00 A"/>
    <property type="chains" value="B=2-340"/>
</dbReference>
<dbReference type="PDB" id="7WU9">
    <property type="method" value="EM"/>
    <property type="resolution" value="3.38 A"/>
    <property type="chains" value="B=2-340"/>
</dbReference>
<dbReference type="PDB" id="7WUI">
    <property type="method" value="EM"/>
    <property type="resolution" value="3.10 A"/>
    <property type="chains" value="B=2-340"/>
</dbReference>
<dbReference type="PDB" id="7WUJ">
    <property type="method" value="EM"/>
    <property type="resolution" value="3.30 A"/>
    <property type="chains" value="B=2-340"/>
</dbReference>
<dbReference type="PDB" id="7WUQ">
    <property type="method" value="EM"/>
    <property type="resolution" value="2.90 A"/>
    <property type="chains" value="B=2-340"/>
</dbReference>
<dbReference type="PDB" id="7WV9">
    <property type="method" value="EM"/>
    <property type="resolution" value="3.36 A"/>
    <property type="chains" value="B=2-340"/>
</dbReference>
<dbReference type="PDB" id="7WVU">
    <property type="method" value="EM"/>
    <property type="resolution" value="3.30 A"/>
    <property type="chains" value="B=2-340"/>
</dbReference>
<dbReference type="PDB" id="7WVV">
    <property type="method" value="EM"/>
    <property type="resolution" value="2.90 A"/>
    <property type="chains" value="B=2-340"/>
</dbReference>
<dbReference type="PDB" id="7WVW">
    <property type="method" value="EM"/>
    <property type="resolution" value="3.10 A"/>
    <property type="chains" value="B=2-340"/>
</dbReference>
<dbReference type="PDB" id="7WVX">
    <property type="method" value="EM"/>
    <property type="resolution" value="2.80 A"/>
    <property type="chains" value="B=2-340"/>
</dbReference>
<dbReference type="PDB" id="7WVY">
    <property type="method" value="EM"/>
    <property type="resolution" value="3.00 A"/>
    <property type="chains" value="B=2-340"/>
</dbReference>
<dbReference type="PDB" id="7WXU">
    <property type="method" value="EM"/>
    <property type="resolution" value="2.85 A"/>
    <property type="chains" value="B=2-340"/>
</dbReference>
<dbReference type="PDB" id="7WXW">
    <property type="method" value="EM"/>
    <property type="resolution" value="2.84 A"/>
    <property type="chains" value="B=2-340"/>
</dbReference>
<dbReference type="PDB" id="7WY0">
    <property type="method" value="EM"/>
    <property type="resolution" value="2.83 A"/>
    <property type="chains" value="B=2-340"/>
</dbReference>
<dbReference type="PDB" id="7WY5">
    <property type="method" value="EM"/>
    <property type="resolution" value="2.83 A"/>
    <property type="chains" value="B=2-340"/>
</dbReference>
<dbReference type="PDB" id="7WY8">
    <property type="method" value="EM"/>
    <property type="resolution" value="2.83 A"/>
    <property type="chains" value="B=2-340"/>
</dbReference>
<dbReference type="PDB" id="7WYB">
    <property type="method" value="EM"/>
    <property type="resolution" value="2.97 A"/>
    <property type="chains" value="C=2-340"/>
</dbReference>
<dbReference type="PDB" id="7WZ4">
    <property type="method" value="EM"/>
    <property type="resolution" value="3.00 A"/>
    <property type="chains" value="B=2-340"/>
</dbReference>
<dbReference type="PDB" id="7WZ7">
    <property type="method" value="EM"/>
    <property type="resolution" value="2.83 A"/>
    <property type="chains" value="B=2-340"/>
</dbReference>
<dbReference type="PDB" id="7X10">
    <property type="method" value="EM"/>
    <property type="resolution" value="2.93 A"/>
    <property type="chains" value="B=2-340"/>
</dbReference>
<dbReference type="PDB" id="7X2C">
    <property type="method" value="EM"/>
    <property type="resolution" value="3.20 A"/>
    <property type="chains" value="B=2-340"/>
</dbReference>
<dbReference type="PDB" id="7X2D">
    <property type="method" value="EM"/>
    <property type="resolution" value="3.30 A"/>
    <property type="chains" value="B=2-340"/>
</dbReference>
<dbReference type="PDB" id="7X2F">
    <property type="method" value="EM"/>
    <property type="resolution" value="3.00 A"/>
    <property type="chains" value="B=2-340"/>
</dbReference>
<dbReference type="PDB" id="7X2V">
    <property type="method" value="EM"/>
    <property type="resolution" value="3.09 A"/>
    <property type="chains" value="C=2-340"/>
</dbReference>
<dbReference type="PDB" id="7X5H">
    <property type="method" value="EM"/>
    <property type="resolution" value="3.10 A"/>
    <property type="chains" value="B=2-340"/>
</dbReference>
<dbReference type="PDB" id="7X9A">
    <property type="method" value="EM"/>
    <property type="resolution" value="3.20 A"/>
    <property type="chains" value="B=2-340"/>
</dbReference>
<dbReference type="PDB" id="7X9B">
    <property type="method" value="EM"/>
    <property type="resolution" value="3.40 A"/>
    <property type="chains" value="B=2-340"/>
</dbReference>
<dbReference type="PDB" id="7X9C">
    <property type="method" value="EM"/>
    <property type="resolution" value="3.00 A"/>
    <property type="chains" value="B=2-340"/>
</dbReference>
<dbReference type="PDB" id="7X9Y">
    <property type="method" value="EM"/>
    <property type="resolution" value="3.10 A"/>
    <property type="chains" value="B=2-340"/>
</dbReference>
<dbReference type="PDB" id="7XA3">
    <property type="method" value="EM"/>
    <property type="resolution" value="2.90 A"/>
    <property type="chains" value="B=2-340"/>
</dbReference>
<dbReference type="PDB" id="7XBD">
    <property type="method" value="EM"/>
    <property type="resolution" value="3.11 A"/>
    <property type="chains" value="C=1-340"/>
</dbReference>
<dbReference type="PDB" id="7XBW">
    <property type="method" value="EM"/>
    <property type="resolution" value="2.80 A"/>
    <property type="chains" value="D=1-340"/>
</dbReference>
<dbReference type="PDB" id="7XBX">
    <property type="method" value="EM"/>
    <property type="resolution" value="3.40 A"/>
    <property type="chains" value="D=1-340"/>
</dbReference>
<dbReference type="PDB" id="7XJJ">
    <property type="method" value="EM"/>
    <property type="resolution" value="3.30 A"/>
    <property type="chains" value="B=1-340"/>
</dbReference>
<dbReference type="PDB" id="7XJK">
    <property type="method" value="EM"/>
    <property type="resolution" value="3.30 A"/>
    <property type="chains" value="C=1-340"/>
</dbReference>
<dbReference type="PDB" id="7XJL">
    <property type="method" value="EM"/>
    <property type="resolution" value="3.50 A"/>
    <property type="chains" value="C=1-340"/>
</dbReference>
<dbReference type="PDB" id="7XK2">
    <property type="method" value="EM"/>
    <property type="resolution" value="3.10 A"/>
    <property type="chains" value="B=1-340"/>
</dbReference>
<dbReference type="PDB" id="7XK8">
    <property type="method" value="EM"/>
    <property type="resolution" value="3.30 A"/>
    <property type="chains" value="B=2-340"/>
</dbReference>
<dbReference type="PDB" id="7XKD">
    <property type="method" value="EM"/>
    <property type="resolution" value="2.40 A"/>
    <property type="chains" value="B=2-340"/>
</dbReference>
<dbReference type="PDB" id="7XKE">
    <property type="method" value="EM"/>
    <property type="resolution" value="2.90 A"/>
    <property type="chains" value="B=2-340"/>
</dbReference>
<dbReference type="PDB" id="7XKF">
    <property type="method" value="EM"/>
    <property type="resolution" value="2.40 A"/>
    <property type="chains" value="B=2-340"/>
</dbReference>
<dbReference type="PDB" id="7XMR">
    <property type="method" value="EM"/>
    <property type="resolution" value="3.10 A"/>
    <property type="chains" value="B=2-340"/>
</dbReference>
<dbReference type="PDB" id="7XMS">
    <property type="method" value="EM"/>
    <property type="resolution" value="2.90 A"/>
    <property type="chains" value="B=2-340"/>
</dbReference>
<dbReference type="PDB" id="7XMT">
    <property type="method" value="EM"/>
    <property type="resolution" value="2.80 A"/>
    <property type="chains" value="B=2-340"/>
</dbReference>
<dbReference type="PDB" id="7XOU">
    <property type="method" value="EM"/>
    <property type="resolution" value="3.20 A"/>
    <property type="chains" value="B=2-340"/>
</dbReference>
<dbReference type="PDB" id="7XOV">
    <property type="method" value="EM"/>
    <property type="resolution" value="3.00 A"/>
    <property type="chains" value="B=3-340"/>
</dbReference>
<dbReference type="PDB" id="7XOW">
    <property type="method" value="EM"/>
    <property type="resolution" value="3.10 A"/>
    <property type="chains" value="B=2-340"/>
</dbReference>
<dbReference type="PDB" id="7XP4">
    <property type="method" value="EM"/>
    <property type="resolution" value="3.01 A"/>
    <property type="chains" value="B=1-340"/>
</dbReference>
<dbReference type="PDB" id="7XP5">
    <property type="method" value="EM"/>
    <property type="resolution" value="3.08 A"/>
    <property type="chains" value="B=1-340"/>
</dbReference>
<dbReference type="PDB" id="7XP6">
    <property type="method" value="EM"/>
    <property type="resolution" value="3.01 A"/>
    <property type="chains" value="B=1-340"/>
</dbReference>
<dbReference type="PDB" id="7XT8">
    <property type="method" value="EM"/>
    <property type="resolution" value="3.10 A"/>
    <property type="chains" value="B=2-340"/>
</dbReference>
<dbReference type="PDB" id="7XT9">
    <property type="method" value="EM"/>
    <property type="resolution" value="3.20 A"/>
    <property type="chains" value="B=2-340"/>
</dbReference>
<dbReference type="PDB" id="7XTA">
    <property type="method" value="EM"/>
    <property type="resolution" value="3.20 A"/>
    <property type="chains" value="B=2-340"/>
</dbReference>
<dbReference type="PDB" id="7XTB">
    <property type="method" value="EM"/>
    <property type="resolution" value="3.30 A"/>
    <property type="chains" value="B=2-340"/>
</dbReference>
<dbReference type="PDB" id="7XTC">
    <property type="method" value="EM"/>
    <property type="resolution" value="3.20 A"/>
    <property type="chains" value="B=2-340"/>
</dbReference>
<dbReference type="PDB" id="7XTQ">
    <property type="method" value="EM"/>
    <property type="resolution" value="3.20 A"/>
    <property type="chains" value="B=2-340"/>
</dbReference>
<dbReference type="PDB" id="7XV3">
    <property type="method" value="EM"/>
    <property type="resolution" value="2.76 A"/>
    <property type="chains" value="B=2-340"/>
</dbReference>
<dbReference type="PDB" id="7XW5">
    <property type="method" value="EM"/>
    <property type="resolution" value="2.96 A"/>
    <property type="chains" value="B=2-340"/>
</dbReference>
<dbReference type="PDB" id="7XW6">
    <property type="method" value="EM"/>
    <property type="resolution" value="2.78 A"/>
    <property type="chains" value="B=2-340"/>
</dbReference>
<dbReference type="PDB" id="7XXH">
    <property type="method" value="EM"/>
    <property type="resolution" value="2.90 A"/>
    <property type="chains" value="B=2-340"/>
</dbReference>
<dbReference type="PDB" id="7XXI">
    <property type="method" value="EM"/>
    <property type="resolution" value="3.00 A"/>
    <property type="chains" value="C=2-340"/>
</dbReference>
<dbReference type="PDB" id="7XY6">
    <property type="method" value="EM"/>
    <property type="resolution" value="2.99 A"/>
    <property type="chains" value="B=1-340"/>
</dbReference>
<dbReference type="PDB" id="7XY7">
    <property type="method" value="EM"/>
    <property type="resolution" value="3.26 A"/>
    <property type="chains" value="B=1-340"/>
</dbReference>
<dbReference type="PDB" id="7XZ5">
    <property type="method" value="EM"/>
    <property type="resolution" value="3.10 A"/>
    <property type="chains" value="B=2-340"/>
</dbReference>
<dbReference type="PDB" id="7XZ6">
    <property type="method" value="EM"/>
    <property type="resolution" value="2.80 A"/>
    <property type="chains" value="B=2-340"/>
</dbReference>
<dbReference type="PDB" id="7Y1F">
    <property type="method" value="EM"/>
    <property type="resolution" value="3.30 A"/>
    <property type="chains" value="B=2-340"/>
</dbReference>
<dbReference type="PDB" id="7Y24">
    <property type="method" value="EM"/>
    <property type="resolution" value="3.25 A"/>
    <property type="chains" value="B=3-340"/>
</dbReference>
<dbReference type="PDB" id="7Y26">
    <property type="method" value="EM"/>
    <property type="resolution" value="3.30 A"/>
    <property type="chains" value="A=3-340"/>
</dbReference>
<dbReference type="PDB" id="7Y27">
    <property type="method" value="EM"/>
    <property type="resolution" value="3.48 A"/>
    <property type="chains" value="A=3-340"/>
</dbReference>
<dbReference type="PDB" id="7Y3G">
    <property type="method" value="EM"/>
    <property type="resolution" value="2.77 A"/>
    <property type="chains" value="B=1-340"/>
</dbReference>
<dbReference type="PDB" id="7Y64">
    <property type="method" value="EM"/>
    <property type="resolution" value="2.90 A"/>
    <property type="chains" value="B=2-340"/>
</dbReference>
<dbReference type="PDB" id="7Y65">
    <property type="method" value="EM"/>
    <property type="resolution" value="3.20 A"/>
    <property type="chains" value="B=2-340"/>
</dbReference>
<dbReference type="PDB" id="7Y66">
    <property type="method" value="EM"/>
    <property type="resolution" value="2.90 A"/>
    <property type="chains" value="B=2-340"/>
</dbReference>
<dbReference type="PDB" id="7Y67">
    <property type="method" value="EM"/>
    <property type="resolution" value="2.80 A"/>
    <property type="chains" value="B=2-340"/>
</dbReference>
<dbReference type="PDB" id="7Y89">
    <property type="method" value="EM"/>
    <property type="resolution" value="3.02 A"/>
    <property type="chains" value="B=4-340"/>
</dbReference>
<dbReference type="PDB" id="7YAC">
    <property type="method" value="EM"/>
    <property type="resolution" value="3.24 A"/>
    <property type="chains" value="B=2-340"/>
</dbReference>
<dbReference type="PDB" id="7YAE">
    <property type="method" value="EM"/>
    <property type="resolution" value="3.37 A"/>
    <property type="chains" value="B=2-340"/>
</dbReference>
<dbReference type="PDB" id="7YDH">
    <property type="method" value="EM"/>
    <property type="resolution" value="3.10 A"/>
    <property type="chains" value="B=2-340"/>
</dbReference>
<dbReference type="PDB" id="7YDJ">
    <property type="method" value="EM"/>
    <property type="resolution" value="3.03 A"/>
    <property type="chains" value="B=2-340"/>
</dbReference>
<dbReference type="PDB" id="7YDM">
    <property type="method" value="EM"/>
    <property type="resolution" value="2.89 A"/>
    <property type="chains" value="B=2-340"/>
</dbReference>
<dbReference type="PDB" id="7YDP">
    <property type="method" value="EM"/>
    <property type="resolution" value="3.10 A"/>
    <property type="chains" value="B=2-340"/>
</dbReference>
<dbReference type="PDB" id="7YFC">
    <property type="method" value="EM"/>
    <property type="resolution" value="3.00 A"/>
    <property type="chains" value="B=2-340"/>
</dbReference>
<dbReference type="PDB" id="7YFD">
    <property type="method" value="EM"/>
    <property type="resolution" value="3.10 A"/>
    <property type="chains" value="B=2-340"/>
</dbReference>
<dbReference type="PDB" id="7YK6">
    <property type="method" value="EM"/>
    <property type="resolution" value="3.03 A"/>
    <property type="chains" value="T=2-340"/>
</dbReference>
<dbReference type="PDB" id="7YK7">
    <property type="method" value="EM"/>
    <property type="resolution" value="2.75 A"/>
    <property type="chains" value="T=2-340"/>
</dbReference>
<dbReference type="PDB" id="7YKD">
    <property type="method" value="EM"/>
    <property type="resolution" value="2.81 A"/>
    <property type="chains" value="B=1-340"/>
</dbReference>
<dbReference type="PDB" id="7YON">
    <property type="method" value="EM"/>
    <property type="resolution" value="2.95 A"/>
    <property type="chains" value="B=2-340"/>
</dbReference>
<dbReference type="PDB" id="7YOO">
    <property type="method" value="EM"/>
    <property type="resolution" value="3.11 A"/>
    <property type="chains" value="B=2-340"/>
</dbReference>
<dbReference type="PDB" id="7YP7">
    <property type="method" value="EM"/>
    <property type="resolution" value="3.10 A"/>
    <property type="chains" value="B=2-340"/>
</dbReference>
<dbReference type="PDB" id="7YS6">
    <property type="method" value="EM"/>
    <property type="resolution" value="3.00 A"/>
    <property type="chains" value="C=2-340"/>
</dbReference>
<dbReference type="PDB" id="8DDW">
    <property type="method" value="EM"/>
    <property type="resolution" value="4.70 A"/>
    <property type="chains" value="I=2-340"/>
</dbReference>
<dbReference type="PDB" id="8DDX">
    <property type="method" value="EM"/>
    <property type="resolution" value="3.80 A"/>
    <property type="chains" value="I=1-340"/>
</dbReference>
<dbReference type="PDB" id="8DPF">
    <property type="method" value="EM"/>
    <property type="resolution" value="2.84 A"/>
    <property type="chains" value="C=2-340"/>
</dbReference>
<dbReference type="PDB" id="8DPG">
    <property type="method" value="EM"/>
    <property type="resolution" value="3.60 A"/>
    <property type="chains" value="C=2-340"/>
</dbReference>
<dbReference type="PDB" id="8DPH">
    <property type="method" value="EM"/>
    <property type="resolution" value="3.20 A"/>
    <property type="chains" value="C=2-340"/>
</dbReference>
<dbReference type="PDB" id="8DPI">
    <property type="method" value="EM"/>
    <property type="resolution" value="3.40 A"/>
    <property type="chains" value="C=2-340"/>
</dbReference>
<dbReference type="PDB" id="8DWC">
    <property type="method" value="EM"/>
    <property type="resolution" value="2.87 A"/>
    <property type="chains" value="C=2-340"/>
</dbReference>
<dbReference type="PDB" id="8DWG">
    <property type="method" value="EM"/>
    <property type="resolution" value="2.71 A"/>
    <property type="chains" value="C=2-340"/>
</dbReference>
<dbReference type="PDB" id="8DWH">
    <property type="method" value="EM"/>
    <property type="resolution" value="3.25 A"/>
    <property type="chains" value="C=2-340"/>
</dbReference>
<dbReference type="PDB" id="8DZP">
    <property type="method" value="EM"/>
    <property type="resolution" value="2.71 A"/>
    <property type="chains" value="C=2-340"/>
</dbReference>
<dbReference type="PDB" id="8DZQ">
    <property type="method" value="EM"/>
    <property type="resolution" value="2.82 A"/>
    <property type="chains" value="C=2-340"/>
</dbReference>
<dbReference type="PDB" id="8DZR">
    <property type="method" value="EM"/>
    <property type="resolution" value="2.61 A"/>
    <property type="chains" value="C=2-340"/>
</dbReference>
<dbReference type="PDB" id="8DZS">
    <property type="method" value="EM"/>
    <property type="resolution" value="2.65 A"/>
    <property type="chains" value="C=2-340"/>
</dbReference>
<dbReference type="PDB" id="8E3X">
    <property type="method" value="EM"/>
    <property type="resolution" value="2.30 A"/>
    <property type="chains" value="B=2-340"/>
</dbReference>
<dbReference type="PDB" id="8E3Y">
    <property type="method" value="EM"/>
    <property type="resolution" value="2.30 A"/>
    <property type="chains" value="B=2-340"/>
</dbReference>
<dbReference type="PDB" id="8E3Z">
    <property type="method" value="EM"/>
    <property type="resolution" value="2.70 A"/>
    <property type="chains" value="B=2-340"/>
</dbReference>
<dbReference type="PDB" id="8E9W">
    <property type="method" value="EM"/>
    <property type="resolution" value="2.69 A"/>
    <property type="chains" value="C=2-340"/>
</dbReference>
<dbReference type="PDB" id="8E9X">
    <property type="method" value="EM"/>
    <property type="resolution" value="2.70 A"/>
    <property type="chains" value="C=2-340"/>
</dbReference>
<dbReference type="PDB" id="8E9Y">
    <property type="method" value="EM"/>
    <property type="resolution" value="2.79 A"/>
    <property type="chains" value="C=2-340"/>
</dbReference>
<dbReference type="PDB" id="8E9Z">
    <property type="method" value="EM"/>
    <property type="resolution" value="2.69 A"/>
    <property type="chains" value="C=2-340"/>
</dbReference>
<dbReference type="PDB" id="8EIT">
    <property type="method" value="EM"/>
    <property type="resolution" value="2.80 A"/>
    <property type="chains" value="B=1-340"/>
</dbReference>
<dbReference type="PDB" id="8EJC">
    <property type="method" value="EM"/>
    <property type="resolution" value="3.00 A"/>
    <property type="chains" value="B=1-340"/>
</dbReference>
<dbReference type="PDB" id="8EJK">
    <property type="method" value="EM"/>
    <property type="resolution" value="3.40 A"/>
    <property type="chains" value="B=1-340"/>
</dbReference>
<dbReference type="PDB" id="8EMW">
    <property type="method" value="EM"/>
    <property type="resolution" value="3.50 A"/>
    <property type="chains" value="B/C=1-340"/>
</dbReference>
<dbReference type="PDB" id="8EMX">
    <property type="method" value="EM"/>
    <property type="resolution" value="3.30 A"/>
    <property type="chains" value="B/C=1-340"/>
</dbReference>
<dbReference type="PDB" id="8F0J">
    <property type="method" value="EM"/>
    <property type="resolution" value="2.00 A"/>
    <property type="chains" value="B=2-340"/>
</dbReference>
<dbReference type="PDB" id="8F0K">
    <property type="method" value="EM"/>
    <property type="resolution" value="1.90 A"/>
    <property type="chains" value="B=2-340"/>
</dbReference>
<dbReference type="PDB" id="8F2A">
    <property type="method" value="EM"/>
    <property type="resolution" value="2.20 A"/>
    <property type="chains" value="B=2-340"/>
</dbReference>
<dbReference type="PDB" id="8F2B">
    <property type="method" value="EM"/>
    <property type="resolution" value="2.00 A"/>
    <property type="chains" value="B=2-340"/>
</dbReference>
<dbReference type="PDB" id="8F76">
    <property type="method" value="EM"/>
    <property type="resolution" value="3.10 A"/>
    <property type="chains" value="Y=2-340"/>
</dbReference>
<dbReference type="PDB" id="8FEG">
    <property type="method" value="EM"/>
    <property type="resolution" value="2.54 A"/>
    <property type="chains" value="D=2-340"/>
</dbReference>
<dbReference type="PDB" id="8FLQ">
    <property type="method" value="EM"/>
    <property type="resolution" value="2.55 A"/>
    <property type="chains" value="B=2-340"/>
</dbReference>
<dbReference type="PDB" id="8FLR">
    <property type="method" value="EM"/>
    <property type="resolution" value="2.94 A"/>
    <property type="chains" value="B=2-340"/>
</dbReference>
<dbReference type="PDB" id="8FLS">
    <property type="method" value="EM"/>
    <property type="resolution" value="3.09 A"/>
    <property type="chains" value="B=2-340"/>
</dbReference>
<dbReference type="PDB" id="8FLT">
    <property type="method" value="EM"/>
    <property type="resolution" value="3.03 A"/>
    <property type="chains" value="B=2-340"/>
</dbReference>
<dbReference type="PDB" id="8FLU">
    <property type="method" value="EM"/>
    <property type="resolution" value="2.76 A"/>
    <property type="chains" value="B=2-340"/>
</dbReference>
<dbReference type="PDB" id="8FMZ">
    <property type="method" value="EM"/>
    <property type="resolution" value="2.59 A"/>
    <property type="chains" value="C=2-340"/>
</dbReference>
<dbReference type="PDB" id="8FN0">
    <property type="method" value="EM"/>
    <property type="resolution" value="2.89 A"/>
    <property type="chains" value="C=2-340"/>
</dbReference>
<dbReference type="PDB" id="8FN1">
    <property type="method" value="EM"/>
    <property type="resolution" value="2.88 A"/>
    <property type="chains" value="C=2-340"/>
</dbReference>
<dbReference type="PDB" id="8FU6">
    <property type="method" value="EM"/>
    <property type="resolution" value="2.90 A"/>
    <property type="chains" value="B=2-340"/>
</dbReference>
<dbReference type="PDB" id="8FX5">
    <property type="method" value="EM"/>
    <property type="resolution" value="2.45 A"/>
    <property type="chains" value="B=2-340"/>
</dbReference>
<dbReference type="PDB" id="8FY8">
    <property type="method" value="EM"/>
    <property type="resolution" value="2.79 A"/>
    <property type="chains" value="B=2-340"/>
</dbReference>
<dbReference type="PDB" id="8FYE">
    <property type="method" value="EM"/>
    <property type="resolution" value="2.85 A"/>
    <property type="chains" value="B=2-340"/>
</dbReference>
<dbReference type="PDB" id="8FYL">
    <property type="method" value="EM"/>
    <property type="resolution" value="2.94 A"/>
    <property type="chains" value="B=2-340"/>
</dbReference>
<dbReference type="PDB" id="8FYT">
    <property type="method" value="EM"/>
    <property type="resolution" value="2.64 A"/>
    <property type="chains" value="B=2-340"/>
</dbReference>
<dbReference type="PDB" id="8FYX">
    <property type="method" value="EM"/>
    <property type="resolution" value="2.62 A"/>
    <property type="chains" value="B=2-340"/>
</dbReference>
<dbReference type="PDB" id="8G05">
    <property type="method" value="EM"/>
    <property type="resolution" value="3.00 A"/>
    <property type="chains" value="B=2-340"/>
</dbReference>
<dbReference type="PDB" id="8G2Y">
    <property type="method" value="EM"/>
    <property type="resolution" value="3.44 A"/>
    <property type="chains" value="B=2-340"/>
</dbReference>
<dbReference type="PDB" id="8G59">
    <property type="method" value="EM"/>
    <property type="resolution" value="2.64 A"/>
    <property type="chains" value="B=2-340"/>
</dbReference>
<dbReference type="PDB" id="8G94">
    <property type="method" value="EM"/>
    <property type="resolution" value="3.15 A"/>
    <property type="chains" value="C=2-340"/>
</dbReference>
<dbReference type="PDB" id="8GAG">
    <property type="method" value="EM"/>
    <property type="resolution" value="3.30 A"/>
    <property type="chains" value="B=3-340"/>
</dbReference>
<dbReference type="PDB" id="8GCM">
    <property type="method" value="EM"/>
    <property type="resolution" value="3.50 A"/>
    <property type="chains" value="B=2-340"/>
</dbReference>
<dbReference type="PDB" id="8GCP">
    <property type="method" value="EM"/>
    <property type="resolution" value="3.10 A"/>
    <property type="chains" value="B=2-340"/>
</dbReference>
<dbReference type="PDB" id="8GD9">
    <property type="method" value="EM"/>
    <property type="resolution" value="3.20 A"/>
    <property type="chains" value="B=2-340"/>
</dbReference>
<dbReference type="PDB" id="8GDA">
    <property type="method" value="EM"/>
    <property type="resolution" value="3.30 A"/>
    <property type="chains" value="B=2-340"/>
</dbReference>
<dbReference type="PDB" id="8GDB">
    <property type="method" value="EM"/>
    <property type="resolution" value="3.10 A"/>
    <property type="chains" value="B=2-340"/>
</dbReference>
<dbReference type="PDB" id="8GDC">
    <property type="method" value="EM"/>
    <property type="resolution" value="3.50 A"/>
    <property type="chains" value="B=2-340"/>
</dbReference>
<dbReference type="PDB" id="8GDZ">
    <property type="method" value="EM"/>
    <property type="resolution" value="3.50 A"/>
    <property type="chains" value="B=2-340"/>
</dbReference>
<dbReference type="PDB" id="8GE1">
    <property type="method" value="EM"/>
    <property type="resolution" value="3.40 A"/>
    <property type="chains" value="B=2-340"/>
</dbReference>
<dbReference type="PDB" id="8GE2">
    <property type="method" value="EM"/>
    <property type="resolution" value="3.30 A"/>
    <property type="chains" value="B=2-340"/>
</dbReference>
<dbReference type="PDB" id="8GE3">
    <property type="method" value="EM"/>
    <property type="resolution" value="3.30 A"/>
    <property type="chains" value="B=2-340"/>
</dbReference>
<dbReference type="PDB" id="8GE4">
    <property type="method" value="EM"/>
    <property type="resolution" value="3.30 A"/>
    <property type="chains" value="B=2-340"/>
</dbReference>
<dbReference type="PDB" id="8GE5">
    <property type="method" value="EM"/>
    <property type="resolution" value="3.20 A"/>
    <property type="chains" value="B=2-340"/>
</dbReference>
<dbReference type="PDB" id="8GE6">
    <property type="method" value="EM"/>
    <property type="resolution" value="3.40 A"/>
    <property type="chains" value="B=2-340"/>
</dbReference>
<dbReference type="PDB" id="8GE7">
    <property type="method" value="EM"/>
    <property type="resolution" value="3.40 A"/>
    <property type="chains" value="B=2-340"/>
</dbReference>
<dbReference type="PDB" id="8GE8">
    <property type="method" value="EM"/>
    <property type="resolution" value="3.40 A"/>
    <property type="chains" value="B=2-340"/>
</dbReference>
<dbReference type="PDB" id="8GE9">
    <property type="method" value="EM"/>
    <property type="resolution" value="3.50 A"/>
    <property type="chains" value="B=2-340"/>
</dbReference>
<dbReference type="PDB" id="8GEA">
    <property type="method" value="EM"/>
    <property type="resolution" value="3.50 A"/>
    <property type="chains" value="B=2-340"/>
</dbReference>
<dbReference type="PDB" id="8GEB">
    <property type="method" value="EM"/>
    <property type="resolution" value="3.60 A"/>
    <property type="chains" value="B=2-340"/>
</dbReference>
<dbReference type="PDB" id="8GEC">
    <property type="method" value="EM"/>
    <property type="resolution" value="3.50 A"/>
    <property type="chains" value="B=2-340"/>
</dbReference>
<dbReference type="PDB" id="8GED">
    <property type="method" value="EM"/>
    <property type="resolution" value="3.50 A"/>
    <property type="chains" value="B=2-340"/>
</dbReference>
<dbReference type="PDB" id="8GEE">
    <property type="method" value="EM"/>
    <property type="resolution" value="3.70 A"/>
    <property type="chains" value="B=2-340"/>
</dbReference>
<dbReference type="PDB" id="8GEF">
    <property type="method" value="EM"/>
    <property type="resolution" value="3.80 A"/>
    <property type="chains" value="B=2-340"/>
</dbReference>
<dbReference type="PDB" id="8GEG">
    <property type="method" value="EM"/>
    <property type="resolution" value="3.80 A"/>
    <property type="chains" value="B=2-340"/>
</dbReference>
<dbReference type="PDB" id="8GEH">
    <property type="method" value="EM"/>
    <property type="resolution" value="4.00 A"/>
    <property type="chains" value="B=2-340"/>
</dbReference>
<dbReference type="PDB" id="8GEI">
    <property type="method" value="EM"/>
    <property type="resolution" value="4.10 A"/>
    <property type="chains" value="B=2-340"/>
</dbReference>
<dbReference type="PDB" id="8GEJ">
    <property type="method" value="EM"/>
    <property type="resolution" value="4.20 A"/>
    <property type="chains" value="B=2-340"/>
</dbReference>
<dbReference type="PDB" id="8GFV">
    <property type="method" value="EM"/>
    <property type="resolution" value="3.10 A"/>
    <property type="chains" value="B=2-340"/>
</dbReference>
<dbReference type="PDB" id="8GFW">
    <property type="method" value="EM"/>
    <property type="resolution" value="3.00 A"/>
    <property type="chains" value="B=2-340"/>
</dbReference>
<dbReference type="PDB" id="8GFX">
    <property type="method" value="EM"/>
    <property type="resolution" value="3.00 A"/>
    <property type="chains" value="B=2-340"/>
</dbReference>
<dbReference type="PDB" id="8GFY">
    <property type="method" value="EM"/>
    <property type="resolution" value="3.00 A"/>
    <property type="chains" value="B=2-340"/>
</dbReference>
<dbReference type="PDB" id="8GFZ">
    <property type="method" value="EM"/>
    <property type="resolution" value="3.00 A"/>
    <property type="chains" value="B=2-340"/>
</dbReference>
<dbReference type="PDB" id="8GG0">
    <property type="method" value="EM"/>
    <property type="resolution" value="2.90 A"/>
    <property type="chains" value="B=2-340"/>
</dbReference>
<dbReference type="PDB" id="8GG1">
    <property type="method" value="EM"/>
    <property type="resolution" value="3.00 A"/>
    <property type="chains" value="B=2-340"/>
</dbReference>
<dbReference type="PDB" id="8GG2">
    <property type="method" value="EM"/>
    <property type="resolution" value="3.00 A"/>
    <property type="chains" value="B=2-340"/>
</dbReference>
<dbReference type="PDB" id="8GG3">
    <property type="method" value="EM"/>
    <property type="resolution" value="3.10 A"/>
    <property type="chains" value="B=2-340"/>
</dbReference>
<dbReference type="PDB" id="8GG4">
    <property type="method" value="EM"/>
    <property type="resolution" value="3.20 A"/>
    <property type="chains" value="B=2-340"/>
</dbReference>
<dbReference type="PDB" id="8GG5">
    <property type="method" value="EM"/>
    <property type="resolution" value="3.20 A"/>
    <property type="chains" value="B=2-340"/>
</dbReference>
<dbReference type="PDB" id="8GG6">
    <property type="method" value="EM"/>
    <property type="resolution" value="3.30 A"/>
    <property type="chains" value="B=2-340"/>
</dbReference>
<dbReference type="PDB" id="8GG7">
    <property type="method" value="EM"/>
    <property type="resolution" value="3.30 A"/>
    <property type="chains" value="B=2-340"/>
</dbReference>
<dbReference type="PDB" id="8GG8">
    <property type="method" value="EM"/>
    <property type="resolution" value="3.30 A"/>
    <property type="chains" value="B=2-340"/>
</dbReference>
<dbReference type="PDB" id="8GG9">
    <property type="method" value="EM"/>
    <property type="resolution" value="3.40 A"/>
    <property type="chains" value="B=2-340"/>
</dbReference>
<dbReference type="PDB" id="8GGA">
    <property type="method" value="EM"/>
    <property type="resolution" value="3.50 A"/>
    <property type="chains" value="B=2-340"/>
</dbReference>
<dbReference type="PDB" id="8GGB">
    <property type="method" value="EM"/>
    <property type="resolution" value="3.50 A"/>
    <property type="chains" value="B=2-340"/>
</dbReference>
<dbReference type="PDB" id="8GGC">
    <property type="method" value="EM"/>
    <property type="resolution" value="3.40 A"/>
    <property type="chains" value="B=2-340"/>
</dbReference>
<dbReference type="PDB" id="8GGE">
    <property type="method" value="EM"/>
    <property type="resolution" value="3.50 A"/>
    <property type="chains" value="B=2-340"/>
</dbReference>
<dbReference type="PDB" id="8GGF">
    <property type="method" value="EM"/>
    <property type="resolution" value="3.60 A"/>
    <property type="chains" value="B=2-340"/>
</dbReference>
<dbReference type="PDB" id="8GHV">
    <property type="method" value="EM"/>
    <property type="resolution" value="2.80 A"/>
    <property type="chains" value="B=2-340"/>
</dbReference>
<dbReference type="PDB" id="8GUQ">
    <property type="method" value="EM"/>
    <property type="resolution" value="3.08 A"/>
    <property type="chains" value="B=1-340"/>
</dbReference>
<dbReference type="PDB" id="8GUR">
    <property type="method" value="EM"/>
    <property type="resolution" value="2.84 A"/>
    <property type="chains" value="B=1-340"/>
</dbReference>
<dbReference type="PDB" id="8GUS">
    <property type="method" value="EM"/>
    <property type="resolution" value="2.97 A"/>
    <property type="chains" value="B=1-340"/>
</dbReference>
<dbReference type="PDB" id="8GUT">
    <property type="method" value="EM"/>
    <property type="resolution" value="2.98 A"/>
    <property type="chains" value="B=1-340"/>
</dbReference>
<dbReference type="PDB" id="8GY7">
    <property type="method" value="EM"/>
    <property type="resolution" value="3.30 A"/>
    <property type="chains" value="B=2-340"/>
</dbReference>
<dbReference type="PDB" id="8H0P">
    <property type="method" value="EM"/>
    <property type="resolution" value="3.15 A"/>
    <property type="chains" value="B=2-340"/>
</dbReference>
<dbReference type="PDB" id="8H0Q">
    <property type="method" value="EM"/>
    <property type="resolution" value="3.30 A"/>
    <property type="chains" value="B=2-340"/>
</dbReference>
<dbReference type="PDB" id="8H2G">
    <property type="method" value="EM"/>
    <property type="resolution" value="3.01 A"/>
    <property type="chains" value="C=2-340"/>
</dbReference>
<dbReference type="PDB" id="8H4I">
    <property type="method" value="EM"/>
    <property type="resolution" value="3.06 A"/>
    <property type="chains" value="B=2-340"/>
</dbReference>
<dbReference type="PDB" id="8H4K">
    <property type="method" value="EM"/>
    <property type="resolution" value="3.10 A"/>
    <property type="chains" value="B=2-340"/>
</dbReference>
<dbReference type="PDB" id="8H4L">
    <property type="method" value="EM"/>
    <property type="resolution" value="3.07 A"/>
    <property type="chains" value="B=2-340"/>
</dbReference>
<dbReference type="PDB" id="8H8J">
    <property type="method" value="EM"/>
    <property type="resolution" value="3.20 A"/>
    <property type="chains" value="B=2-340"/>
</dbReference>
<dbReference type="PDB" id="8HBD">
    <property type="method" value="EM"/>
    <property type="resolution" value="2.99 A"/>
    <property type="chains" value="B=2-340"/>
</dbReference>
<dbReference type="PDB" id="8HCQ">
    <property type="method" value="EM"/>
    <property type="resolution" value="3.01 A"/>
    <property type="chains" value="B=2-340"/>
</dbReference>
<dbReference type="PDB" id="8HCX">
    <property type="method" value="EM"/>
    <property type="resolution" value="3.50 A"/>
    <property type="chains" value="B=2-340"/>
</dbReference>
<dbReference type="PDB" id="8HDO">
    <property type="method" value="EM"/>
    <property type="resolution" value="2.87 A"/>
    <property type="chains" value="B=2-340"/>
</dbReference>
<dbReference type="PDB" id="8HDP">
    <property type="method" value="EM"/>
    <property type="resolution" value="3.20 A"/>
    <property type="chains" value="B=2-340"/>
</dbReference>
<dbReference type="PDB" id="8HIX">
    <property type="method" value="EM"/>
    <property type="resolution" value="3.12 A"/>
    <property type="chains" value="B=1-340"/>
</dbReference>
<dbReference type="PDB" id="8HJ0">
    <property type="method" value="EM"/>
    <property type="resolution" value="3.12 A"/>
    <property type="chains" value="B=1-340"/>
</dbReference>
<dbReference type="PDB" id="8HJ1">
    <property type="method" value="EM"/>
    <property type="resolution" value="3.27 A"/>
    <property type="chains" value="B=1-340"/>
</dbReference>
<dbReference type="PDB" id="8HJ2">
    <property type="method" value="EM"/>
    <property type="resolution" value="3.80 A"/>
    <property type="chains" value="B=1-340"/>
</dbReference>
<dbReference type="PDB" id="8HJ5">
    <property type="method" value="EM"/>
    <property type="resolution" value="3.00 A"/>
    <property type="chains" value="B=2-340"/>
</dbReference>
<dbReference type="PDB" id="8HMP">
    <property type="method" value="EM"/>
    <property type="resolution" value="2.77 A"/>
    <property type="chains" value="B=1-340"/>
</dbReference>
<dbReference type="PDB" id="8HMV">
    <property type="method" value="EM"/>
    <property type="resolution" value="2.91 A"/>
    <property type="chains" value="B=3-340"/>
</dbReference>
<dbReference type="PDB" id="8HN8">
    <property type="method" value="EM"/>
    <property type="resolution" value="3.00 A"/>
    <property type="chains" value="B=1-340"/>
</dbReference>
<dbReference type="PDB" id="8HNK">
    <property type="method" value="EM"/>
    <property type="resolution" value="3.01 A"/>
    <property type="chains" value="B=2-340"/>
</dbReference>
<dbReference type="PDB" id="8HNL">
    <property type="method" value="EM"/>
    <property type="resolution" value="2.98 A"/>
    <property type="chains" value="B=2-340"/>
</dbReference>
<dbReference type="PDB" id="8HNM">
    <property type="method" value="EM"/>
    <property type="resolution" value="2.94 A"/>
    <property type="chains" value="B=2-340"/>
</dbReference>
<dbReference type="PDB" id="8HOC">
    <property type="method" value="EM"/>
    <property type="resolution" value="3.00 A"/>
    <property type="chains" value="B=1-340"/>
</dbReference>
<dbReference type="PDB" id="8HPT">
    <property type="method" value="EM"/>
    <property type="resolution" value="3.39 A"/>
    <property type="chains" value="C=3-340"/>
</dbReference>
<dbReference type="PDB" id="8HQC">
    <property type="method" value="EM"/>
    <property type="resolution" value="3.89 A"/>
    <property type="chains" value="C=2-340"/>
</dbReference>
<dbReference type="PDB" id="8HQE">
    <property type="method" value="EM"/>
    <property type="resolution" value="2.97 A"/>
    <property type="chains" value="B=2-340"/>
</dbReference>
<dbReference type="PDB" id="8HQM">
    <property type="method" value="EM"/>
    <property type="resolution" value="2.95 A"/>
    <property type="chains" value="B=2-340"/>
</dbReference>
<dbReference type="PDB" id="8HQN">
    <property type="method" value="EM"/>
    <property type="resolution" value="3.00 A"/>
    <property type="chains" value="B=2-340"/>
</dbReference>
<dbReference type="PDB" id="8HS3">
    <property type="method" value="EM"/>
    <property type="resolution" value="3.14 A"/>
    <property type="chains" value="B=1-340"/>
</dbReference>
<dbReference type="PDB" id="8HSC">
    <property type="method" value="EM"/>
    <property type="resolution" value="3.22 A"/>
    <property type="chains" value="B=1-340"/>
</dbReference>
<dbReference type="PDB" id="8HTI">
    <property type="method" value="EM"/>
    <property type="resolution" value="2.97 A"/>
    <property type="chains" value="B=2-340"/>
</dbReference>
<dbReference type="PDB" id="8HVI">
    <property type="method" value="EM"/>
    <property type="resolution" value="3.04 A"/>
    <property type="chains" value="C=2-340"/>
</dbReference>
<dbReference type="PDB" id="8I2G">
    <property type="method" value="EM"/>
    <property type="resolution" value="2.80 A"/>
    <property type="chains" value="B=2-340"/>
</dbReference>
<dbReference type="PDB" id="8I7V">
    <property type="method" value="EM"/>
    <property type="resolution" value="2.77 A"/>
    <property type="chains" value="C=2-340"/>
</dbReference>
<dbReference type="PDB" id="8I7W">
    <property type="method" value="EM"/>
    <property type="resolution" value="3.39 A"/>
    <property type="chains" value="C=2-340"/>
</dbReference>
<dbReference type="PDB" id="8I95">
    <property type="method" value="EM"/>
    <property type="resolution" value="2.88 A"/>
    <property type="chains" value="B=2-340"/>
</dbReference>
<dbReference type="PDB" id="8I97">
    <property type="method" value="EM"/>
    <property type="resolution" value="3.19 A"/>
    <property type="chains" value="B=2-340"/>
</dbReference>
<dbReference type="PDB" id="8I9A">
    <property type="method" value="EM"/>
    <property type="resolution" value="3.57 A"/>
    <property type="chains" value="B=2-340"/>
</dbReference>
<dbReference type="PDB" id="8I9L">
    <property type="method" value="EM"/>
    <property type="resolution" value="3.18 A"/>
    <property type="chains" value="B=2-340"/>
</dbReference>
<dbReference type="PDB" id="8I9S">
    <property type="method" value="EM"/>
    <property type="resolution" value="3.26 A"/>
    <property type="chains" value="B=2-340"/>
</dbReference>
<dbReference type="PDB" id="8IA2">
    <property type="method" value="EM"/>
    <property type="resolution" value="3.21 A"/>
    <property type="chains" value="C=2-340"/>
</dbReference>
<dbReference type="PDB" id="8IA7">
    <property type="method" value="EM"/>
    <property type="resolution" value="3.10 A"/>
    <property type="chains" value="B=2-340"/>
</dbReference>
<dbReference type="PDB" id="8IA8">
    <property type="method" value="EM"/>
    <property type="resolution" value="2.86 A"/>
    <property type="chains" value="B=1-340"/>
</dbReference>
<dbReference type="PDB" id="8IBU">
    <property type="method" value="EM"/>
    <property type="resolution" value="3.51 A"/>
    <property type="chains" value="B=2-340"/>
</dbReference>
<dbReference type="PDB" id="8IBV">
    <property type="method" value="EM"/>
    <property type="resolution" value="3.19 A"/>
    <property type="chains" value="B=2-340"/>
</dbReference>
<dbReference type="PDB" id="8IC0">
    <property type="method" value="EM"/>
    <property type="resolution" value="3.41 A"/>
    <property type="chains" value="C=2-340"/>
</dbReference>
<dbReference type="PDB" id="8ID3">
    <property type="method" value="EM"/>
    <property type="resolution" value="3.10 A"/>
    <property type="chains" value="B=2-340"/>
</dbReference>
<dbReference type="PDB" id="8ID4">
    <property type="method" value="EM"/>
    <property type="resolution" value="3.10 A"/>
    <property type="chains" value="B=2-340"/>
</dbReference>
<dbReference type="PDB" id="8ID6">
    <property type="method" value="EM"/>
    <property type="resolution" value="2.80 A"/>
    <property type="chains" value="B=2-340"/>
</dbReference>
<dbReference type="PDB" id="8ID8">
    <property type="method" value="EM"/>
    <property type="resolution" value="3.00 A"/>
    <property type="chains" value="B=2-340"/>
</dbReference>
<dbReference type="PDB" id="8ID9">
    <property type="method" value="EM"/>
    <property type="resolution" value="3.00 A"/>
    <property type="chains" value="B=2-340"/>
</dbReference>
<dbReference type="PDB" id="8IEC">
    <property type="method" value="EM"/>
    <property type="resolution" value="3.18 A"/>
    <property type="chains" value="D=2-340"/>
</dbReference>
<dbReference type="PDB" id="8IED">
    <property type="method" value="EM"/>
    <property type="resolution" value="3.33 A"/>
    <property type="chains" value="D=2-340"/>
</dbReference>
<dbReference type="PDB" id="8IJ3">
    <property type="method" value="EM"/>
    <property type="resolution" value="3.28 A"/>
    <property type="chains" value="B=4-340"/>
</dbReference>
<dbReference type="PDB" id="8IJA">
    <property type="method" value="EM"/>
    <property type="resolution" value="2.69 A"/>
    <property type="chains" value="B=4-340"/>
</dbReference>
<dbReference type="PDB" id="8IJB">
    <property type="method" value="EM"/>
    <property type="resolution" value="3.23 A"/>
    <property type="chains" value="B=4-340"/>
</dbReference>
<dbReference type="PDB" id="8IJD">
    <property type="method" value="EM"/>
    <property type="resolution" value="3.25 A"/>
    <property type="chains" value="B=4-340"/>
</dbReference>
<dbReference type="PDB" id="8IKG">
    <property type="method" value="EM"/>
    <property type="resolution" value="3.40 A"/>
    <property type="chains" value="B=2-340"/>
</dbReference>
<dbReference type="PDB" id="8IKH">
    <property type="method" value="EM"/>
    <property type="resolution" value="3.30 A"/>
    <property type="chains" value="B=2-340"/>
</dbReference>
<dbReference type="PDB" id="8IKL">
    <property type="method" value="EM"/>
    <property type="resolution" value="2.33 A"/>
    <property type="chains" value="B=3-340"/>
</dbReference>
<dbReference type="PDB" id="8INR">
    <property type="method" value="EM"/>
    <property type="resolution" value="2.73 A"/>
    <property type="chains" value="B=2-340"/>
</dbReference>
<dbReference type="PDB" id="8IOC">
    <property type="method" value="EM"/>
    <property type="resolution" value="2.86 A"/>
    <property type="chains" value="B=2-340"/>
</dbReference>
<dbReference type="PDB" id="8IOD">
    <property type="method" value="EM"/>
    <property type="resolution" value="2.59 A"/>
    <property type="chains" value="B=2-340"/>
</dbReference>
<dbReference type="PDB" id="8IQ4">
    <property type="method" value="EM"/>
    <property type="resolution" value="2.70 A"/>
    <property type="chains" value="B=2-340"/>
</dbReference>
<dbReference type="PDB" id="8IQ6">
    <property type="method" value="EM"/>
    <property type="resolution" value="3.40 A"/>
    <property type="chains" value="B=2-340"/>
</dbReference>
<dbReference type="PDB" id="8IRR">
    <property type="method" value="EM"/>
    <property type="resolution" value="3.20 A"/>
    <property type="chains" value="B=2-340"/>
</dbReference>
<dbReference type="PDB" id="8IRS">
    <property type="method" value="EM"/>
    <property type="resolution" value="3.00 A"/>
    <property type="chains" value="B=2-340"/>
</dbReference>
<dbReference type="PDB" id="8IRT">
    <property type="method" value="EM"/>
    <property type="resolution" value="2.70 A"/>
    <property type="chains" value="B=2-340"/>
</dbReference>
<dbReference type="PDB" id="8IRU">
    <property type="method" value="EM"/>
    <property type="resolution" value="3.20 A"/>
    <property type="chains" value="B=2-340"/>
</dbReference>
<dbReference type="PDB" id="8IRV">
    <property type="method" value="EM"/>
    <property type="resolution" value="3.10 A"/>
    <property type="chains" value="B=2-340"/>
</dbReference>
<dbReference type="PDB" id="8ITF">
    <property type="method" value="EM"/>
    <property type="resolution" value="3.46 A"/>
    <property type="chains" value="B=2-340"/>
</dbReference>
<dbReference type="PDB" id="8IU2">
    <property type="method" value="EM"/>
    <property type="resolution" value="3.35 A"/>
    <property type="chains" value="B=1-340"/>
</dbReference>
<dbReference type="PDB" id="8IUK">
    <property type="method" value="EM"/>
    <property type="resolution" value="2.67 A"/>
    <property type="chains" value="B=2-340"/>
</dbReference>
<dbReference type="PDB" id="8IUL">
    <property type="method" value="EM"/>
    <property type="resolution" value="2.78 A"/>
    <property type="chains" value="B=2-340"/>
</dbReference>
<dbReference type="PDB" id="8IUM">
    <property type="method" value="EM"/>
    <property type="resolution" value="3.14 A"/>
    <property type="chains" value="B=2-340"/>
</dbReference>
<dbReference type="PDB" id="8IW1">
    <property type="method" value="EM"/>
    <property type="resolution" value="3.40 A"/>
    <property type="chains" value="B=2-340"/>
</dbReference>
<dbReference type="PDB" id="8IW4">
    <property type="method" value="EM"/>
    <property type="resolution" value="3.49 A"/>
    <property type="chains" value="B=2-340"/>
</dbReference>
<dbReference type="PDB" id="8IW7">
    <property type="method" value="EM"/>
    <property type="resolution" value="2.97 A"/>
    <property type="chains" value="B=2-340"/>
</dbReference>
<dbReference type="PDB" id="8IW9">
    <property type="method" value="EM"/>
    <property type="resolution" value="3.08 A"/>
    <property type="chains" value="B=2-340"/>
</dbReference>
<dbReference type="PDB" id="8IY9">
    <property type="method" value="EM"/>
    <property type="resolution" value="3.37 A"/>
    <property type="chains" value="B=3-340"/>
</dbReference>
<dbReference type="PDB" id="8IYH">
    <property type="method" value="EM"/>
    <property type="resolution" value="3.30 A"/>
    <property type="chains" value="A=3-340"/>
</dbReference>
<dbReference type="PDB" id="8IYS">
    <property type="method" value="EM"/>
    <property type="resolution" value="2.95 A"/>
    <property type="chains" value="B=2-340"/>
</dbReference>
<dbReference type="PDB" id="8IYW">
    <property type="method" value="EM"/>
    <property type="resolution" value="3.45 A"/>
    <property type="chains" value="C=3-340"/>
</dbReference>
<dbReference type="PDB" id="8IZ4">
    <property type="method" value="EM"/>
    <property type="resolution" value="2.93 A"/>
    <property type="chains" value="B=2-340"/>
</dbReference>
<dbReference type="PDB" id="8IZB">
    <property type="method" value="EM"/>
    <property type="resolution" value="3.06 A"/>
    <property type="chains" value="B=2-340"/>
</dbReference>
<dbReference type="PDB" id="8J18">
    <property type="method" value="EM"/>
    <property type="resolution" value="2.89 A"/>
    <property type="chains" value="B=2-340"/>
</dbReference>
<dbReference type="PDB" id="8J19">
    <property type="method" value="EM"/>
    <property type="resolution" value="3.23 A"/>
    <property type="chains" value="B=2-340"/>
</dbReference>
<dbReference type="PDB" id="8J1A">
    <property type="method" value="EM"/>
    <property type="resolution" value="3.24 A"/>
    <property type="chains" value="B=2-340"/>
</dbReference>
<dbReference type="PDB" id="8J20">
    <property type="method" value="EM"/>
    <property type="resolution" value="3.20 A"/>
    <property type="chains" value="A=2-340"/>
</dbReference>
<dbReference type="PDB" id="8J21">
    <property type="method" value="EM"/>
    <property type="resolution" value="3.30 A"/>
    <property type="chains" value="A=2-340"/>
</dbReference>
<dbReference type="PDB" id="8J22">
    <property type="method" value="EM"/>
    <property type="resolution" value="3.20 A"/>
    <property type="chains" value="A=2-340"/>
</dbReference>
<dbReference type="PDB" id="8J23">
    <property type="method" value="EM"/>
    <property type="resolution" value="3.20 A"/>
    <property type="chains" value="C=2-340"/>
</dbReference>
<dbReference type="PDB" id="8J24">
    <property type="method" value="EM"/>
    <property type="resolution" value="2.60 A"/>
    <property type="chains" value="B=2-340"/>
</dbReference>
<dbReference type="PDB" id="8J6D">
    <property type="method" value="EM"/>
    <property type="resolution" value="3.10 A"/>
    <property type="chains" value="B=2-340"/>
</dbReference>
<dbReference type="PDB" id="8J6I">
    <property type="method" value="EM"/>
    <property type="resolution" value="2.92 A"/>
    <property type="chains" value="B=2-340"/>
</dbReference>
<dbReference type="PDB" id="8J6J">
    <property type="method" value="EM"/>
    <property type="resolution" value="2.80 A"/>
    <property type="chains" value="B=2-340"/>
</dbReference>
<dbReference type="PDB" id="8J6L">
    <property type="method" value="EM"/>
    <property type="resolution" value="3.05 A"/>
    <property type="chains" value="B=2-340"/>
</dbReference>
<dbReference type="PDB" id="8J6P">
    <property type="method" value="EM"/>
    <property type="resolution" value="2.55 A"/>
    <property type="chains" value="B=2-340"/>
</dbReference>
<dbReference type="PDB" id="8J6Q">
    <property type="method" value="EM"/>
    <property type="resolution" value="2.60 A"/>
    <property type="chains" value="B=2-340"/>
</dbReference>
<dbReference type="PDB" id="8J6R">
    <property type="method" value="EM"/>
    <property type="resolution" value="2.76 A"/>
    <property type="chains" value="B=2-340"/>
</dbReference>
<dbReference type="PDB" id="8J9N">
    <property type="method" value="EM"/>
    <property type="resolution" value="3.50 A"/>
    <property type="chains" value="D=1-340"/>
</dbReference>
<dbReference type="PDB" id="8JD3">
    <property type="method" value="EM"/>
    <property type="resolution" value="3.30 A"/>
    <property type="chains" value="B=2-340"/>
</dbReference>
<dbReference type="PDB" id="8JD5">
    <property type="method" value="EM"/>
    <property type="resolution" value="3.60 A"/>
    <property type="chains" value="B=2-340"/>
</dbReference>
<dbReference type="PDB" id="8JD6">
    <property type="method" value="EM"/>
    <property type="resolution" value="3.40 A"/>
    <property type="chains" value="B=2-340"/>
</dbReference>
<dbReference type="PDB" id="8JEF">
    <property type="method" value="EM"/>
    <property type="resolution" value="2.96 A"/>
    <property type="chains" value="B=4-340"/>
</dbReference>
<dbReference type="PDB" id="8JEI">
    <property type="method" value="EM"/>
    <property type="resolution" value="2.73 A"/>
    <property type="chains" value="B=4-340"/>
</dbReference>
<dbReference type="PDB" id="8JER">
    <property type="method" value="EM"/>
    <property type="resolution" value="3.45 A"/>
    <property type="chains" value="B=2-340"/>
</dbReference>
<dbReference type="PDB" id="8JGB">
    <property type="method" value="EM"/>
    <property type="resolution" value="2.84 A"/>
    <property type="chains" value="B=2-340"/>
</dbReference>
<dbReference type="PDB" id="8JGF">
    <property type="method" value="EM"/>
    <property type="resolution" value="2.70 A"/>
    <property type="chains" value="B=2-340"/>
</dbReference>
<dbReference type="PDB" id="8JGG">
    <property type="method" value="EM"/>
    <property type="resolution" value="3.00 A"/>
    <property type="chains" value="B=2-340"/>
</dbReference>
<dbReference type="PDB" id="8JHB">
    <property type="method" value="EM"/>
    <property type="resolution" value="3.30 A"/>
    <property type="chains" value="B=1-340"/>
</dbReference>
<dbReference type="PDB" id="8JHI">
    <property type="method" value="EM"/>
    <property type="resolution" value="3.20 A"/>
    <property type="chains" value="B=4-340"/>
</dbReference>
<dbReference type="PDB" id="8JHN">
    <property type="method" value="EM"/>
    <property type="resolution" value="3.75 A"/>
    <property type="chains" value="B=2-340"/>
</dbReference>
<dbReference type="PDB" id="8JHY">
    <property type="method" value="EM"/>
    <property type="resolution" value="2.87 A"/>
    <property type="chains" value="B=2-340"/>
</dbReference>
<dbReference type="PDB" id="8JII">
    <property type="method" value="EM"/>
    <property type="resolution" value="3.17 A"/>
    <property type="chains" value="B=2-340"/>
</dbReference>
<dbReference type="PDB" id="8JIL">
    <property type="method" value="EM"/>
    <property type="resolution" value="3.50 A"/>
    <property type="chains" value="B=2-340"/>
</dbReference>
<dbReference type="PDB" id="8JIM">
    <property type="method" value="EM"/>
    <property type="resolution" value="2.98 A"/>
    <property type="chains" value="B=2-340"/>
</dbReference>
<dbReference type="PDB" id="8JJP">
    <property type="method" value="EM"/>
    <property type="resolution" value="2.90 A"/>
    <property type="chains" value="B=3-340"/>
</dbReference>
<dbReference type="PDB" id="8JKB">
    <property type="method" value="EM"/>
    <property type="resolution" value="3.27 A"/>
    <property type="chains" value="B/F/I/J/K=1-340"/>
</dbReference>
<dbReference type="PDB" id="8JLJ">
    <property type="method" value="EM"/>
    <property type="resolution" value="3.10 A"/>
    <property type="chains" value="B=2-340"/>
</dbReference>
<dbReference type="PDB" id="8JLK">
    <property type="method" value="EM"/>
    <property type="resolution" value="3.22 A"/>
    <property type="chains" value="B=2-340"/>
</dbReference>
<dbReference type="PDB" id="8JLN">
    <property type="method" value="EM"/>
    <property type="resolution" value="3.24 A"/>
    <property type="chains" value="B=2-340"/>
</dbReference>
<dbReference type="PDB" id="8JLO">
    <property type="method" value="EM"/>
    <property type="resolution" value="3.52 A"/>
    <property type="chains" value="B=2-340"/>
</dbReference>
<dbReference type="PDB" id="8JLP">
    <property type="method" value="EM"/>
    <property type="resolution" value="3.23 A"/>
    <property type="chains" value="B=2-340"/>
</dbReference>
<dbReference type="PDB" id="8JLQ">
    <property type="method" value="EM"/>
    <property type="resolution" value="2.84 A"/>
    <property type="chains" value="B=2-340"/>
</dbReference>
<dbReference type="PDB" id="8JLR">
    <property type="method" value="EM"/>
    <property type="resolution" value="3.00 A"/>
    <property type="chains" value="B=2-340"/>
</dbReference>
<dbReference type="PDB" id="8JLZ">
    <property type="method" value="EM"/>
    <property type="resolution" value="3.09 A"/>
    <property type="chains" value="B=2-340"/>
</dbReference>
<dbReference type="PDB" id="8JPN">
    <property type="method" value="EM"/>
    <property type="resolution" value="2.90 A"/>
    <property type="chains" value="B=2-340"/>
</dbReference>
<dbReference type="PDB" id="8JPP">
    <property type="method" value="EM"/>
    <property type="resolution" value="3.20 A"/>
    <property type="chains" value="B=2-340"/>
</dbReference>
<dbReference type="PDB" id="8JR9">
    <property type="method" value="EM"/>
    <property type="resolution" value="2.57 A"/>
    <property type="chains" value="B=2-340"/>
</dbReference>
<dbReference type="PDB" id="8JSO">
    <property type="method" value="EM"/>
    <property type="resolution" value="3.40 A"/>
    <property type="chains" value="B=2-340"/>
</dbReference>
<dbReference type="PDB" id="8JSP">
    <property type="method" value="EM"/>
    <property type="resolution" value="3.65 A"/>
    <property type="chains" value="B=13-340"/>
</dbReference>
<dbReference type="PDB" id="8JSR">
    <property type="method" value="EM"/>
    <property type="resolution" value="2.90 A"/>
    <property type="chains" value="B=2-340"/>
</dbReference>
<dbReference type="PDB" id="8JT6">
    <property type="method" value="EM"/>
    <property type="resolution" value="3.00 A"/>
    <property type="chains" value="B=2-340"/>
</dbReference>
<dbReference type="PDB" id="8JXT">
    <property type="method" value="EM"/>
    <property type="resolution" value="3.07 A"/>
    <property type="chains" value="C=2-340"/>
</dbReference>
<dbReference type="PDB" id="8JXV">
    <property type="method" value="EM"/>
    <property type="resolution" value="3.21 A"/>
    <property type="chains" value="C=2-340"/>
</dbReference>
<dbReference type="PDB" id="8JXW">
    <property type="method" value="EM"/>
    <property type="resolution" value="3.01 A"/>
    <property type="chains" value="C=2-340"/>
</dbReference>
<dbReference type="PDB" id="8JXX">
    <property type="method" value="EM"/>
    <property type="resolution" value="3.06 A"/>
    <property type="chains" value="C=2-340"/>
</dbReference>
<dbReference type="PDB" id="8JZ7">
    <property type="method" value="EM"/>
    <property type="resolution" value="2.60 A"/>
    <property type="chains" value="B=2-340"/>
</dbReference>
<dbReference type="PDB" id="8JZP">
    <property type="method" value="EM"/>
    <property type="resolution" value="3.45 A"/>
    <property type="chains" value="C=2-340"/>
</dbReference>
<dbReference type="PDB" id="8JZZ">
    <property type="method" value="EM"/>
    <property type="resolution" value="3.31 A"/>
    <property type="chains" value="B=2-340"/>
</dbReference>
<dbReference type="PDB" id="8K2X">
    <property type="method" value="EM"/>
    <property type="resolution" value="3.20 A"/>
    <property type="chains" value="B=2-340"/>
</dbReference>
<dbReference type="PDB" id="8K3Z">
    <property type="method" value="EM"/>
    <property type="resolution" value="2.81 A"/>
    <property type="chains" value="B=3-340"/>
</dbReference>
<dbReference type="PDB" id="8K4N">
    <property type="method" value="EM"/>
    <property type="resolution" value="2.83 A"/>
    <property type="chains" value="B=5-340"/>
</dbReference>
<dbReference type="PDB" id="8K4O">
    <property type="method" value="EM"/>
    <property type="resolution" value="3.01 A"/>
    <property type="chains" value="B=5-340"/>
</dbReference>
<dbReference type="PDB" id="8K4P">
    <property type="method" value="EM"/>
    <property type="resolution" value="2.81 A"/>
    <property type="chains" value="B=3-340"/>
</dbReference>
<dbReference type="PDB" id="8K4S">
    <property type="method" value="EM"/>
    <property type="resolution" value="2.90 A"/>
    <property type="chains" value="B=2-340"/>
</dbReference>
<dbReference type="PDB" id="8K6M">
    <property type="method" value="EM"/>
    <property type="resolution" value="3.30 A"/>
    <property type="chains" value="B=2-340"/>
</dbReference>
<dbReference type="PDB" id="8K6N">
    <property type="method" value="EM"/>
    <property type="resolution" value="3.20 A"/>
    <property type="chains" value="B=2-340"/>
</dbReference>
<dbReference type="PDB" id="8K6O">
    <property type="method" value="EM"/>
    <property type="resolution" value="3.30 A"/>
    <property type="chains" value="B=2-340"/>
</dbReference>
<dbReference type="PDB" id="8K8J">
    <property type="method" value="EM"/>
    <property type="resolution" value="2.88 A"/>
    <property type="chains" value="B=1-340"/>
</dbReference>
<dbReference type="PDB" id="8K9K">
    <property type="method" value="EM"/>
    <property type="resolution" value="2.98 A"/>
    <property type="chains" value="B=2-339"/>
</dbReference>
<dbReference type="PDB" id="8K9L">
    <property type="method" value="EM"/>
    <property type="resolution" value="3.05 A"/>
    <property type="chains" value="B=2-340"/>
</dbReference>
<dbReference type="PDB" id="8KFX">
    <property type="method" value="EM"/>
    <property type="resolution" value="2.96 A"/>
    <property type="chains" value="B=1-340"/>
</dbReference>
<dbReference type="PDB" id="8KFY">
    <property type="method" value="EM"/>
    <property type="resolution" value="3.06 A"/>
    <property type="chains" value="B=1-340"/>
</dbReference>
<dbReference type="PDB" id="8KFZ">
    <property type="method" value="EM"/>
    <property type="resolution" value="3.30 A"/>
    <property type="chains" value="B=1-340"/>
</dbReference>
<dbReference type="PDB" id="8KGG">
    <property type="method" value="EM"/>
    <property type="resolution" value="3.06 A"/>
    <property type="chains" value="B=2-340"/>
</dbReference>
<dbReference type="PDB" id="8KGK">
    <property type="method" value="EM"/>
    <property type="resolution" value="3.16 A"/>
    <property type="chains" value="C=2-340"/>
</dbReference>
<dbReference type="PDB" id="8KH4">
    <property type="method" value="EM"/>
    <property type="resolution" value="3.10 A"/>
    <property type="chains" value="C=2-340"/>
</dbReference>
<dbReference type="PDB" id="8KH5">
    <property type="method" value="EM"/>
    <property type="resolution" value="2.83 A"/>
    <property type="chains" value="C=2-340"/>
</dbReference>
<dbReference type="PDB" id="8PJK">
    <property type="method" value="EM"/>
    <property type="resolution" value="2.40 A"/>
    <property type="chains" value="B=2-340"/>
</dbReference>
<dbReference type="PDB" id="8PKM">
    <property type="method" value="EM"/>
    <property type="resolution" value="2.90 A"/>
    <property type="chains" value="B=2-340"/>
</dbReference>
<dbReference type="PDB" id="8PM2">
    <property type="method" value="EM"/>
    <property type="resolution" value="2.92 A"/>
    <property type="chains" value="B=2-340"/>
</dbReference>
<dbReference type="PDB" id="8POK">
    <property type="method" value="EM"/>
    <property type="resolution" value="3.40 A"/>
    <property type="chains" value="C=2-340"/>
</dbReference>
<dbReference type="PDB" id="8QJ2">
    <property type="method" value="EM"/>
    <property type="resolution" value="3.40 A"/>
    <property type="chains" value="C=2-340"/>
</dbReference>
<dbReference type="PDB" id="8RQL">
    <property type="method" value="EM"/>
    <property type="resolution" value="3.03 A"/>
    <property type="chains" value="B=2-340"/>
</dbReference>
<dbReference type="PDB" id="8SAI">
    <property type="method" value="EM"/>
    <property type="resolution" value="3.27 A"/>
    <property type="chains" value="E=2-340"/>
</dbReference>
<dbReference type="PDB" id="8SG1">
    <property type="method" value="EM"/>
    <property type="resolution" value="2.94 A"/>
    <property type="chains" value="B=5-340"/>
</dbReference>
<dbReference type="PDB" id="8SL3">
    <property type="method" value="EM"/>
    <property type="resolution" value="7.00 A"/>
    <property type="chains" value="B=1-340"/>
</dbReference>
<dbReference type="PDB" id="8SMV">
    <property type="method" value="EM"/>
    <property type="resolution" value="2.74 A"/>
    <property type="chains" value="B=2-340"/>
</dbReference>
<dbReference type="PDB" id="8SZG">
    <property type="method" value="EM"/>
    <property type="resolution" value="3.60 A"/>
    <property type="chains" value="D=2-340"/>
</dbReference>
<dbReference type="PDB" id="8SZH">
    <property type="method" value="EM"/>
    <property type="resolution" value="3.10 A"/>
    <property type="chains" value="D=2-340"/>
</dbReference>
<dbReference type="PDB" id="8SZI">
    <property type="method" value="EM"/>
    <property type="resolution" value="3.50 A"/>
    <property type="chains" value="D=2-340"/>
</dbReference>
<dbReference type="PDB" id="8T3O">
    <property type="method" value="EM"/>
    <property type="resolution" value="3.06 A"/>
    <property type="chains" value="B=2-340"/>
</dbReference>
<dbReference type="PDB" id="8T3Q">
    <property type="method" value="EM"/>
    <property type="resolution" value="3.14 A"/>
    <property type="chains" value="B=2-340"/>
</dbReference>
<dbReference type="PDB" id="8T3S">
    <property type="method" value="EM"/>
    <property type="resolution" value="3.07 A"/>
    <property type="chains" value="B=2-340"/>
</dbReference>
<dbReference type="PDB" id="8T3V">
    <property type="method" value="EM"/>
    <property type="resolution" value="3.39 A"/>
    <property type="chains" value="B=2-340"/>
</dbReference>
<dbReference type="PDB" id="8TB0">
    <property type="method" value="EM"/>
    <property type="resolution" value="3.47 A"/>
    <property type="chains" value="B=1-340"/>
</dbReference>
<dbReference type="PDB" id="8THK">
    <property type="method" value="EM"/>
    <property type="resolution" value="2.60 A"/>
    <property type="chains" value="B=2-340"/>
</dbReference>
<dbReference type="PDB" id="8THL">
    <property type="method" value="EM"/>
    <property type="resolution" value="3.10 A"/>
    <property type="chains" value="B=2-340"/>
</dbReference>
<dbReference type="PDB" id="8TYW">
    <property type="method" value="EM"/>
    <property type="resolution" value="3.43 A"/>
    <property type="chains" value="B=2-340"/>
</dbReference>
<dbReference type="PDB" id="8TZQ">
    <property type="method" value="EM"/>
    <property type="resolution" value="3.20 A"/>
    <property type="chains" value="A=2-340"/>
</dbReference>
<dbReference type="PDB" id="8U02">
    <property type="method" value="EM"/>
    <property type="resolution" value="3.28 A"/>
    <property type="chains" value="A=2-340"/>
</dbReference>
<dbReference type="PDB" id="8U1U">
    <property type="method" value="EM"/>
    <property type="resolution" value="3.10 A"/>
    <property type="chains" value="C=2-340"/>
</dbReference>
<dbReference type="PDB" id="8U26">
    <property type="method" value="EM"/>
    <property type="resolution" value="2.50 A"/>
    <property type="chains" value="B=2-340"/>
</dbReference>
<dbReference type="PDB" id="8U4N">
    <property type="method" value="EM"/>
    <property type="resolution" value="2.72 A"/>
    <property type="chains" value="B=2-340"/>
</dbReference>
<dbReference type="PDB" id="8U4O">
    <property type="method" value="EM"/>
    <property type="resolution" value="3.29 A"/>
    <property type="chains" value="B=2-340"/>
</dbReference>
<dbReference type="PDB" id="8U4P">
    <property type="method" value="EM"/>
    <property type="resolution" value="3.15 A"/>
    <property type="chains" value="B=2-340"/>
</dbReference>
<dbReference type="PDB" id="8U4Q">
    <property type="method" value="EM"/>
    <property type="resolution" value="3.36 A"/>
    <property type="chains" value="B=2-340"/>
</dbReference>
<dbReference type="PDB" id="8U7Z">
    <property type="method" value="EM"/>
    <property type="resolution" value="2.97 A"/>
    <property type="chains" value="B1/B2/B3/B4/B5=1-340"/>
</dbReference>
<dbReference type="PDB" id="8U81">
    <property type="method" value="EM"/>
    <property type="resolution" value="3.82 A"/>
    <property type="chains" value="B1/B2/B3/B4/B5=1-340"/>
</dbReference>
<dbReference type="PDB" id="8U82">
    <property type="method" value="EM"/>
    <property type="resolution" value="3.84 A"/>
    <property type="chains" value="B1/B2/B3/B4/B5=1-340"/>
</dbReference>
<dbReference type="PDB" id="8U83">
    <property type="method" value="EM"/>
    <property type="resolution" value="3.98 A"/>
    <property type="chains" value="B1/B2/B3/B4/B5=1-340"/>
</dbReference>
<dbReference type="PDB" id="8U84">
    <property type="method" value="EM"/>
    <property type="resolution" value="3.88 A"/>
    <property type="chains" value="B1/B2/B3/B4/B5=1-340"/>
</dbReference>
<dbReference type="PDB" id="8U8F">
    <property type="method" value="EM"/>
    <property type="resolution" value="3.49 A"/>
    <property type="chains" value="B=2-340"/>
</dbReference>
<dbReference type="PDB" id="8UGY">
    <property type="method" value="EM"/>
    <property type="resolution" value="3.31 A"/>
    <property type="chains" value="B=7-340"/>
</dbReference>
<dbReference type="PDB" id="8UH3">
    <property type="method" value="EM"/>
    <property type="resolution" value="3.31 A"/>
    <property type="chains" value="B=2-340"/>
</dbReference>
<dbReference type="PDB" id="8UHB">
    <property type="method" value="EM"/>
    <property type="resolution" value="3.35 A"/>
    <property type="chains" value="B=7-340"/>
</dbReference>
<dbReference type="PDB" id="8UNL">
    <property type="method" value="EM"/>
    <property type="resolution" value="3.30 A"/>
    <property type="chains" value="B=2-340"/>
</dbReference>
<dbReference type="PDB" id="8UNM">
    <property type="method" value="EM"/>
    <property type="resolution" value="3.40 A"/>
    <property type="chains" value="B=2-340"/>
</dbReference>
<dbReference type="PDB" id="8UNN">
    <property type="method" value="EM"/>
    <property type="resolution" value="3.40 A"/>
    <property type="chains" value="B=2-340"/>
</dbReference>
<dbReference type="PDB" id="8UNO">
    <property type="method" value="EM"/>
    <property type="resolution" value="3.30 A"/>
    <property type="chains" value="B=2-340"/>
</dbReference>
<dbReference type="PDB" id="8UNP">
    <property type="method" value="EM"/>
    <property type="resolution" value="3.30 A"/>
    <property type="chains" value="B=2-340"/>
</dbReference>
<dbReference type="PDB" id="8UNQ">
    <property type="method" value="EM"/>
    <property type="resolution" value="3.30 A"/>
    <property type="chains" value="B=2-340"/>
</dbReference>
<dbReference type="PDB" id="8UNR">
    <property type="method" value="EM"/>
    <property type="resolution" value="3.40 A"/>
    <property type="chains" value="B=2-340"/>
</dbReference>
<dbReference type="PDB" id="8UNS">
    <property type="method" value="EM"/>
    <property type="resolution" value="3.40 A"/>
    <property type="chains" value="B=2-340"/>
</dbReference>
<dbReference type="PDB" id="8UNT">
    <property type="method" value="EM"/>
    <property type="resolution" value="3.40 A"/>
    <property type="chains" value="B=2-340"/>
</dbReference>
<dbReference type="PDB" id="8UNU">
    <property type="method" value="EM"/>
    <property type="resolution" value="3.50 A"/>
    <property type="chains" value="B=2-340"/>
</dbReference>
<dbReference type="PDB" id="8UNV">
    <property type="method" value="EM"/>
    <property type="resolution" value="3.30 A"/>
    <property type="chains" value="B=2-340"/>
</dbReference>
<dbReference type="PDB" id="8UNW">
    <property type="method" value="EM"/>
    <property type="resolution" value="3.40 A"/>
    <property type="chains" value="B=2-340"/>
</dbReference>
<dbReference type="PDB" id="8UNX">
    <property type="method" value="EM"/>
    <property type="resolution" value="3.60 A"/>
    <property type="chains" value="B=2-340"/>
</dbReference>
<dbReference type="PDB" id="8UNY">
    <property type="method" value="EM"/>
    <property type="resolution" value="3.60 A"/>
    <property type="chains" value="B=2-340"/>
</dbReference>
<dbReference type="PDB" id="8UNZ">
    <property type="method" value="EM"/>
    <property type="resolution" value="3.80 A"/>
    <property type="chains" value="B=2-340"/>
</dbReference>
<dbReference type="PDB" id="8UO0">
    <property type="method" value="EM"/>
    <property type="resolution" value="3.50 A"/>
    <property type="chains" value="B=2-340"/>
</dbReference>
<dbReference type="PDB" id="8UO1">
    <property type="method" value="EM"/>
    <property type="resolution" value="3.60 A"/>
    <property type="chains" value="B=2-340"/>
</dbReference>
<dbReference type="PDB" id="8UO2">
    <property type="method" value="EM"/>
    <property type="resolution" value="3.60 A"/>
    <property type="chains" value="B=2-340"/>
</dbReference>
<dbReference type="PDB" id="8UO3">
    <property type="method" value="EM"/>
    <property type="resolution" value="3.50 A"/>
    <property type="chains" value="B=2-340"/>
</dbReference>
<dbReference type="PDB" id="8UO4">
    <property type="method" value="EM"/>
    <property type="resolution" value="4.00 A"/>
    <property type="chains" value="B=2-340"/>
</dbReference>
<dbReference type="PDB" id="8UQO">
    <property type="method" value="EM"/>
    <property type="resolution" value="3.37 A"/>
    <property type="chains" value="B/C=1-340"/>
</dbReference>
<dbReference type="PDB" id="8UTD">
    <property type="method" value="EM"/>
    <property type="resolution" value="3.24 A"/>
    <property type="chains" value="B=2-340"/>
</dbReference>
<dbReference type="PDB" id="8UUJ">
    <property type="method" value="EM"/>
    <property type="resolution" value="2.62 A"/>
    <property type="chains" value="B=2-340"/>
</dbReference>
<dbReference type="PDB" id="8UWL">
    <property type="method" value="EM"/>
    <property type="resolution" value="2.80 A"/>
    <property type="chains" value="C=1-340"/>
</dbReference>
<dbReference type="PDB" id="8UXV">
    <property type="method" value="EM"/>
    <property type="resolution" value="3.20 A"/>
    <property type="chains" value="Y=2-340"/>
</dbReference>
<dbReference type="PDB" id="8UXY">
    <property type="method" value="EM"/>
    <property type="resolution" value="3.30 A"/>
    <property type="chains" value="Y=2-340"/>
</dbReference>
<dbReference type="PDB" id="8UY0">
    <property type="method" value="EM"/>
    <property type="resolution" value="3.20 A"/>
    <property type="chains" value="Y=2-340"/>
</dbReference>
<dbReference type="PDB" id="8UYQ">
    <property type="method" value="EM"/>
    <property type="resolution" value="3.50 A"/>
    <property type="chains" value="Y=2-340"/>
</dbReference>
<dbReference type="PDB" id="8V6U">
    <property type="method" value="EM"/>
    <property type="resolution" value="3.00 A"/>
    <property type="chains" value="C=1-340"/>
</dbReference>
<dbReference type="PDB" id="8VHF">
    <property type="method" value="EM"/>
    <property type="resolution" value="3.51 A"/>
    <property type="chains" value="B=2-340"/>
</dbReference>
<dbReference type="PDB" id="8VVE">
    <property type="method" value="EM"/>
    <property type="resolution" value="3.30 A"/>
    <property type="chains" value="C=1-340"/>
</dbReference>
<dbReference type="PDB" id="8VVF">
    <property type="method" value="EM"/>
    <property type="resolution" value="3.00 A"/>
    <property type="chains" value="C=1-340"/>
</dbReference>
<dbReference type="PDB" id="8VVG">
    <property type="method" value="EM"/>
    <property type="resolution" value="3.30 A"/>
    <property type="chains" value="C=1-340"/>
</dbReference>
<dbReference type="PDB" id="8VY7">
    <property type="method" value="EM"/>
    <property type="resolution" value="2.68 A"/>
    <property type="chains" value="B=2-340"/>
</dbReference>
<dbReference type="PDB" id="8VY9">
    <property type="method" value="EM"/>
    <property type="resolution" value="2.88 A"/>
    <property type="chains" value="B=2-340"/>
</dbReference>
<dbReference type="PDB" id="8W87">
    <property type="method" value="EM"/>
    <property type="resolution" value="2.80 A"/>
    <property type="chains" value="B=2-340"/>
</dbReference>
<dbReference type="PDB" id="8W88">
    <property type="method" value="EM"/>
    <property type="resolution" value="2.60 A"/>
    <property type="chains" value="B=2-340"/>
</dbReference>
<dbReference type="PDB" id="8W89">
    <property type="method" value="EM"/>
    <property type="resolution" value="3.00 A"/>
    <property type="chains" value="B=2-340"/>
</dbReference>
<dbReference type="PDB" id="8W8A">
    <property type="method" value="EM"/>
    <property type="resolution" value="2.80 A"/>
    <property type="chains" value="B=2-340"/>
</dbReference>
<dbReference type="PDB" id="8W8B">
    <property type="method" value="EM"/>
    <property type="resolution" value="3.00 A"/>
    <property type="chains" value="B=2-340"/>
</dbReference>
<dbReference type="PDB" id="8W8Q">
    <property type="method" value="EM"/>
    <property type="resolution" value="2.89 A"/>
    <property type="chains" value="B=2-340"/>
</dbReference>
<dbReference type="PDB" id="8W8R">
    <property type="method" value="EM"/>
    <property type="resolution" value="3.30 A"/>
    <property type="chains" value="B=2-340"/>
</dbReference>
<dbReference type="PDB" id="8WC3">
    <property type="method" value="EM"/>
    <property type="resolution" value="3.00 A"/>
    <property type="chains" value="B=2-340"/>
</dbReference>
<dbReference type="PDB" id="8WC4">
    <property type="method" value="EM"/>
    <property type="resolution" value="3.10 A"/>
    <property type="chains" value="B=2-340"/>
</dbReference>
<dbReference type="PDB" id="8WC5">
    <property type="method" value="EM"/>
    <property type="resolution" value="3.30 A"/>
    <property type="chains" value="B=2-340"/>
</dbReference>
<dbReference type="PDB" id="8WC6">
    <property type="method" value="EM"/>
    <property type="resolution" value="3.20 A"/>
    <property type="chains" value="B=2-340"/>
</dbReference>
<dbReference type="PDB" id="8WC7">
    <property type="method" value="EM"/>
    <property type="resolution" value="3.10 A"/>
    <property type="chains" value="B=2-340"/>
</dbReference>
<dbReference type="PDB" id="8WC8">
    <property type="method" value="EM"/>
    <property type="resolution" value="2.90 A"/>
    <property type="chains" value="B=2-340"/>
</dbReference>
<dbReference type="PDB" id="8WC9">
    <property type="method" value="EM"/>
    <property type="resolution" value="3.20 A"/>
    <property type="chains" value="B=2-340"/>
</dbReference>
<dbReference type="PDB" id="8WCA">
    <property type="method" value="EM"/>
    <property type="resolution" value="3.48 A"/>
    <property type="chains" value="B=2-340"/>
</dbReference>
<dbReference type="PDB" id="8WCB">
    <property type="method" value="EM"/>
    <property type="resolution" value="3.10 A"/>
    <property type="chains" value="B=2-340"/>
</dbReference>
<dbReference type="PDB" id="8WGB">
    <property type="method" value="EM"/>
    <property type="resolution" value="3.70 A"/>
    <property type="chains" value="D=2-340"/>
</dbReference>
<dbReference type="PDB" id="8WJX">
    <property type="method" value="EM"/>
    <property type="resolution" value="3.20 A"/>
    <property type="chains" value="B=2-340"/>
</dbReference>
<dbReference type="PDB" id="8WOG">
    <property type="method" value="EM"/>
    <property type="resolution" value="2.97 A"/>
    <property type="chains" value="D=3-340"/>
</dbReference>
<dbReference type="PDB" id="8WP1">
    <property type="method" value="EM"/>
    <property type="resolution" value="3.15 A"/>
    <property type="chains" value="D=3-340"/>
</dbReference>
<dbReference type="PDB" id="8WPU">
    <property type="method" value="EM"/>
    <property type="resolution" value="3.10 A"/>
    <property type="chains" value="C=2-340"/>
</dbReference>
<dbReference type="PDB" id="8WRB">
    <property type="method" value="EM"/>
    <property type="resolution" value="2.91 A"/>
    <property type="chains" value="B=2-340"/>
</dbReference>
<dbReference type="PDB" id="8WSS">
    <property type="method" value="EM"/>
    <property type="resolution" value="3.01 A"/>
    <property type="chains" value="B=2-340"/>
</dbReference>
<dbReference type="PDB" id="8WST">
    <property type="method" value="EM"/>
    <property type="resolution" value="2.40 A"/>
    <property type="chains" value="B=2-340"/>
</dbReference>
<dbReference type="PDB" id="8WW2">
    <property type="method" value="EM"/>
    <property type="resolution" value="2.79 A"/>
    <property type="chains" value="B=2-340"/>
</dbReference>
<dbReference type="PDB" id="8WWH">
    <property type="method" value="EM"/>
    <property type="resolution" value="2.84 A"/>
    <property type="chains" value="B=2-340"/>
</dbReference>
<dbReference type="PDB" id="8WWI">
    <property type="method" value="EM"/>
    <property type="resolution" value="3.43 A"/>
    <property type="chains" value="B=2-340"/>
</dbReference>
<dbReference type="PDB" id="8WWJ">
    <property type="method" value="EM"/>
    <property type="resolution" value="3.03 A"/>
    <property type="chains" value="B=2-340"/>
</dbReference>
<dbReference type="PDB" id="8WWK">
    <property type="method" value="EM"/>
    <property type="resolution" value="2.61 A"/>
    <property type="chains" value="B=2-340"/>
</dbReference>
<dbReference type="PDB" id="8WWL">
    <property type="method" value="EM"/>
    <property type="resolution" value="2.78 A"/>
    <property type="chains" value="B=2-340"/>
</dbReference>
<dbReference type="PDB" id="8WWM">
    <property type="method" value="EM"/>
    <property type="resolution" value="2.81 A"/>
    <property type="chains" value="B=2-340"/>
</dbReference>
<dbReference type="PDB" id="8WWN">
    <property type="method" value="EM"/>
    <property type="resolution" value="2.65 A"/>
    <property type="chains" value="B=2-340"/>
</dbReference>
<dbReference type="PDB" id="8X2K">
    <property type="method" value="EM"/>
    <property type="resolution" value="3.03 A"/>
    <property type="chains" value="C=2-340"/>
</dbReference>
<dbReference type="PDB" id="8X3L">
    <property type="method" value="EM"/>
    <property type="resolution" value="3.13 A"/>
    <property type="chains" value="B=2-340"/>
</dbReference>
<dbReference type="PDB" id="8X79">
    <property type="method" value="EM"/>
    <property type="resolution" value="2.41 A"/>
    <property type="chains" value="B=2-340"/>
</dbReference>
<dbReference type="PDB" id="8X7A">
    <property type="method" value="EM"/>
    <property type="resolution" value="2.56 A"/>
    <property type="chains" value="B=2-340"/>
</dbReference>
<dbReference type="PDB" id="8X8L">
    <property type="method" value="EM"/>
    <property type="resolution" value="2.70 A"/>
    <property type="chains" value="B=2-340"/>
</dbReference>
<dbReference type="PDB" id="8X8N">
    <property type="method" value="EM"/>
    <property type="resolution" value="2.90 A"/>
    <property type="chains" value="B=2-340"/>
</dbReference>
<dbReference type="PDB" id="8XGM">
    <property type="method" value="EM"/>
    <property type="resolution" value="3.29 A"/>
    <property type="chains" value="B=1-340"/>
</dbReference>
<dbReference type="PDB" id="8XGO">
    <property type="method" value="EM"/>
    <property type="resolution" value="2.68 A"/>
    <property type="chains" value="B=2-340"/>
</dbReference>
<dbReference type="PDB" id="8XGS">
    <property type="method" value="EM"/>
    <property type="resolution" value="2.95 A"/>
    <property type="chains" value="B=2-340"/>
</dbReference>
<dbReference type="PDB" id="8XGU">
    <property type="method" value="EM"/>
    <property type="resolution" value="3.00 A"/>
    <property type="chains" value="B=2-340"/>
</dbReference>
<dbReference type="PDB" id="8XIO">
    <property type="method" value="EM"/>
    <property type="resolution" value="2.65 A"/>
    <property type="chains" value="C=2-340"/>
</dbReference>
<dbReference type="PDB" id="8XIP">
    <property type="method" value="EM"/>
    <property type="resolution" value="3.29 A"/>
    <property type="chains" value="C=2-340"/>
</dbReference>
<dbReference type="PDB" id="8XIQ">
    <property type="method" value="EM"/>
    <property type="resolution" value="2.71 A"/>
    <property type="chains" value="C=2-340"/>
</dbReference>
<dbReference type="PDB" id="8XIR">
    <property type="method" value="EM"/>
    <property type="resolution" value="2.52 A"/>
    <property type="chains" value="C=2-340"/>
</dbReference>
<dbReference type="PDB" id="8XJK">
    <property type="method" value="EM"/>
    <property type="resolution" value="2.63 A"/>
    <property type="chains" value="B=2-340"/>
</dbReference>
<dbReference type="PDB" id="8XJL">
    <property type="method" value="EM"/>
    <property type="resolution" value="2.77 A"/>
    <property type="chains" value="B=2-340"/>
</dbReference>
<dbReference type="PDB" id="8XJM">
    <property type="method" value="EM"/>
    <property type="resolution" value="2.85 A"/>
    <property type="chains" value="B=2-340"/>
</dbReference>
<dbReference type="PDB" id="8XJN">
    <property type="method" value="EM"/>
    <property type="resolution" value="3.06 A"/>
    <property type="chains" value="B=2-340"/>
</dbReference>
<dbReference type="PDB" id="8XJO">
    <property type="method" value="EM"/>
    <property type="resolution" value="3.11 A"/>
    <property type="chains" value="B=2-340"/>
</dbReference>
<dbReference type="PDB" id="8XML">
    <property type="method" value="EM"/>
    <property type="resolution" value="2.58 A"/>
    <property type="chains" value="B=1-340"/>
</dbReference>
<dbReference type="PDB" id="8XOF">
    <property type="method" value="EM"/>
    <property type="resolution" value="2.60 A"/>
    <property type="chains" value="B=2-340"/>
</dbReference>
<dbReference type="PDB" id="8XOG">
    <property type="method" value="EM"/>
    <property type="resolution" value="2.90 A"/>
    <property type="chains" value="B=2-340"/>
</dbReference>
<dbReference type="PDB" id="8XOH">
    <property type="method" value="EM"/>
    <property type="resolution" value="3.20 A"/>
    <property type="chains" value="B=2-340"/>
</dbReference>
<dbReference type="PDB" id="8XOI">
    <property type="method" value="EM"/>
    <property type="resolution" value="3.20 A"/>
    <property type="chains" value="B=2-340"/>
</dbReference>
<dbReference type="PDB" id="8XOJ">
    <property type="method" value="EM"/>
    <property type="resolution" value="3.10 A"/>
    <property type="chains" value="B=2-340"/>
</dbReference>
<dbReference type="PDB" id="8XQE">
    <property type="method" value="EM"/>
    <property type="resolution" value="3.48 A"/>
    <property type="chains" value="B=1-340"/>
</dbReference>
<dbReference type="PDB" id="8XQF">
    <property type="method" value="EM"/>
    <property type="resolution" value="3.13 A"/>
    <property type="chains" value="B=1-340"/>
</dbReference>
<dbReference type="PDB" id="8XQL">
    <property type="method" value="EM"/>
    <property type="resolution" value="2.99 A"/>
    <property type="chains" value="B=1-340"/>
</dbReference>
<dbReference type="PDB" id="8XQN">
    <property type="method" value="EM"/>
    <property type="resolution" value="3.05 A"/>
    <property type="chains" value="B=1-340"/>
</dbReference>
<dbReference type="PDB" id="8XQO">
    <property type="method" value="EM"/>
    <property type="resolution" value="2.77 A"/>
    <property type="chains" value="B=1-340"/>
</dbReference>
<dbReference type="PDB" id="8XQP">
    <property type="method" value="EM"/>
    <property type="resolution" value="3.29 A"/>
    <property type="chains" value="B=1-340"/>
</dbReference>
<dbReference type="PDB" id="8XQR">
    <property type="method" value="EM"/>
    <property type="resolution" value="3.20 A"/>
    <property type="chains" value="B=1-340"/>
</dbReference>
<dbReference type="PDB" id="8XQS">
    <property type="method" value="EM"/>
    <property type="resolution" value="3.30 A"/>
    <property type="chains" value="B=1-340"/>
</dbReference>
<dbReference type="PDB" id="8XQT">
    <property type="method" value="EM"/>
    <property type="resolution" value="2.94 A"/>
    <property type="chains" value="B=1-340"/>
</dbReference>
<dbReference type="PDB" id="8XVE">
    <property type="method" value="EM"/>
    <property type="resolution" value="3.00 A"/>
    <property type="chains" value="B=2-340"/>
</dbReference>
<dbReference type="PDB" id="8XVH">
    <property type="method" value="EM"/>
    <property type="resolution" value="3.26 A"/>
    <property type="chains" value="B=2-340"/>
</dbReference>
<dbReference type="PDB" id="8XVI">
    <property type="method" value="EM"/>
    <property type="resolution" value="3.32 A"/>
    <property type="chains" value="B=2-340"/>
</dbReference>
<dbReference type="PDB" id="8XWP">
    <property type="method" value="EM"/>
    <property type="resolution" value="3.21 A"/>
    <property type="chains" value="B=2-340"/>
</dbReference>
<dbReference type="PDB" id="8XWQ">
    <property type="method" value="EM"/>
    <property type="resolution" value="4.60 A"/>
    <property type="chains" value="B=2-340"/>
</dbReference>
<dbReference type="PDB" id="8XWV">
    <property type="method" value="EM"/>
    <property type="resolution" value="3.07 A"/>
    <property type="chains" value="B=2-340"/>
</dbReference>
<dbReference type="PDB" id="8XX3">
    <property type="method" value="EM"/>
    <property type="resolution" value="3.38 A"/>
    <property type="chains" value="B=3-340"/>
</dbReference>
<dbReference type="PDB" id="8XX6">
    <property type="method" value="EM"/>
    <property type="resolution" value="2.99 A"/>
    <property type="chains" value="B=2-340"/>
</dbReference>
<dbReference type="PDB" id="8XX7">
    <property type="method" value="EM"/>
    <property type="resolution" value="3.32 A"/>
    <property type="chains" value="E/H=3-340"/>
</dbReference>
<dbReference type="PDB" id="8XXH">
    <property type="method" value="EM"/>
    <property type="resolution" value="2.80 A"/>
    <property type="chains" value="B=3-340"/>
</dbReference>
<dbReference type="PDB" id="8XXR">
    <property type="method" value="EM"/>
    <property type="resolution" value="3.17 A"/>
    <property type="chains" value="B=2-340"/>
</dbReference>
<dbReference type="PDB" id="8XXU">
    <property type="method" value="EM"/>
    <property type="resolution" value="2.54 A"/>
    <property type="chains" value="C=2-340"/>
</dbReference>
<dbReference type="PDB" id="8XXV">
    <property type="method" value="EM"/>
    <property type="resolution" value="2.33 A"/>
    <property type="chains" value="C=2-340"/>
</dbReference>
<dbReference type="PDB" id="8XXX">
    <property type="method" value="EM"/>
    <property type="resolution" value="3.17 A"/>
    <property type="chains" value="B=2-340"/>
</dbReference>
<dbReference type="PDB" id="8XXZ">
    <property type="method" value="EM"/>
    <property type="resolution" value="3.30 A"/>
    <property type="chains" value="B=3-340"/>
</dbReference>
<dbReference type="PDB" id="8XYD">
    <property type="method" value="EM"/>
    <property type="resolution" value="2.90 A"/>
    <property type="chains" value="B=2-340"/>
</dbReference>
<dbReference type="PDB" id="8XYK">
    <property type="method" value="EM"/>
    <property type="resolution" value="3.03 A"/>
    <property type="chains" value="B=3-340"/>
</dbReference>
<dbReference type="PDB" id="8XZF">
    <property type="method" value="EM"/>
    <property type="resolution" value="3.00 A"/>
    <property type="chains" value="B=2-340"/>
</dbReference>
<dbReference type="PDB" id="8XZG">
    <property type="method" value="EM"/>
    <property type="resolution" value="3.20 A"/>
    <property type="chains" value="B=2-340"/>
</dbReference>
<dbReference type="PDB" id="8XZH">
    <property type="method" value="EM"/>
    <property type="resolution" value="2.60 A"/>
    <property type="chains" value="B=2-340"/>
</dbReference>
<dbReference type="PDB" id="8XZI">
    <property type="method" value="EM"/>
    <property type="resolution" value="2.70 A"/>
    <property type="chains" value="B=2-340"/>
</dbReference>
<dbReference type="PDB" id="8XZJ">
    <property type="method" value="EM"/>
    <property type="resolution" value="3.00 A"/>
    <property type="chains" value="B=2-340"/>
</dbReference>
<dbReference type="PDB" id="8Y01">
    <property type="method" value="EM"/>
    <property type="resolution" value="2.48 A"/>
    <property type="chains" value="B=1-340"/>
</dbReference>
<dbReference type="PDB" id="8Y0N">
    <property type="method" value="EM"/>
    <property type="resolution" value="3.07 A"/>
    <property type="chains" value="B=3-340"/>
</dbReference>
<dbReference type="PDB" id="8Y45">
    <property type="method" value="EM"/>
    <property type="resolution" value="3.45 A"/>
    <property type="chains" value="B=2-340"/>
</dbReference>
<dbReference type="PDB" id="8Y51">
    <property type="method" value="EM"/>
    <property type="resolution" value="3.30 A"/>
    <property type="chains" value="B=2-340"/>
</dbReference>
<dbReference type="PDB" id="8Y52">
    <property type="method" value="EM"/>
    <property type="resolution" value="2.90 A"/>
    <property type="chains" value="B=2-340"/>
</dbReference>
<dbReference type="PDB" id="8Y53">
    <property type="method" value="EM"/>
    <property type="resolution" value="2.93 A"/>
    <property type="chains" value="B=2-340"/>
</dbReference>
<dbReference type="PDB" id="8Y62">
    <property type="method" value="EM"/>
    <property type="resolution" value="3.20 A"/>
    <property type="chains" value="B=2-340"/>
</dbReference>
<dbReference type="PDB" id="8Y63">
    <property type="method" value="EM"/>
    <property type="resolution" value="3.20 A"/>
    <property type="chains" value="B=2-340"/>
</dbReference>
<dbReference type="PDB" id="8YIC">
    <property type="method" value="EM"/>
    <property type="resolution" value="3.47 A"/>
    <property type="chains" value="B=2-340"/>
</dbReference>
<dbReference type="PDB" id="8YKY">
    <property type="method" value="EM"/>
    <property type="resolution" value="2.99 A"/>
    <property type="chains" value="B=1-340"/>
</dbReference>
<dbReference type="PDB" id="8YN2">
    <property type="method" value="EM"/>
    <property type="resolution" value="2.66 A"/>
    <property type="chains" value="B=2-340"/>
</dbReference>
<dbReference type="PDB" id="8YN3">
    <property type="method" value="EM"/>
    <property type="resolution" value="2.56 A"/>
    <property type="chains" value="B=2-340"/>
</dbReference>
<dbReference type="PDB" id="8YN4">
    <property type="method" value="EM"/>
    <property type="resolution" value="2.97 A"/>
    <property type="chains" value="B=2-340"/>
</dbReference>
<dbReference type="PDB" id="8YN5">
    <property type="method" value="EM"/>
    <property type="resolution" value="2.70 A"/>
    <property type="chains" value="B=2-340"/>
</dbReference>
<dbReference type="PDB" id="8YN6">
    <property type="method" value="EM"/>
    <property type="resolution" value="2.77 A"/>
    <property type="chains" value="B=2-340"/>
</dbReference>
<dbReference type="PDB" id="8YN7">
    <property type="method" value="EM"/>
    <property type="resolution" value="2.77 A"/>
    <property type="chains" value="B=2-340"/>
</dbReference>
<dbReference type="PDB" id="8YN8">
    <property type="method" value="EM"/>
    <property type="resolution" value="2.77 A"/>
    <property type="chains" value="B=2-340"/>
</dbReference>
<dbReference type="PDB" id="8YN9">
    <property type="method" value="EM"/>
    <property type="resolution" value="2.30 A"/>
    <property type="chains" value="B=2-340"/>
</dbReference>
<dbReference type="PDB" id="8YNA">
    <property type="method" value="EM"/>
    <property type="resolution" value="2.63 A"/>
    <property type="chains" value="B=2-340"/>
</dbReference>
<dbReference type="PDB" id="8YRG">
    <property type="method" value="EM"/>
    <property type="resolution" value="3.14 A"/>
    <property type="chains" value="C=2-340"/>
</dbReference>
<dbReference type="PDB" id="8YUT">
    <property type="method" value="EM"/>
    <property type="resolution" value="2.70 A"/>
    <property type="chains" value="B=2-340"/>
</dbReference>
<dbReference type="PDB" id="8YUU">
    <property type="method" value="EM"/>
    <property type="resolution" value="2.70 A"/>
    <property type="chains" value="B=2-340"/>
</dbReference>
<dbReference type="PDB" id="8YUV">
    <property type="method" value="EM"/>
    <property type="resolution" value="3.00 A"/>
    <property type="chains" value="B=2-340"/>
</dbReference>
<dbReference type="PDB" id="8YW3">
    <property type="method" value="EM"/>
    <property type="resolution" value="2.68 A"/>
    <property type="chains" value="B=2-340"/>
</dbReference>
<dbReference type="PDB" id="8YW4">
    <property type="method" value="EM"/>
    <property type="resolution" value="3.26 A"/>
    <property type="chains" value="B=3-340"/>
</dbReference>
<dbReference type="PDB" id="8YW5">
    <property type="method" value="EM"/>
    <property type="resolution" value="2.84 A"/>
    <property type="chains" value="B=2-340"/>
</dbReference>
<dbReference type="PDB" id="8YY8">
    <property type="method" value="EM"/>
    <property type="resolution" value="3.22 A"/>
    <property type="chains" value="B=1-340"/>
</dbReference>
<dbReference type="PDB" id="8Z7J">
    <property type="method" value="EM"/>
    <property type="resolution" value="3.12 A"/>
    <property type="chains" value="B=1-340"/>
</dbReference>
<dbReference type="PDB" id="8ZD1">
    <property type="method" value="EM"/>
    <property type="resolution" value="2.60 A"/>
    <property type="chains" value="B=3-340"/>
</dbReference>
<dbReference type="PDB" id="8ZF6">
    <property type="method" value="EM"/>
    <property type="resolution" value="2.98 A"/>
    <property type="chains" value="B=2-340"/>
</dbReference>
<dbReference type="PDB" id="8ZF9">
    <property type="method" value="EM"/>
    <property type="resolution" value="2.56 A"/>
    <property type="chains" value="B=2-340"/>
</dbReference>
<dbReference type="PDB" id="8ZFA">
    <property type="method" value="EM"/>
    <property type="resolution" value="2.96 A"/>
    <property type="chains" value="B=2-340"/>
</dbReference>
<dbReference type="PDB" id="8ZFC">
    <property type="method" value="EM"/>
    <property type="resolution" value="2.68 A"/>
    <property type="chains" value="B=2-340"/>
</dbReference>
<dbReference type="PDB" id="8ZFZ">
    <property type="method" value="EM"/>
    <property type="resolution" value="3.30 A"/>
    <property type="chains" value="B=1-340"/>
</dbReference>
<dbReference type="PDB" id="8ZJD">
    <property type="method" value="EM"/>
    <property type="resolution" value="3.06 A"/>
    <property type="chains" value="B=2-340"/>
</dbReference>
<dbReference type="PDB" id="8ZJE">
    <property type="method" value="EM"/>
    <property type="resolution" value="3.07 A"/>
    <property type="chains" value="B=2-340"/>
</dbReference>
<dbReference type="PDB" id="8ZJG">
    <property type="method" value="EM"/>
    <property type="resolution" value="3.18 A"/>
    <property type="chains" value="B=1-340"/>
</dbReference>
<dbReference type="PDB" id="8ZPS">
    <property type="method" value="EM"/>
    <property type="resolution" value="2.97 A"/>
    <property type="chains" value="B=2-340"/>
</dbReference>
<dbReference type="PDB" id="8ZPT">
    <property type="method" value="EM"/>
    <property type="resolution" value="2.96 A"/>
    <property type="chains" value="B=2-340"/>
</dbReference>
<dbReference type="PDB" id="8ZQE">
    <property type="method" value="EM"/>
    <property type="resolution" value="2.90 A"/>
    <property type="chains" value="B=1-340"/>
</dbReference>
<dbReference type="PDB" id="8ZR5">
    <property type="method" value="EM"/>
    <property type="resolution" value="3.31 A"/>
    <property type="chains" value="B=2-340"/>
</dbReference>
<dbReference type="PDB" id="8ZRK">
    <property type="method" value="EM"/>
    <property type="resolution" value="2.82 A"/>
    <property type="chains" value="B=2-340"/>
</dbReference>
<dbReference type="PDB" id="8ZSJ">
    <property type="method" value="EM"/>
    <property type="resolution" value="2.80 A"/>
    <property type="chains" value="B=2-340"/>
</dbReference>
<dbReference type="PDB" id="8ZSP">
    <property type="method" value="EM"/>
    <property type="resolution" value="3.14 A"/>
    <property type="chains" value="B=2-340"/>
</dbReference>
<dbReference type="PDB" id="8ZSS">
    <property type="method" value="EM"/>
    <property type="resolution" value="3.07 A"/>
    <property type="chains" value="B=2-340"/>
</dbReference>
<dbReference type="PDB" id="8ZSV">
    <property type="method" value="EM"/>
    <property type="resolution" value="2.96 A"/>
    <property type="chains" value="B=2-340"/>
</dbReference>
<dbReference type="PDB" id="8ZX4">
    <property type="method" value="EM"/>
    <property type="resolution" value="2.85 A"/>
    <property type="chains" value="B=2-340"/>
</dbReference>
<dbReference type="PDB" id="8ZX5">
    <property type="method" value="EM"/>
    <property type="resolution" value="3.03 A"/>
    <property type="chains" value="B=2-340"/>
</dbReference>
<dbReference type="PDB" id="9ASB">
    <property type="method" value="EM"/>
    <property type="resolution" value="3.40 A"/>
    <property type="chains" value="B=2-340"/>
</dbReference>
<dbReference type="PDB" id="9AST">
    <property type="method" value="EM"/>
    <property type="resolution" value="3.07 A"/>
    <property type="chains" value="B=2-340"/>
</dbReference>
<dbReference type="PDB" id="9AUC">
    <property type="method" value="EM"/>
    <property type="resolution" value="2.40 A"/>
    <property type="chains" value="B=2-340"/>
</dbReference>
<dbReference type="PDB" id="9AVG">
    <property type="method" value="EM"/>
    <property type="resolution" value="3.60 A"/>
    <property type="chains" value="B=2-340"/>
</dbReference>
<dbReference type="PDB" id="9AXF">
    <property type="method" value="EM"/>
    <property type="resolution" value="3.50 A"/>
    <property type="chains" value="B=2-340"/>
</dbReference>
<dbReference type="PDB" id="9AYF">
    <property type="method" value="EM"/>
    <property type="resolution" value="3.60 A"/>
    <property type="chains" value="B=2-340"/>
</dbReference>
<dbReference type="PDB" id="9B54">
    <property type="method" value="EM"/>
    <property type="resolution" value="2.86 A"/>
    <property type="chains" value="B=2-340"/>
</dbReference>
<dbReference type="PDB" id="9B65">
    <property type="method" value="EM"/>
    <property type="resolution" value="3.03 A"/>
    <property type="chains" value="B=2-340"/>
</dbReference>
<dbReference type="PDB" id="9BHL">
    <property type="method" value="EM"/>
    <property type="resolution" value="2.80 A"/>
    <property type="chains" value="B=2-340"/>
</dbReference>
<dbReference type="PDB" id="9BHM">
    <property type="method" value="EM"/>
    <property type="resolution" value="2.90 A"/>
    <property type="chains" value="B=2-340"/>
</dbReference>
<dbReference type="PDB" id="9BI6">
    <property type="method" value="EM"/>
    <property type="resolution" value="2.90 A"/>
    <property type="chains" value="B=2-340"/>
</dbReference>
<dbReference type="PDB" id="9BIP">
    <property type="method" value="EM"/>
    <property type="resolution" value="2.80 A"/>
    <property type="chains" value="B=2-340"/>
</dbReference>
<dbReference type="PDB" id="9BKJ">
    <property type="method" value="EM"/>
    <property type="resolution" value="2.59 A"/>
    <property type="chains" value="B=2-340"/>
</dbReference>
<dbReference type="PDB" id="9BKK">
    <property type="method" value="EM"/>
    <property type="resolution" value="2.51 A"/>
    <property type="chains" value="B=2-340"/>
</dbReference>
<dbReference type="PDB" id="9BQJ">
    <property type="method" value="EM"/>
    <property type="resolution" value="3.30 A"/>
    <property type="chains" value="B=2-340"/>
</dbReference>
<dbReference type="PDB" id="9D61">
    <property type="method" value="EM"/>
    <property type="resolution" value="3.58 A"/>
    <property type="chains" value="C=1-340"/>
</dbReference>
<dbReference type="PDB" id="9DQH">
    <property type="method" value="EM"/>
    <property type="resolution" value="2.92 A"/>
    <property type="chains" value="C=2-340"/>
</dbReference>
<dbReference type="PDB" id="9DQJ">
    <property type="method" value="EM"/>
    <property type="resolution" value="2.90 A"/>
    <property type="chains" value="C=2-340"/>
</dbReference>
<dbReference type="PDB" id="9EPP">
    <property type="method" value="EM"/>
    <property type="resolution" value="4.06 A"/>
    <property type="chains" value="B=2-340"/>
</dbReference>
<dbReference type="PDB" id="9EPQ">
    <property type="method" value="EM"/>
    <property type="resolution" value="4.15 A"/>
    <property type="chains" value="B=2-340"/>
</dbReference>
<dbReference type="PDB" id="9ERX">
    <property type="method" value="EM"/>
    <property type="resolution" value="2.90 A"/>
    <property type="chains" value="B=2-340"/>
</dbReference>
<dbReference type="PDB" id="9EW2">
    <property type="method" value="EM"/>
    <property type="resolution" value="3.20 A"/>
    <property type="chains" value="B=1-340"/>
</dbReference>
<dbReference type="PDB" id="9GE2">
    <property type="method" value="EM"/>
    <property type="resolution" value="2.51 A"/>
    <property type="chains" value="B=2-340"/>
</dbReference>
<dbReference type="PDB" id="9GE3">
    <property type="method" value="EM"/>
    <property type="resolution" value="2.87 A"/>
    <property type="chains" value="B=2-340"/>
</dbReference>
<dbReference type="PDB" id="9GYO">
    <property type="method" value="EM"/>
    <property type="resolution" value="2.50 A"/>
    <property type="chains" value="B=2-340"/>
</dbReference>
<dbReference type="PDB" id="9IIX">
    <property type="method" value="EM"/>
    <property type="resolution" value="2.89 A"/>
    <property type="chains" value="B=2-340"/>
</dbReference>
<dbReference type="PDB" id="9IJ9">
    <property type="method" value="EM"/>
    <property type="resolution" value="2.70 A"/>
    <property type="chains" value="B=2-340"/>
</dbReference>
<dbReference type="PDB" id="9IQT">
    <property type="method" value="EM"/>
    <property type="resolution" value="2.90 A"/>
    <property type="chains" value="B=2-340"/>
</dbReference>
<dbReference type="PDB" id="9ITB">
    <property type="method" value="EM"/>
    <property type="resolution" value="2.89 A"/>
    <property type="chains" value="B=2-340"/>
</dbReference>
<dbReference type="PDB" id="9ITE">
    <property type="method" value="EM"/>
    <property type="resolution" value="3.06 A"/>
    <property type="chains" value="B=2-340"/>
</dbReference>
<dbReference type="PDB" id="9IV1">
    <property type="method" value="EM"/>
    <property type="resolution" value="2.98 A"/>
    <property type="chains" value="B=2-340"/>
</dbReference>
<dbReference type="PDB" id="9IV2">
    <property type="method" value="EM"/>
    <property type="resolution" value="3.53 A"/>
    <property type="chains" value="B=2-340"/>
</dbReference>
<dbReference type="PDB" id="9IVG">
    <property type="method" value="EM"/>
    <property type="resolution" value="3.00 A"/>
    <property type="chains" value="B=2-340"/>
</dbReference>
<dbReference type="PDB" id="9IVM">
    <property type="method" value="EM"/>
    <property type="resolution" value="3.22 A"/>
    <property type="chains" value="B=2-340"/>
</dbReference>
<dbReference type="PDB" id="9IY8">
    <property type="method" value="EM"/>
    <property type="resolution" value="3.01 A"/>
    <property type="chains" value="B=2-340"/>
</dbReference>
<dbReference type="PDB" id="9IYB">
    <property type="method" value="EM"/>
    <property type="resolution" value="2.82 A"/>
    <property type="chains" value="C=2-340"/>
</dbReference>
<dbReference type="PDB" id="9IZF">
    <property type="method" value="EM"/>
    <property type="resolution" value="3.14 A"/>
    <property type="chains" value="B=2-340"/>
</dbReference>
<dbReference type="PDB" id="9IZG">
    <property type="method" value="EM"/>
    <property type="resolution" value="3.04 A"/>
    <property type="chains" value="B=2-340"/>
</dbReference>
<dbReference type="PDB" id="9IZH">
    <property type="method" value="EM"/>
    <property type="resolution" value="3.04 A"/>
    <property type="chains" value="B=2-340"/>
</dbReference>
<dbReference type="PDB" id="9J31">
    <property type="method" value="EM"/>
    <property type="resolution" value="3.05 A"/>
    <property type="chains" value="B=1-340"/>
</dbReference>
<dbReference type="PDB" id="9JKQ">
    <property type="method" value="EM"/>
    <property type="resolution" value="2.66 A"/>
    <property type="chains" value="B=2-340"/>
</dbReference>
<dbReference type="PDB" id="9JVG">
    <property type="method" value="EM"/>
    <property type="resolution" value="2.76 A"/>
    <property type="chains" value="B=2-340"/>
</dbReference>
<dbReference type="PDB" id="9K1C">
    <property type="method" value="EM"/>
    <property type="resolution" value="3.20 A"/>
    <property type="chains" value="B=1-340"/>
</dbReference>
<dbReference type="PDB" id="9K1D">
    <property type="method" value="EM"/>
    <property type="resolution" value="3.34 A"/>
    <property type="chains" value="B=1-340"/>
</dbReference>
<dbReference type="PDB" id="9K26">
    <property type="method" value="EM"/>
    <property type="resolution" value="3.00 A"/>
    <property type="chains" value="B=2-340"/>
</dbReference>
<dbReference type="PDB" id="9K27">
    <property type="method" value="EM"/>
    <property type="resolution" value="2.68 A"/>
    <property type="chains" value="B=2-340"/>
</dbReference>
<dbReference type="PDB" id="9L3W">
    <property type="method" value="EM"/>
    <property type="resolution" value="3.50 A"/>
    <property type="chains" value="B=1-340"/>
</dbReference>
<dbReference type="PDB" id="9L3Y">
    <property type="method" value="EM"/>
    <property type="resolution" value="3.60 A"/>
    <property type="chains" value="B=1-340"/>
</dbReference>
<dbReference type="PDBsum" id="4KFM"/>
<dbReference type="PDBsum" id="4PNK"/>
<dbReference type="PDBsum" id="5HE0"/>
<dbReference type="PDBsum" id="5HE1"/>
<dbReference type="PDBsum" id="5HE2"/>
<dbReference type="PDBsum" id="5HE3"/>
<dbReference type="PDBsum" id="5UKK"/>
<dbReference type="PDBsum" id="5UKL"/>
<dbReference type="PDBsum" id="5UKM"/>
<dbReference type="PDBsum" id="5UZ7"/>
<dbReference type="PDBsum" id="6B3J"/>
<dbReference type="PDBsum" id="6CRK"/>
<dbReference type="PDBsum" id="6D9H"/>
<dbReference type="PDBsum" id="6DDE"/>
<dbReference type="PDBsum" id="6DDF"/>
<dbReference type="PDBsum" id="6E3Y"/>
<dbReference type="PDBsum" id="6EG8"/>
<dbReference type="PDBsum" id="6G79"/>
<dbReference type="PDBsum" id="6GDG"/>
<dbReference type="PDBsum" id="6KPF"/>
<dbReference type="PDBsum" id="6KPG"/>
<dbReference type="PDBsum" id="6LFM"/>
<dbReference type="PDBsum" id="6LFO"/>
<dbReference type="PDBsum" id="6LI3"/>
<dbReference type="PDBsum" id="6LMK"/>
<dbReference type="PDBsum" id="6LML"/>
<dbReference type="PDBsum" id="6M1H"/>
<dbReference type="PDBsum" id="6M1I"/>
<dbReference type="PDBsum" id="6M8S"/>
<dbReference type="PDBsum" id="6N4B"/>
<dbReference type="PDBsum" id="6NI3"/>
<dbReference type="PDBsum" id="6NIY"/>
<dbReference type="PDBsum" id="6OIJ"/>
<dbReference type="PDBsum" id="6OIK"/>
<dbReference type="PDBsum" id="6OMM"/>
<dbReference type="PDBsum" id="6ORV"/>
<dbReference type="PDBsum" id="6OS9"/>
<dbReference type="PDBsum" id="6OSA"/>
<dbReference type="PDBsum" id="6OT0"/>
<dbReference type="PDBsum" id="6P9X"/>
<dbReference type="PDBsum" id="6P9Y"/>
<dbReference type="PDBsum" id="6PB0"/>
<dbReference type="PDBsum" id="6PB1"/>
<dbReference type="PDBsum" id="6PT0"/>
<dbReference type="PDBsum" id="6UUN"/>
<dbReference type="PDBsum" id="6UUS"/>
<dbReference type="PDBsum" id="6UVA"/>
<dbReference type="PDBsum" id="6VCB"/>
<dbReference type="PDBsum" id="6VMS"/>
<dbReference type="PDBsum" id="6VN7"/>
<dbReference type="PDBsum" id="6WHA"/>
<dbReference type="PDBsum" id="6WHC"/>
<dbReference type="PDBsum" id="6WI9"/>
<dbReference type="PDBsum" id="6WPW"/>
<dbReference type="PDBsum" id="6WZG"/>
<dbReference type="PDBsum" id="6X18"/>
<dbReference type="PDBsum" id="6X19"/>
<dbReference type="PDBsum" id="6X1A"/>
<dbReference type="PDBsum" id="6XBJ"/>
<dbReference type="PDBsum" id="6XBK"/>
<dbReference type="PDBsum" id="6XBL"/>
<dbReference type="PDBsum" id="6XBM"/>
<dbReference type="PDBsum" id="6XOX"/>
<dbReference type="PDBsum" id="7AUE"/>
<dbReference type="PDBsum" id="7BB6"/>
<dbReference type="PDBsum" id="7BB7"/>
<dbReference type="PDBsum" id="7C2E"/>
<dbReference type="PDBsum" id="7CFM"/>
<dbReference type="PDBsum" id="7CFN"/>
<dbReference type="PDBsum" id="7CKW"/>
<dbReference type="PDBsum" id="7CKX"/>
<dbReference type="PDBsum" id="7CKY"/>
<dbReference type="PDBsum" id="7CKZ"/>
<dbReference type="PDBsum" id="7CMU"/>
<dbReference type="PDBsum" id="7CMV"/>
<dbReference type="PDBsum" id="7CRH"/>
<dbReference type="PDBsum" id="7CX2"/>
<dbReference type="PDBsum" id="7CX3"/>
<dbReference type="PDBsum" id="7CX4"/>
<dbReference type="PDBsum" id="7D76"/>
<dbReference type="PDBsum" id="7D77"/>
<dbReference type="PDBsum" id="7D7M"/>
<dbReference type="PDBsum" id="7DB6"/>
<dbReference type="PDBsum" id="7DFL"/>
<dbReference type="PDBsum" id="7E2X"/>
<dbReference type="PDBsum" id="7E2Y"/>
<dbReference type="PDBsum" id="7E2Z"/>
<dbReference type="PDBsum" id="7E32"/>
<dbReference type="PDBsum" id="7E33"/>
<dbReference type="PDBsum" id="7E9G"/>
<dbReference type="PDBsum" id="7E9H"/>
<dbReference type="PDBsum" id="7EB2"/>
<dbReference type="PDBsum" id="7EJ0"/>
<dbReference type="PDBsum" id="7EJ8"/>
<dbReference type="PDBsum" id="7EJA"/>
<dbReference type="PDBsum" id="7EJK"/>
<dbReference type="PDBsum" id="7EJX"/>
<dbReference type="PDBsum" id="7EO2"/>
<dbReference type="PDBsum" id="7EO4"/>
<dbReference type="PDBsum" id="7EPT"/>
<dbReference type="PDBsum" id="7EUO"/>
<dbReference type="PDBsum" id="7EVY"/>
<dbReference type="PDBsum" id="7EVZ"/>
<dbReference type="PDBsum" id="7EW0"/>
<dbReference type="PDBsum" id="7EW1"/>
<dbReference type="PDBsum" id="7EW2"/>
<dbReference type="PDBsum" id="7EW3"/>
<dbReference type="PDBsum" id="7EW4"/>
<dbReference type="PDBsum" id="7EW7"/>
<dbReference type="PDBsum" id="7EXD"/>
<dbReference type="PDBsum" id="7EZH"/>
<dbReference type="PDBsum" id="7EZK"/>
<dbReference type="PDBsum" id="7EZM"/>
<dbReference type="PDBsum" id="7F0T"/>
<dbReference type="PDBsum" id="7F1O"/>
<dbReference type="PDBsum" id="7F1Q"/>
<dbReference type="PDBsum" id="7F1R"/>
<dbReference type="PDBsum" id="7F1S"/>
<dbReference type="PDBsum" id="7F1Z"/>
<dbReference type="PDBsum" id="7F23"/>
<dbReference type="PDBsum" id="7F24"/>
<dbReference type="PDBsum" id="7F4D"/>
<dbReference type="PDBsum" id="7F4F"/>
<dbReference type="PDBsum" id="7F4H"/>
<dbReference type="PDBsum" id="7F4I"/>
<dbReference type="PDBsum" id="7F53"/>
<dbReference type="PDBsum" id="7F54"/>
<dbReference type="PDBsum" id="7F55"/>
<dbReference type="PDBsum" id="7F58"/>
<dbReference type="PDBsum" id="7F6G"/>
<dbReference type="PDBsum" id="7F6H"/>
<dbReference type="PDBsum" id="7F6I"/>
<dbReference type="PDBsum" id="7F8V"/>
<dbReference type="PDBsum" id="7F8W"/>
<dbReference type="PDBsum" id="7F9Y"/>
<dbReference type="PDBsum" id="7F9Z"/>
<dbReference type="PDBsum" id="7JHJ"/>
<dbReference type="PDBsum" id="7JOZ"/>
<dbReference type="PDBsum" id="7JV5"/>
<dbReference type="PDBsum" id="7JVP"/>
<dbReference type="PDBsum" id="7JVQ"/>
<dbReference type="PDBsum" id="7JVR"/>
<dbReference type="PDBsum" id="7K7L"/>
<dbReference type="PDBsum" id="7K7Z"/>
<dbReference type="PDBsum" id="7KH0"/>
<dbReference type="PDBsum" id="7KI0"/>
<dbReference type="PDBsum" id="7KI1"/>
<dbReference type="PDBsum" id="7L0P"/>
<dbReference type="PDBsum" id="7L0Q"/>
<dbReference type="PDBsum" id="7L0R"/>
<dbReference type="PDBsum" id="7L0S"/>
<dbReference type="PDBsum" id="7L1U"/>
<dbReference type="PDBsum" id="7L1V"/>
<dbReference type="PDBsum" id="7LCI"/>
<dbReference type="PDBsum" id="7LD3"/>
<dbReference type="PDBsum" id="7LD4"/>
<dbReference type="PDBsum" id="7LLL"/>
<dbReference type="PDBsum" id="7LLY"/>
<dbReference type="PDBsum" id="7MTS"/>
<dbReference type="PDBsum" id="7NA7"/>
<dbReference type="PDBsum" id="7NA8"/>
<dbReference type="PDBsum" id="7P00"/>
<dbReference type="PDBsum" id="7P02"/>
<dbReference type="PDBsum" id="7QVM"/>
<dbReference type="PDBsum" id="7RA3"/>
<dbReference type="PDBsum" id="7RAN"/>
<dbReference type="PDBsum" id="7RBT"/>
<dbReference type="PDBsum" id="7RG9"/>
<dbReference type="PDBsum" id="7RGP"/>
<dbReference type="PDBsum" id="7RKF"/>
<dbReference type="PDBsum" id="7RKM"/>
<dbReference type="PDBsum" id="7RKN"/>
<dbReference type="PDBsum" id="7RKX"/>
<dbReference type="PDBsum" id="7RKY"/>
<dbReference type="PDBsum" id="7RMG"/>
<dbReference type="PDBsum" id="7RMH"/>
<dbReference type="PDBsum" id="7RMI"/>
<dbReference type="PDBsum" id="7RTB"/>
<dbReference type="PDBsum" id="7RYC"/>
<dbReference type="PDBsum" id="7S1M"/>
<dbReference type="PDBsum" id="7S3I"/>
<dbReference type="PDBsum" id="7S8L"/>
<dbReference type="PDBsum" id="7S8M"/>
<dbReference type="PDBsum" id="7S8N"/>
<dbReference type="PDBsum" id="7S8O"/>
<dbReference type="PDBsum" id="7S8P"/>
<dbReference type="PDBsum" id="7SBF"/>
<dbReference type="PDBsum" id="7SCG"/>
<dbReference type="PDBsum" id="7SF7"/>
<dbReference type="PDBsum" id="7SF8"/>
<dbReference type="PDBsum" id="7SR8"/>
<dbReference type="PDBsum" id="7SRR"/>
<dbReference type="PDBsum" id="7T10"/>
<dbReference type="PDBsum" id="7T11"/>
<dbReference type="PDBsum" id="7T2G"/>
<dbReference type="PDBsum" id="7T2H"/>
<dbReference type="PDBsum" id="7T6B"/>
<dbReference type="PDBsum" id="7T8X"/>
<dbReference type="PDBsum" id="7T90"/>
<dbReference type="PDBsum" id="7T94"/>
<dbReference type="PDBsum" id="7T96"/>
<dbReference type="PDBsum" id="7T9I"/>
<dbReference type="PDBsum" id="7T9N"/>
<dbReference type="PDBsum" id="7TMW"/>
<dbReference type="PDBsum" id="7TRK"/>
<dbReference type="PDBsum" id="7TRP"/>
<dbReference type="PDBsum" id="7TRQ"/>
<dbReference type="PDBsum" id="7TRS"/>
<dbReference type="PDBsum" id="7TUZ"/>
<dbReference type="PDBsum" id="7TYF"/>
<dbReference type="PDBsum" id="7TYH"/>
<dbReference type="PDBsum" id="7TYI"/>
<dbReference type="PDBsum" id="7TYL"/>
<dbReference type="PDBsum" id="7TYN"/>
<dbReference type="PDBsum" id="7TYO"/>
<dbReference type="PDBsum" id="7TYW"/>
<dbReference type="PDBsum" id="7TYX"/>
<dbReference type="PDBsum" id="7TYY"/>
<dbReference type="PDBsum" id="7TZF"/>
<dbReference type="PDBsum" id="7U2K"/>
<dbReference type="PDBsum" id="7U2L"/>
<dbReference type="PDBsum" id="7UM5"/>
<dbReference type="PDBsum" id="7UM6"/>
<dbReference type="PDBsum" id="7UM7"/>
<dbReference type="PDBsum" id="7UTZ"/>
<dbReference type="PDBsum" id="7V68"/>
<dbReference type="PDBsum" id="7V69"/>
<dbReference type="PDBsum" id="7V6A"/>
<dbReference type="PDBsum" id="7VDH"/>
<dbReference type="PDBsum" id="7VDL"/>
<dbReference type="PDBsum" id="7VDM"/>
<dbReference type="PDBsum" id="7VFX"/>
<dbReference type="PDBsum" id="7VGX"/>
<dbReference type="PDBsum" id="7VIE"/>
<dbReference type="PDBsum" id="7VIF"/>
<dbReference type="PDBsum" id="7VIG"/>
<dbReference type="PDBsum" id="7VIH"/>
<dbReference type="PDBsum" id="7VKT"/>
<dbReference type="PDBsum" id="7VL8"/>
<dbReference type="PDBsum" id="7VL9"/>
<dbReference type="PDBsum" id="7VLA"/>
<dbReference type="PDBsum" id="7VUG"/>
<dbReference type="PDBsum" id="7VUH"/>
<dbReference type="PDBsum" id="7VUI"/>
<dbReference type="PDBsum" id="7VUJ"/>
<dbReference type="PDBsum" id="7VUY"/>
<dbReference type="PDBsum" id="7VUZ"/>
<dbReference type="PDBsum" id="7VV3"/>
<dbReference type="PDBsum" id="7VV5"/>
<dbReference type="PDBsum" id="7W0L"/>
<dbReference type="PDBsum" id="7W0M"/>
<dbReference type="PDBsum" id="7W0N"/>
<dbReference type="PDBsum" id="7W0O"/>
<dbReference type="PDBsum" id="7W0P"/>
<dbReference type="PDBsum" id="7W2Z"/>
<dbReference type="PDBsum" id="7W3Z"/>
<dbReference type="PDBsum" id="7W40"/>
<dbReference type="PDBsum" id="7W53"/>
<dbReference type="PDBsum" id="7W55"/>
<dbReference type="PDBsum" id="7W56"/>
<dbReference type="PDBsum" id="7W57"/>
<dbReference type="PDBsum" id="7W6P"/>
<dbReference type="PDBsum" id="7W7E"/>
<dbReference type="PDBsum" id="7WCM"/>
<dbReference type="PDBsum" id="7WCN"/>
<dbReference type="PDBsum" id="7WF7"/>
<dbReference type="PDBsum" id="7WJ5"/>
<dbReference type="PDBsum" id="7WKD"/>
<dbReference type="PDBsum" id="7WU2"/>
<dbReference type="PDBsum" id="7WU3"/>
<dbReference type="PDBsum" id="7WU4"/>
<dbReference type="PDBsum" id="7WU5"/>
<dbReference type="PDBsum" id="7WU9"/>
<dbReference type="PDBsum" id="7WUI"/>
<dbReference type="PDBsum" id="7WUJ"/>
<dbReference type="PDBsum" id="7WUQ"/>
<dbReference type="PDBsum" id="7WV9"/>
<dbReference type="PDBsum" id="7WVU"/>
<dbReference type="PDBsum" id="7WVV"/>
<dbReference type="PDBsum" id="7WVW"/>
<dbReference type="PDBsum" id="7WVX"/>
<dbReference type="PDBsum" id="7WVY"/>
<dbReference type="PDBsum" id="7WXU"/>
<dbReference type="PDBsum" id="7WXW"/>
<dbReference type="PDBsum" id="7WY0"/>
<dbReference type="PDBsum" id="7WY5"/>
<dbReference type="PDBsum" id="7WY8"/>
<dbReference type="PDBsum" id="7WYB"/>
<dbReference type="PDBsum" id="7WZ4"/>
<dbReference type="PDBsum" id="7WZ7"/>
<dbReference type="PDBsum" id="7X10"/>
<dbReference type="PDBsum" id="7X2C"/>
<dbReference type="PDBsum" id="7X2D"/>
<dbReference type="PDBsum" id="7X2F"/>
<dbReference type="PDBsum" id="7X2V"/>
<dbReference type="PDBsum" id="7X5H"/>
<dbReference type="PDBsum" id="7X9A"/>
<dbReference type="PDBsum" id="7X9B"/>
<dbReference type="PDBsum" id="7X9C"/>
<dbReference type="PDBsum" id="7X9Y"/>
<dbReference type="PDBsum" id="7XA3"/>
<dbReference type="PDBsum" id="7XBD"/>
<dbReference type="PDBsum" id="7XBW"/>
<dbReference type="PDBsum" id="7XBX"/>
<dbReference type="PDBsum" id="7XJJ"/>
<dbReference type="PDBsum" id="7XJK"/>
<dbReference type="PDBsum" id="7XJL"/>
<dbReference type="PDBsum" id="7XK2"/>
<dbReference type="PDBsum" id="7XK8"/>
<dbReference type="PDBsum" id="7XKD"/>
<dbReference type="PDBsum" id="7XKE"/>
<dbReference type="PDBsum" id="7XKF"/>
<dbReference type="PDBsum" id="7XMR"/>
<dbReference type="PDBsum" id="7XMS"/>
<dbReference type="PDBsum" id="7XMT"/>
<dbReference type="PDBsum" id="7XOU"/>
<dbReference type="PDBsum" id="7XOV"/>
<dbReference type="PDBsum" id="7XOW"/>
<dbReference type="PDBsum" id="7XP4"/>
<dbReference type="PDBsum" id="7XP5"/>
<dbReference type="PDBsum" id="7XP6"/>
<dbReference type="PDBsum" id="7XT8"/>
<dbReference type="PDBsum" id="7XT9"/>
<dbReference type="PDBsum" id="7XTA"/>
<dbReference type="PDBsum" id="7XTB"/>
<dbReference type="PDBsum" id="7XTC"/>
<dbReference type="PDBsum" id="7XTQ"/>
<dbReference type="PDBsum" id="7XV3"/>
<dbReference type="PDBsum" id="7XW5"/>
<dbReference type="PDBsum" id="7XW6"/>
<dbReference type="PDBsum" id="7XXH"/>
<dbReference type="PDBsum" id="7XXI"/>
<dbReference type="PDBsum" id="7XY6"/>
<dbReference type="PDBsum" id="7XY7"/>
<dbReference type="PDBsum" id="7XZ5"/>
<dbReference type="PDBsum" id="7XZ6"/>
<dbReference type="PDBsum" id="7Y1F"/>
<dbReference type="PDBsum" id="7Y24"/>
<dbReference type="PDBsum" id="7Y26"/>
<dbReference type="PDBsum" id="7Y27"/>
<dbReference type="PDBsum" id="7Y3G"/>
<dbReference type="PDBsum" id="7Y64"/>
<dbReference type="PDBsum" id="7Y65"/>
<dbReference type="PDBsum" id="7Y66"/>
<dbReference type="PDBsum" id="7Y67"/>
<dbReference type="PDBsum" id="7Y89"/>
<dbReference type="PDBsum" id="7YAC"/>
<dbReference type="PDBsum" id="7YAE"/>
<dbReference type="PDBsum" id="7YDH"/>
<dbReference type="PDBsum" id="7YDJ"/>
<dbReference type="PDBsum" id="7YDM"/>
<dbReference type="PDBsum" id="7YDP"/>
<dbReference type="PDBsum" id="7YFC"/>
<dbReference type="PDBsum" id="7YFD"/>
<dbReference type="PDBsum" id="7YK6"/>
<dbReference type="PDBsum" id="7YK7"/>
<dbReference type="PDBsum" id="7YKD"/>
<dbReference type="PDBsum" id="7YON"/>
<dbReference type="PDBsum" id="7YOO"/>
<dbReference type="PDBsum" id="7YP7"/>
<dbReference type="PDBsum" id="7YS6"/>
<dbReference type="PDBsum" id="8DDW"/>
<dbReference type="PDBsum" id="8DDX"/>
<dbReference type="PDBsum" id="8DPF"/>
<dbReference type="PDBsum" id="8DPG"/>
<dbReference type="PDBsum" id="8DPH"/>
<dbReference type="PDBsum" id="8DPI"/>
<dbReference type="PDBsum" id="8DWC"/>
<dbReference type="PDBsum" id="8DWG"/>
<dbReference type="PDBsum" id="8DWH"/>
<dbReference type="PDBsum" id="8DZP"/>
<dbReference type="PDBsum" id="8DZQ"/>
<dbReference type="PDBsum" id="8DZR"/>
<dbReference type="PDBsum" id="8DZS"/>
<dbReference type="PDBsum" id="8E3X"/>
<dbReference type="PDBsum" id="8E3Y"/>
<dbReference type="PDBsum" id="8E3Z"/>
<dbReference type="PDBsum" id="8E9W"/>
<dbReference type="PDBsum" id="8E9X"/>
<dbReference type="PDBsum" id="8E9Y"/>
<dbReference type="PDBsum" id="8E9Z"/>
<dbReference type="PDBsum" id="8EIT"/>
<dbReference type="PDBsum" id="8EJC"/>
<dbReference type="PDBsum" id="8EJK"/>
<dbReference type="PDBsum" id="8EMW"/>
<dbReference type="PDBsum" id="8EMX"/>
<dbReference type="PDBsum" id="8F0J"/>
<dbReference type="PDBsum" id="8F0K"/>
<dbReference type="PDBsum" id="8F2A"/>
<dbReference type="PDBsum" id="8F2B"/>
<dbReference type="PDBsum" id="8F76"/>
<dbReference type="PDBsum" id="8FEG"/>
<dbReference type="PDBsum" id="8FLQ"/>
<dbReference type="PDBsum" id="8FLR"/>
<dbReference type="PDBsum" id="8FLS"/>
<dbReference type="PDBsum" id="8FLT"/>
<dbReference type="PDBsum" id="8FLU"/>
<dbReference type="PDBsum" id="8FMZ"/>
<dbReference type="PDBsum" id="8FN0"/>
<dbReference type="PDBsum" id="8FN1"/>
<dbReference type="PDBsum" id="8FU6"/>
<dbReference type="PDBsum" id="8FX5"/>
<dbReference type="PDBsum" id="8FY8"/>
<dbReference type="PDBsum" id="8FYE"/>
<dbReference type="PDBsum" id="8FYL"/>
<dbReference type="PDBsum" id="8FYT"/>
<dbReference type="PDBsum" id="8FYX"/>
<dbReference type="PDBsum" id="8G05"/>
<dbReference type="PDBsum" id="8G2Y"/>
<dbReference type="PDBsum" id="8G59"/>
<dbReference type="PDBsum" id="8G94"/>
<dbReference type="PDBsum" id="8GAG"/>
<dbReference type="PDBsum" id="8GCM"/>
<dbReference type="PDBsum" id="8GCP"/>
<dbReference type="PDBsum" id="8GD9"/>
<dbReference type="PDBsum" id="8GDA"/>
<dbReference type="PDBsum" id="8GDB"/>
<dbReference type="PDBsum" id="8GDC"/>
<dbReference type="PDBsum" id="8GDZ"/>
<dbReference type="PDBsum" id="8GE1"/>
<dbReference type="PDBsum" id="8GE2"/>
<dbReference type="PDBsum" id="8GE3"/>
<dbReference type="PDBsum" id="8GE4"/>
<dbReference type="PDBsum" id="8GE5"/>
<dbReference type="PDBsum" id="8GE6"/>
<dbReference type="PDBsum" id="8GE7"/>
<dbReference type="PDBsum" id="8GE8"/>
<dbReference type="PDBsum" id="8GE9"/>
<dbReference type="PDBsum" id="8GEA"/>
<dbReference type="PDBsum" id="8GEB"/>
<dbReference type="PDBsum" id="8GEC"/>
<dbReference type="PDBsum" id="8GED"/>
<dbReference type="PDBsum" id="8GEE"/>
<dbReference type="PDBsum" id="8GEF"/>
<dbReference type="PDBsum" id="8GEG"/>
<dbReference type="PDBsum" id="8GEH"/>
<dbReference type="PDBsum" id="8GEI"/>
<dbReference type="PDBsum" id="8GEJ"/>
<dbReference type="PDBsum" id="8GFV"/>
<dbReference type="PDBsum" id="8GFW"/>
<dbReference type="PDBsum" id="8GFX"/>
<dbReference type="PDBsum" id="8GFY"/>
<dbReference type="PDBsum" id="8GFZ"/>
<dbReference type="PDBsum" id="8GG0"/>
<dbReference type="PDBsum" id="8GG1"/>
<dbReference type="PDBsum" id="8GG2"/>
<dbReference type="PDBsum" id="8GG3"/>
<dbReference type="PDBsum" id="8GG4"/>
<dbReference type="PDBsum" id="8GG5"/>
<dbReference type="PDBsum" id="8GG6"/>
<dbReference type="PDBsum" id="8GG7"/>
<dbReference type="PDBsum" id="8GG8"/>
<dbReference type="PDBsum" id="8GG9"/>
<dbReference type="PDBsum" id="8GGA"/>
<dbReference type="PDBsum" id="8GGB"/>
<dbReference type="PDBsum" id="8GGC"/>
<dbReference type="PDBsum" id="8GGE"/>
<dbReference type="PDBsum" id="8GGF"/>
<dbReference type="PDBsum" id="8GHV"/>
<dbReference type="PDBsum" id="8GUQ"/>
<dbReference type="PDBsum" id="8GUR"/>
<dbReference type="PDBsum" id="8GUS"/>
<dbReference type="PDBsum" id="8GUT"/>
<dbReference type="PDBsum" id="8GY7"/>
<dbReference type="PDBsum" id="8H0P"/>
<dbReference type="PDBsum" id="8H0Q"/>
<dbReference type="PDBsum" id="8H2G"/>
<dbReference type="PDBsum" id="8H4I"/>
<dbReference type="PDBsum" id="8H4K"/>
<dbReference type="PDBsum" id="8H4L"/>
<dbReference type="PDBsum" id="8H8J"/>
<dbReference type="PDBsum" id="8HBD"/>
<dbReference type="PDBsum" id="8HCQ"/>
<dbReference type="PDBsum" id="8HCX"/>
<dbReference type="PDBsum" id="8HDO"/>
<dbReference type="PDBsum" id="8HDP"/>
<dbReference type="PDBsum" id="8HIX"/>
<dbReference type="PDBsum" id="8HJ0"/>
<dbReference type="PDBsum" id="8HJ1"/>
<dbReference type="PDBsum" id="8HJ2"/>
<dbReference type="PDBsum" id="8HJ5"/>
<dbReference type="PDBsum" id="8HMP"/>
<dbReference type="PDBsum" id="8HMV"/>
<dbReference type="PDBsum" id="8HN8"/>
<dbReference type="PDBsum" id="8HNK"/>
<dbReference type="PDBsum" id="8HNL"/>
<dbReference type="PDBsum" id="8HNM"/>
<dbReference type="PDBsum" id="8HOC"/>
<dbReference type="PDBsum" id="8HPT"/>
<dbReference type="PDBsum" id="8HQC"/>
<dbReference type="PDBsum" id="8HQE"/>
<dbReference type="PDBsum" id="8HQM"/>
<dbReference type="PDBsum" id="8HQN"/>
<dbReference type="PDBsum" id="8HS3"/>
<dbReference type="PDBsum" id="8HSC"/>
<dbReference type="PDBsum" id="8HTI"/>
<dbReference type="PDBsum" id="8HVI"/>
<dbReference type="PDBsum" id="8I2G"/>
<dbReference type="PDBsum" id="8I7V"/>
<dbReference type="PDBsum" id="8I7W"/>
<dbReference type="PDBsum" id="8I95"/>
<dbReference type="PDBsum" id="8I97"/>
<dbReference type="PDBsum" id="8I9A"/>
<dbReference type="PDBsum" id="8I9L"/>
<dbReference type="PDBsum" id="8I9S"/>
<dbReference type="PDBsum" id="8IA2"/>
<dbReference type="PDBsum" id="8IA7"/>
<dbReference type="PDBsum" id="8IA8"/>
<dbReference type="PDBsum" id="8IBU"/>
<dbReference type="PDBsum" id="8IBV"/>
<dbReference type="PDBsum" id="8IC0"/>
<dbReference type="PDBsum" id="8ID3"/>
<dbReference type="PDBsum" id="8ID4"/>
<dbReference type="PDBsum" id="8ID6"/>
<dbReference type="PDBsum" id="8ID8"/>
<dbReference type="PDBsum" id="8ID9"/>
<dbReference type="PDBsum" id="8IEC"/>
<dbReference type="PDBsum" id="8IED"/>
<dbReference type="PDBsum" id="8IJ3"/>
<dbReference type="PDBsum" id="8IJA"/>
<dbReference type="PDBsum" id="8IJB"/>
<dbReference type="PDBsum" id="8IJD"/>
<dbReference type="PDBsum" id="8IKG"/>
<dbReference type="PDBsum" id="8IKH"/>
<dbReference type="PDBsum" id="8IKL"/>
<dbReference type="PDBsum" id="8INR"/>
<dbReference type="PDBsum" id="8IOC"/>
<dbReference type="PDBsum" id="8IOD"/>
<dbReference type="PDBsum" id="8IQ4"/>
<dbReference type="PDBsum" id="8IQ6"/>
<dbReference type="PDBsum" id="8IRR"/>
<dbReference type="PDBsum" id="8IRS"/>
<dbReference type="PDBsum" id="8IRT"/>
<dbReference type="PDBsum" id="8IRU"/>
<dbReference type="PDBsum" id="8IRV"/>
<dbReference type="PDBsum" id="8ITF"/>
<dbReference type="PDBsum" id="8IU2"/>
<dbReference type="PDBsum" id="8IUK"/>
<dbReference type="PDBsum" id="8IUL"/>
<dbReference type="PDBsum" id="8IUM"/>
<dbReference type="PDBsum" id="8IW1"/>
<dbReference type="PDBsum" id="8IW4"/>
<dbReference type="PDBsum" id="8IW7"/>
<dbReference type="PDBsum" id="8IW9"/>
<dbReference type="PDBsum" id="8IY9"/>
<dbReference type="PDBsum" id="8IYH"/>
<dbReference type="PDBsum" id="8IYS"/>
<dbReference type="PDBsum" id="8IYW"/>
<dbReference type="PDBsum" id="8IZ4"/>
<dbReference type="PDBsum" id="8IZB"/>
<dbReference type="PDBsum" id="8J18"/>
<dbReference type="PDBsum" id="8J19"/>
<dbReference type="PDBsum" id="8J1A"/>
<dbReference type="PDBsum" id="8J20"/>
<dbReference type="PDBsum" id="8J21"/>
<dbReference type="PDBsum" id="8J22"/>
<dbReference type="PDBsum" id="8J23"/>
<dbReference type="PDBsum" id="8J24"/>
<dbReference type="PDBsum" id="8J6D"/>
<dbReference type="PDBsum" id="8J6I"/>
<dbReference type="PDBsum" id="8J6J"/>
<dbReference type="PDBsum" id="8J6L"/>
<dbReference type="PDBsum" id="8J6P"/>
<dbReference type="PDBsum" id="8J6Q"/>
<dbReference type="PDBsum" id="8J6R"/>
<dbReference type="PDBsum" id="8J9N"/>
<dbReference type="PDBsum" id="8JD3"/>
<dbReference type="PDBsum" id="8JD5"/>
<dbReference type="PDBsum" id="8JD6"/>
<dbReference type="PDBsum" id="8JEF"/>
<dbReference type="PDBsum" id="8JEI"/>
<dbReference type="PDBsum" id="8JER"/>
<dbReference type="PDBsum" id="8JGB"/>
<dbReference type="PDBsum" id="8JGF"/>
<dbReference type="PDBsum" id="8JGG"/>
<dbReference type="PDBsum" id="8JHB"/>
<dbReference type="PDBsum" id="8JHI"/>
<dbReference type="PDBsum" id="8JHN"/>
<dbReference type="PDBsum" id="8JHY"/>
<dbReference type="PDBsum" id="8JII"/>
<dbReference type="PDBsum" id="8JIL"/>
<dbReference type="PDBsum" id="8JIM"/>
<dbReference type="PDBsum" id="8JJP"/>
<dbReference type="PDBsum" id="8JKB"/>
<dbReference type="PDBsum" id="8JLJ"/>
<dbReference type="PDBsum" id="8JLK"/>
<dbReference type="PDBsum" id="8JLN"/>
<dbReference type="PDBsum" id="8JLO"/>
<dbReference type="PDBsum" id="8JLP"/>
<dbReference type="PDBsum" id="8JLQ"/>
<dbReference type="PDBsum" id="8JLR"/>
<dbReference type="PDBsum" id="8JLZ"/>
<dbReference type="PDBsum" id="8JPN"/>
<dbReference type="PDBsum" id="8JPP"/>
<dbReference type="PDBsum" id="8JR9"/>
<dbReference type="PDBsum" id="8JSO"/>
<dbReference type="PDBsum" id="8JSP"/>
<dbReference type="PDBsum" id="8JSR"/>
<dbReference type="PDBsum" id="8JT6"/>
<dbReference type="PDBsum" id="8JXT"/>
<dbReference type="PDBsum" id="8JXV"/>
<dbReference type="PDBsum" id="8JXW"/>
<dbReference type="PDBsum" id="8JXX"/>
<dbReference type="PDBsum" id="8JZ7"/>
<dbReference type="PDBsum" id="8JZP"/>
<dbReference type="PDBsum" id="8JZZ"/>
<dbReference type="PDBsum" id="8K2X"/>
<dbReference type="PDBsum" id="8K3Z"/>
<dbReference type="PDBsum" id="8K4N"/>
<dbReference type="PDBsum" id="8K4O"/>
<dbReference type="PDBsum" id="8K4P"/>
<dbReference type="PDBsum" id="8K4S"/>
<dbReference type="PDBsum" id="8K6M"/>
<dbReference type="PDBsum" id="8K6N"/>
<dbReference type="PDBsum" id="8K6O"/>
<dbReference type="PDBsum" id="8K8J"/>
<dbReference type="PDBsum" id="8K9K"/>
<dbReference type="PDBsum" id="8K9L"/>
<dbReference type="PDBsum" id="8KFX"/>
<dbReference type="PDBsum" id="8KFY"/>
<dbReference type="PDBsum" id="8KFZ"/>
<dbReference type="PDBsum" id="8KGG"/>
<dbReference type="PDBsum" id="8KGK"/>
<dbReference type="PDBsum" id="8KH4"/>
<dbReference type="PDBsum" id="8KH5"/>
<dbReference type="PDBsum" id="8PJK"/>
<dbReference type="PDBsum" id="8PKM"/>
<dbReference type="PDBsum" id="8PM2"/>
<dbReference type="PDBsum" id="8POK"/>
<dbReference type="PDBsum" id="8QJ2"/>
<dbReference type="PDBsum" id="8RQL"/>
<dbReference type="PDBsum" id="8SAI"/>
<dbReference type="PDBsum" id="8SG1"/>
<dbReference type="PDBsum" id="8SL3"/>
<dbReference type="PDBsum" id="8SMV"/>
<dbReference type="PDBsum" id="8SZG"/>
<dbReference type="PDBsum" id="8SZH"/>
<dbReference type="PDBsum" id="8SZI"/>
<dbReference type="PDBsum" id="8T3O"/>
<dbReference type="PDBsum" id="8T3Q"/>
<dbReference type="PDBsum" id="8T3S"/>
<dbReference type="PDBsum" id="8T3V"/>
<dbReference type="PDBsum" id="8TB0"/>
<dbReference type="PDBsum" id="8THK"/>
<dbReference type="PDBsum" id="8THL"/>
<dbReference type="PDBsum" id="8TYW"/>
<dbReference type="PDBsum" id="8TZQ"/>
<dbReference type="PDBsum" id="8U02"/>
<dbReference type="PDBsum" id="8U1U"/>
<dbReference type="PDBsum" id="8U26"/>
<dbReference type="PDBsum" id="8U4N"/>
<dbReference type="PDBsum" id="8U4O"/>
<dbReference type="PDBsum" id="8U4P"/>
<dbReference type="PDBsum" id="8U4Q"/>
<dbReference type="PDBsum" id="8U7Z"/>
<dbReference type="PDBsum" id="8U81"/>
<dbReference type="PDBsum" id="8U82"/>
<dbReference type="PDBsum" id="8U83"/>
<dbReference type="PDBsum" id="8U84"/>
<dbReference type="PDBsum" id="8U8F"/>
<dbReference type="PDBsum" id="8UGY"/>
<dbReference type="PDBsum" id="8UH3"/>
<dbReference type="PDBsum" id="8UHB"/>
<dbReference type="PDBsum" id="8UNL"/>
<dbReference type="PDBsum" id="8UNM"/>
<dbReference type="PDBsum" id="8UNN"/>
<dbReference type="PDBsum" id="8UNO"/>
<dbReference type="PDBsum" id="8UNP"/>
<dbReference type="PDBsum" id="8UNQ"/>
<dbReference type="PDBsum" id="8UNR"/>
<dbReference type="PDBsum" id="8UNS"/>
<dbReference type="PDBsum" id="8UNT"/>
<dbReference type="PDBsum" id="8UNU"/>
<dbReference type="PDBsum" id="8UNV"/>
<dbReference type="PDBsum" id="8UNW"/>
<dbReference type="PDBsum" id="8UNX"/>
<dbReference type="PDBsum" id="8UNY"/>
<dbReference type="PDBsum" id="8UNZ"/>
<dbReference type="PDBsum" id="8UO0"/>
<dbReference type="PDBsum" id="8UO1"/>
<dbReference type="PDBsum" id="8UO2"/>
<dbReference type="PDBsum" id="8UO3"/>
<dbReference type="PDBsum" id="8UO4"/>
<dbReference type="PDBsum" id="8UQO"/>
<dbReference type="PDBsum" id="8UTD"/>
<dbReference type="PDBsum" id="8UUJ"/>
<dbReference type="PDBsum" id="8UWL"/>
<dbReference type="PDBsum" id="8UXV"/>
<dbReference type="PDBsum" id="8UXY"/>
<dbReference type="PDBsum" id="8UY0"/>
<dbReference type="PDBsum" id="8UYQ"/>
<dbReference type="PDBsum" id="8V6U"/>
<dbReference type="PDBsum" id="8VHF"/>
<dbReference type="PDBsum" id="8VVE"/>
<dbReference type="PDBsum" id="8VVF"/>
<dbReference type="PDBsum" id="8VVG"/>
<dbReference type="PDBsum" id="8VY7"/>
<dbReference type="PDBsum" id="8VY9"/>
<dbReference type="PDBsum" id="8W87"/>
<dbReference type="PDBsum" id="8W88"/>
<dbReference type="PDBsum" id="8W89"/>
<dbReference type="PDBsum" id="8W8A"/>
<dbReference type="PDBsum" id="8W8B"/>
<dbReference type="PDBsum" id="8W8Q"/>
<dbReference type="PDBsum" id="8W8R"/>
<dbReference type="PDBsum" id="8WC3"/>
<dbReference type="PDBsum" id="8WC4"/>
<dbReference type="PDBsum" id="8WC5"/>
<dbReference type="PDBsum" id="8WC6"/>
<dbReference type="PDBsum" id="8WC7"/>
<dbReference type="PDBsum" id="8WC8"/>
<dbReference type="PDBsum" id="8WC9"/>
<dbReference type="PDBsum" id="8WCA"/>
<dbReference type="PDBsum" id="8WCB"/>
<dbReference type="PDBsum" id="8WGB"/>
<dbReference type="PDBsum" id="8WJX"/>
<dbReference type="PDBsum" id="8WOG"/>
<dbReference type="PDBsum" id="8WP1"/>
<dbReference type="PDBsum" id="8WPU"/>
<dbReference type="PDBsum" id="8WRB"/>
<dbReference type="PDBsum" id="8WSS"/>
<dbReference type="PDBsum" id="8WST"/>
<dbReference type="PDBsum" id="8WW2"/>
<dbReference type="PDBsum" id="8WWH"/>
<dbReference type="PDBsum" id="8WWI"/>
<dbReference type="PDBsum" id="8WWJ"/>
<dbReference type="PDBsum" id="8WWK"/>
<dbReference type="PDBsum" id="8WWL"/>
<dbReference type="PDBsum" id="8WWM"/>
<dbReference type="PDBsum" id="8WWN"/>
<dbReference type="PDBsum" id="8X2K"/>
<dbReference type="PDBsum" id="8X3L"/>
<dbReference type="PDBsum" id="8X79"/>
<dbReference type="PDBsum" id="8X7A"/>
<dbReference type="PDBsum" id="8X8L"/>
<dbReference type="PDBsum" id="8X8N"/>
<dbReference type="PDBsum" id="8XGM"/>
<dbReference type="PDBsum" id="8XGO"/>
<dbReference type="PDBsum" id="8XGS"/>
<dbReference type="PDBsum" id="8XGU"/>
<dbReference type="PDBsum" id="8XIO"/>
<dbReference type="PDBsum" id="8XIP"/>
<dbReference type="PDBsum" id="8XIQ"/>
<dbReference type="PDBsum" id="8XIR"/>
<dbReference type="PDBsum" id="8XJK"/>
<dbReference type="PDBsum" id="8XJL"/>
<dbReference type="PDBsum" id="8XJM"/>
<dbReference type="PDBsum" id="8XJN"/>
<dbReference type="PDBsum" id="8XJO"/>
<dbReference type="PDBsum" id="8XML"/>
<dbReference type="PDBsum" id="8XOF"/>
<dbReference type="PDBsum" id="8XOG"/>
<dbReference type="PDBsum" id="8XOH"/>
<dbReference type="PDBsum" id="8XOI"/>
<dbReference type="PDBsum" id="8XOJ"/>
<dbReference type="PDBsum" id="8XQE"/>
<dbReference type="PDBsum" id="8XQF"/>
<dbReference type="PDBsum" id="8XQL"/>
<dbReference type="PDBsum" id="8XQN"/>
<dbReference type="PDBsum" id="8XQO"/>
<dbReference type="PDBsum" id="8XQP"/>
<dbReference type="PDBsum" id="8XQR"/>
<dbReference type="PDBsum" id="8XQS"/>
<dbReference type="PDBsum" id="8XQT"/>
<dbReference type="PDBsum" id="8XVE"/>
<dbReference type="PDBsum" id="8XVH"/>
<dbReference type="PDBsum" id="8XVI"/>
<dbReference type="PDBsum" id="8XWP"/>
<dbReference type="PDBsum" id="8XWQ"/>
<dbReference type="PDBsum" id="8XWV"/>
<dbReference type="PDBsum" id="8XX3"/>
<dbReference type="PDBsum" id="8XX6"/>
<dbReference type="PDBsum" id="8XX7"/>
<dbReference type="PDBsum" id="8XXH"/>
<dbReference type="PDBsum" id="8XXR"/>
<dbReference type="PDBsum" id="8XXU"/>
<dbReference type="PDBsum" id="8XXV"/>
<dbReference type="PDBsum" id="8XXX"/>
<dbReference type="PDBsum" id="8XXZ"/>
<dbReference type="PDBsum" id="8XYD"/>
<dbReference type="PDBsum" id="8XYK"/>
<dbReference type="PDBsum" id="8XZF"/>
<dbReference type="PDBsum" id="8XZG"/>
<dbReference type="PDBsum" id="8XZH"/>
<dbReference type="PDBsum" id="8XZI"/>
<dbReference type="PDBsum" id="8XZJ"/>
<dbReference type="PDBsum" id="8Y01"/>
<dbReference type="PDBsum" id="8Y0N"/>
<dbReference type="PDBsum" id="8Y45"/>
<dbReference type="PDBsum" id="8Y51"/>
<dbReference type="PDBsum" id="8Y52"/>
<dbReference type="PDBsum" id="8Y53"/>
<dbReference type="PDBsum" id="8Y62"/>
<dbReference type="PDBsum" id="8Y63"/>
<dbReference type="PDBsum" id="8YIC"/>
<dbReference type="PDBsum" id="8YKY"/>
<dbReference type="PDBsum" id="8YN2"/>
<dbReference type="PDBsum" id="8YN3"/>
<dbReference type="PDBsum" id="8YN4"/>
<dbReference type="PDBsum" id="8YN5"/>
<dbReference type="PDBsum" id="8YN6"/>
<dbReference type="PDBsum" id="8YN7"/>
<dbReference type="PDBsum" id="8YN8"/>
<dbReference type="PDBsum" id="8YN9"/>
<dbReference type="PDBsum" id="8YNA"/>
<dbReference type="PDBsum" id="8YRG"/>
<dbReference type="PDBsum" id="8YUT"/>
<dbReference type="PDBsum" id="8YUU"/>
<dbReference type="PDBsum" id="8YUV"/>
<dbReference type="PDBsum" id="8YW3"/>
<dbReference type="PDBsum" id="8YW4"/>
<dbReference type="PDBsum" id="8YW5"/>
<dbReference type="PDBsum" id="8YY8"/>
<dbReference type="PDBsum" id="8Z7J"/>
<dbReference type="PDBsum" id="8ZD1"/>
<dbReference type="PDBsum" id="8ZF6"/>
<dbReference type="PDBsum" id="8ZF9"/>
<dbReference type="PDBsum" id="8ZFA"/>
<dbReference type="PDBsum" id="8ZFC"/>
<dbReference type="PDBsum" id="8ZFZ"/>
<dbReference type="PDBsum" id="8ZJD"/>
<dbReference type="PDBsum" id="8ZJE"/>
<dbReference type="PDBsum" id="8ZJG"/>
<dbReference type="PDBsum" id="8ZPS"/>
<dbReference type="PDBsum" id="8ZPT"/>
<dbReference type="PDBsum" id="8ZQE"/>
<dbReference type="PDBsum" id="8ZR5"/>
<dbReference type="PDBsum" id="8ZRK"/>
<dbReference type="PDBsum" id="8ZSJ"/>
<dbReference type="PDBsum" id="8ZSP"/>
<dbReference type="PDBsum" id="8ZSS"/>
<dbReference type="PDBsum" id="8ZSV"/>
<dbReference type="PDBsum" id="8ZX4"/>
<dbReference type="PDBsum" id="8ZX5"/>
<dbReference type="PDBsum" id="9ASB"/>
<dbReference type="PDBsum" id="9AST"/>
<dbReference type="PDBsum" id="9AUC"/>
<dbReference type="PDBsum" id="9AVG"/>
<dbReference type="PDBsum" id="9AXF"/>
<dbReference type="PDBsum" id="9AYF"/>
<dbReference type="PDBsum" id="9B54"/>
<dbReference type="PDBsum" id="9B65"/>
<dbReference type="PDBsum" id="9BHL"/>
<dbReference type="PDBsum" id="9BHM"/>
<dbReference type="PDBsum" id="9BI6"/>
<dbReference type="PDBsum" id="9BIP"/>
<dbReference type="PDBsum" id="9BKJ"/>
<dbReference type="PDBsum" id="9BKK"/>
<dbReference type="PDBsum" id="9BQJ"/>
<dbReference type="PDBsum" id="9D61"/>
<dbReference type="PDBsum" id="9DQH"/>
<dbReference type="PDBsum" id="9DQJ"/>
<dbReference type="PDBsum" id="9EPP"/>
<dbReference type="PDBsum" id="9EPQ"/>
<dbReference type="PDBsum" id="9ERX"/>
<dbReference type="PDBsum" id="9EW2"/>
<dbReference type="PDBsum" id="9GE2"/>
<dbReference type="PDBsum" id="9GE3"/>
<dbReference type="PDBsum" id="9GYO"/>
<dbReference type="PDBsum" id="9IIX"/>
<dbReference type="PDBsum" id="9IJ9"/>
<dbReference type="PDBsum" id="9IQT"/>
<dbReference type="PDBsum" id="9ITB"/>
<dbReference type="PDBsum" id="9ITE"/>
<dbReference type="PDBsum" id="9IV1"/>
<dbReference type="PDBsum" id="9IV2"/>
<dbReference type="PDBsum" id="9IVG"/>
<dbReference type="PDBsum" id="9IVM"/>
<dbReference type="PDBsum" id="9IY8"/>
<dbReference type="PDBsum" id="9IYB"/>
<dbReference type="PDBsum" id="9IZF"/>
<dbReference type="PDBsum" id="9IZG"/>
<dbReference type="PDBsum" id="9IZH"/>
<dbReference type="PDBsum" id="9J31"/>
<dbReference type="PDBsum" id="9JKQ"/>
<dbReference type="PDBsum" id="9JVG"/>
<dbReference type="PDBsum" id="9K1C"/>
<dbReference type="PDBsum" id="9K1D"/>
<dbReference type="PDBsum" id="9K26"/>
<dbReference type="PDBsum" id="9K27"/>
<dbReference type="PDBsum" id="9L3W"/>
<dbReference type="PDBsum" id="9L3Y"/>
<dbReference type="EMDB" id="EMD-0339"/>
<dbReference type="EMDB" id="EMD-0744"/>
<dbReference type="EMDB" id="EMD-0745"/>
<dbReference type="EMDB" id="EMD-0877"/>
<dbReference type="EMDB" id="EMD-0879"/>
<dbReference type="EMDB" id="EMD-0902"/>
<dbReference type="EMDB" id="EMD-0917"/>
<dbReference type="EMDB" id="EMD-0918"/>
<dbReference type="EMDB" id="EMD-11927"/>
<dbReference type="EMDB" id="EMD-12128"/>
<dbReference type="EMDB" id="EMD-12129"/>
<dbReference type="EMDB" id="EMD-13140"/>
<dbReference type="EMDB" id="EMD-13141"/>
<dbReference type="EMDB" id="EMD-14180"/>
<dbReference type="EMDB" id="EMD-17712"/>
<dbReference type="EMDB" id="EMD-17747"/>
<dbReference type="EMDB" id="EMD-17756"/>
<dbReference type="EMDB" id="EMD-17793"/>
<dbReference type="EMDB" id="EMD-18442"/>
<dbReference type="EMDB" id="EMD-19445"/>
<dbReference type="EMDB" id="EMD-19882"/>
<dbReference type="EMDB" id="EMD-19883"/>
<dbReference type="EMDB" id="EMD-19929"/>
<dbReference type="EMDB" id="EMD-20078"/>
<dbReference type="EMDB" id="EMD-20079"/>
<dbReference type="EMDB" id="EMD-20126"/>
<dbReference type="EMDB" id="EMD-20179"/>
<dbReference type="EMDB" id="EMD-20180"/>
<dbReference type="EMDB" id="EMD-20181"/>
<dbReference type="EMDB" id="EMD-20190"/>
<dbReference type="EMDB" id="EMD-20277"/>
<dbReference type="EMDB" id="EMD-20278"/>
<dbReference type="EMDB" id="EMD-20284"/>
<dbReference type="EMDB" id="EMD-20285"/>
<dbReference type="EMDB" id="EMD-20470"/>
<dbReference type="EMDB" id="EMD-20883"/>
<dbReference type="EMDB" id="EMD-20901"/>
<dbReference type="EMDB" id="EMD-20906"/>
<dbReference type="EMDB" id="EMD-21147"/>
<dbReference type="EMDB" id="EMD-21243"/>
<dbReference type="EMDB" id="EMD-21249"/>
<dbReference type="EMDB" id="EMD-21669"/>
<dbReference type="EMDB" id="EMD-21671"/>
<dbReference type="EMDB" id="EMD-21683"/>
<dbReference type="EMDB" id="EMD-21866"/>
<dbReference type="EMDB" id="EMD-21972"/>
<dbReference type="EMDB" id="EMD-21992"/>
<dbReference type="EMDB" id="EMD-21993"/>
<dbReference type="EMDB" id="EMD-21994"/>
<dbReference type="EMDB" id="EMD-22117"/>
<dbReference type="EMDB" id="EMD-22118"/>
<dbReference type="EMDB" id="EMD-22119"/>
<dbReference type="EMDB" id="EMD-22120"/>
<dbReference type="EMDB" id="EMD-22283"/>
<dbReference type="EMDB" id="EMD-22338"/>
<dbReference type="EMDB" id="EMD-22493"/>
<dbReference type="EMDB" id="EMD-22509"/>
<dbReference type="EMDB" id="EMD-22510"/>
<dbReference type="EMDB" id="EMD-22511"/>
<dbReference type="EMDB" id="EMD-22872"/>
<dbReference type="EMDB" id="EMD-22882"/>
<dbReference type="EMDB" id="EMD-22883"/>
<dbReference type="EMDB" id="EMD-23099"/>
<dbReference type="EMDB" id="EMD-23100"/>
<dbReference type="EMDB" id="EMD-23101"/>
<dbReference type="EMDB" id="EMD-23102"/>
<dbReference type="EMDB" id="EMD-23118"/>
<dbReference type="EMDB" id="EMD-23119"/>
<dbReference type="EMDB" id="EMD-23274"/>
<dbReference type="EMDB" id="EMD-23280"/>
<dbReference type="EMDB" id="EMD-23281"/>
<dbReference type="EMDB" id="EMD-23425"/>
<dbReference type="EMDB" id="EMD-23436"/>
<dbReference type="EMDB" id="EMD-23996"/>
<dbReference type="EMDB" id="EMD-24267"/>
<dbReference type="EMDB" id="EMD-24268"/>
<dbReference type="EMDB" id="EMD-24334"/>
<dbReference type="EMDB" id="EMD-24378"/>
<dbReference type="EMDB" id="EMD-24401"/>
<dbReference type="EMDB" id="EMD-24445"/>
<dbReference type="EMDB" id="EMD-24453"/>
<dbReference type="EMDB" id="EMD-24496"/>
<dbReference type="EMDB" id="EMD-24500"/>
<dbReference type="EMDB" id="EMD-24501"/>
<dbReference type="EMDB" id="EMD-24506"/>
<dbReference type="EMDB" id="EMD-24507"/>
<dbReference type="EMDB" id="EMD-24569"/>
<dbReference type="EMDB" id="EMD-24570"/>
<dbReference type="EMDB" id="EMD-24572"/>
<dbReference type="EMDB" id="EMD-24680"/>
<dbReference type="EMDB" id="EMD-24733"/>
<dbReference type="EMDB" id="EMD-24805"/>
<dbReference type="EMDB" id="EMD-24825"/>
<dbReference type="EMDB" id="EMD-24896"/>
<dbReference type="EMDB" id="EMD-24897"/>
<dbReference type="EMDB" id="EMD-24898"/>
<dbReference type="EMDB" id="EMD-24899"/>
<dbReference type="EMDB" id="EMD-24900"/>
<dbReference type="EMDB" id="EMD-24978"/>
<dbReference type="EMDB" id="EMD-25034"/>
<dbReference type="EMDB" id="EMD-25076"/>
<dbReference type="EMDB" id="EMD-25077"/>
<dbReference type="EMDB" id="EMD-25399"/>
<dbReference type="EMDB" id="EMD-25402"/>
<dbReference type="EMDB" id="EMD-25586"/>
<dbReference type="EMDB" id="EMD-25587"/>
<dbReference type="EMDB" id="EMD-25612"/>
<dbReference type="EMDB" id="EMD-25613"/>
<dbReference type="EMDB" id="EMD-25712"/>
<dbReference type="EMDB" id="EMD-25748"/>
<dbReference type="EMDB" id="EMD-25749"/>
<dbReference type="EMDB" id="EMD-25751"/>
<dbReference type="EMDB" id="EMD-25752"/>
<dbReference type="EMDB" id="EMD-25758"/>
<dbReference type="EMDB" id="EMD-25763"/>
<dbReference type="EMDB" id="EMD-26003"/>
<dbReference type="EMDB" id="EMD-26004"/>
<dbReference type="EMDB" id="EMD-26099"/>
<dbReference type="EMDB" id="EMD-26100"/>
<dbReference type="EMDB" id="EMD-26101"/>
<dbReference type="EMDB" id="EMD-26102"/>
<dbReference type="EMDB" id="EMD-26136"/>
<dbReference type="EMDB" id="EMD-26178"/>
<dbReference type="EMDB" id="EMD-26179"/>
<dbReference type="EMDB" id="EMD-26180"/>
<dbReference type="EMDB" id="EMD-26184"/>
<dbReference type="EMDB" id="EMD-26188"/>
<dbReference type="EMDB" id="EMD-26190"/>
<dbReference type="EMDB" id="EMD-26196"/>
<dbReference type="EMDB" id="EMD-26197"/>
<dbReference type="EMDB" id="EMD-26199"/>
<dbReference type="EMDB" id="EMD-26208"/>
<dbReference type="EMDB" id="EMD-26313"/>
<dbReference type="EMDB" id="EMD-26314"/>
<dbReference type="EMDB" id="EMD-26597"/>
<dbReference type="EMDB" id="EMD-26598"/>
<dbReference type="EMDB" id="EMD-26599"/>
<dbReference type="EMDB" id="EMD-26795"/>
<dbReference type="EMDB" id="EMD-27344"/>
<dbReference type="EMDB" id="EMD-27345"/>
<dbReference type="EMDB" id="EMD-27633"/>
<dbReference type="EMDB" id="EMD-27634"/>
<dbReference type="EMDB" id="EMD-27635"/>
<dbReference type="EMDB" id="EMD-27636"/>
<dbReference type="EMDB" id="EMD-27752"/>
<dbReference type="EMDB" id="EMD-27753"/>
<dbReference type="EMDB" id="EMD-27754"/>
<dbReference type="EMDB" id="EMD-27804"/>
<dbReference type="EMDB" id="EMD-27805"/>
<dbReference type="EMDB" id="EMD-27806"/>
<dbReference type="EMDB" id="EMD-27807"/>
<dbReference type="EMDB" id="EMD-27872"/>
<dbReference type="EMDB" id="EMD-27873"/>
<dbReference type="EMDB" id="EMD-27874"/>
<dbReference type="EMDB" id="EMD-27966"/>
<dbReference type="EMDB" id="EMD-27967"/>
<dbReference type="EMDB" id="EMD-27968"/>
<dbReference type="EMDB" id="EMD-27969"/>
<dbReference type="EMDB" id="EMD-28164"/>
<dbReference type="EMDB" id="EMD-28177"/>
<dbReference type="EMDB" id="EMD-28185"/>
<dbReference type="EMDB" id="EMD-28267"/>
<dbReference type="EMDB" id="EMD-28268"/>
<dbReference type="EMDB" id="EMD-28758"/>
<dbReference type="EMDB" id="EMD-28759"/>
<dbReference type="EMDB" id="EMD-28810"/>
<dbReference type="EMDB" id="EMD-28812"/>
<dbReference type="EMDB" id="EMD-28896"/>
<dbReference type="EMDB" id="EMD-29026"/>
<dbReference type="EMDB" id="EMD-29283"/>
<dbReference type="EMDB" id="EMD-29284"/>
<dbReference type="EMDB" id="EMD-29285"/>
<dbReference type="EMDB" id="EMD-29286"/>
<dbReference type="EMDB" id="EMD-29287"/>
<dbReference type="EMDB" id="EMD-29301"/>
<dbReference type="EMDB" id="EMD-29302"/>
<dbReference type="EMDB" id="EMD-29303"/>
<dbReference type="EMDB" id="EMD-29453"/>
<dbReference type="EMDB" id="EMD-29524"/>
<dbReference type="EMDB" id="EMD-29560"/>
<dbReference type="EMDB" id="EMD-29571"/>
<dbReference type="EMDB" id="EMD-29585"/>
<dbReference type="EMDB" id="EMD-29597"/>
<dbReference type="EMDB" id="EMD-29599"/>
<dbReference type="EMDB" id="EMD-29645"/>
<dbReference type="EMDB" id="EMD-29684"/>
<dbReference type="EMDB" id="EMD-29736"/>
<dbReference type="EMDB" id="EMD-29861"/>
<dbReference type="EMDB" id="EMD-29898"/>
<dbReference type="EMDB" id="EMD-29935"/>
<dbReference type="EMDB" id="EMD-29940"/>
<dbReference type="EMDB" id="EMD-29943"/>
<dbReference type="EMDB" id="EMD-29944"/>
<dbReference type="EMDB" id="EMD-29945"/>
<dbReference type="EMDB" id="EMD-29946"/>
<dbReference type="EMDB" id="EMD-29951"/>
<dbReference type="EMDB" id="EMD-29952"/>
<dbReference type="EMDB" id="EMD-29953"/>
<dbReference type="EMDB" id="EMD-29954"/>
<dbReference type="EMDB" id="EMD-29955"/>
<dbReference type="EMDB" id="EMD-29956"/>
<dbReference type="EMDB" id="EMD-29958"/>
<dbReference type="EMDB" id="EMD-29959"/>
<dbReference type="EMDB" id="EMD-29960"/>
<dbReference type="EMDB" id="EMD-29961"/>
<dbReference type="EMDB" id="EMD-29962"/>
<dbReference type="EMDB" id="EMD-29964"/>
<dbReference type="EMDB" id="EMD-29965"/>
<dbReference type="EMDB" id="EMD-29966"/>
<dbReference type="EMDB" id="EMD-29967"/>
<dbReference type="EMDB" id="EMD-29968"/>
<dbReference type="EMDB" id="EMD-29969"/>
<dbReference type="EMDB" id="EMD-29970"/>
<dbReference type="EMDB" id="EMD-29971"/>
<dbReference type="EMDB" id="EMD-29972"/>
<dbReference type="EMDB" id="EMD-29985"/>
<dbReference type="EMDB" id="EMD-29986"/>
<dbReference type="EMDB" id="EMD-29987"/>
<dbReference type="EMDB" id="EMD-29988"/>
<dbReference type="EMDB" id="EMD-29989"/>
<dbReference type="EMDB" id="EMD-29990"/>
<dbReference type="EMDB" id="EMD-29991"/>
<dbReference type="EMDB" id="EMD-29992"/>
<dbReference type="EMDB" id="EMD-29993"/>
<dbReference type="EMDB" id="EMD-29994"/>
<dbReference type="EMDB" id="EMD-29995"/>
<dbReference type="EMDB" id="EMD-29996"/>
<dbReference type="EMDB" id="EMD-29997"/>
<dbReference type="EMDB" id="EMD-29998"/>
<dbReference type="EMDB" id="EMD-29999"/>
<dbReference type="EMDB" id="EMD-30047"/>
<dbReference type="EMDB" id="EMD-30048"/>
<dbReference type="EMDB" id="EMD-30274"/>
<dbReference type="EMDB" id="EMD-30344"/>
<dbReference type="EMDB" id="EMD-30345"/>
<dbReference type="EMDB" id="EMD-30392"/>
<dbReference type="EMDB" id="EMD-30393"/>
<dbReference type="EMDB" id="EMD-30394"/>
<dbReference type="EMDB" id="EMD-30395"/>
<dbReference type="EMDB" id="EMD-30410"/>
<dbReference type="EMDB" id="EMD-30411"/>
<dbReference type="EMDB" id="EMD-30452"/>
<dbReference type="EMDB" id="EMD-30489"/>
<dbReference type="EMDB" id="EMD-30490"/>
<dbReference type="EMDB" id="EMD-30491"/>
<dbReference type="EMDB" id="EMD-30602"/>
<dbReference type="EMDB" id="EMD-30603"/>
<dbReference type="EMDB" id="EMD-30608"/>
<dbReference type="EMDB" id="EMD-30627"/>
<dbReference type="EMDB" id="EMD-30665"/>
<dbReference type="EMDB" id="EMD-30971"/>
<dbReference type="EMDB" id="EMD-30972"/>
<dbReference type="EMDB" id="EMD-30973"/>
<dbReference type="EMDB" id="EMD-30974"/>
<dbReference type="EMDB" id="EMD-30975"/>
<dbReference type="EMDB" id="EMD-31031"/>
<dbReference type="EMDB" id="EMD-31032"/>
<dbReference type="EMDB" id="EMD-31049"/>
<dbReference type="EMDB" id="EMD-31147"/>
<dbReference type="EMDB" id="EMD-31156"/>
<dbReference type="EMDB" id="EMD-31157"/>
<dbReference type="EMDB" id="EMD-31162"/>
<dbReference type="EMDB" id="EMD-31164"/>
<dbReference type="EMDB" id="EMD-31225"/>
<dbReference type="EMDB" id="EMD-31226"/>
<dbReference type="EMDB" id="EMD-31323"/>
<dbReference type="EMDB" id="EMD-31340"/>
<dbReference type="EMDB" id="EMD-31341"/>
<dbReference type="EMDB" id="EMD-31342"/>
<dbReference type="EMDB" id="EMD-31343"/>
<dbReference type="EMDB" id="EMD-31344"/>
<dbReference type="EMDB" id="EMD-31345"/>
<dbReference type="EMDB" id="EMD-31346"/>
<dbReference type="EMDB" id="EMD-31347"/>
<dbReference type="EMDB" id="EMD-31349"/>
<dbReference type="EMDB" id="EMD-31371"/>
<dbReference type="EMDB" id="EMD-31387"/>
<dbReference type="EMDB" id="EMD-31388"/>
<dbReference type="EMDB" id="EMD-31389"/>
<dbReference type="EMDB" id="EMD-31404"/>
<dbReference type="EMDB" id="EMD-31421"/>
<dbReference type="EMDB" id="EMD-31422"/>
<dbReference type="EMDB" id="EMD-31423"/>
<dbReference type="EMDB" id="EMD-31424"/>
<dbReference type="EMDB" id="EMD-31425"/>
<dbReference type="EMDB" id="EMD-31426"/>
<dbReference type="EMDB" id="EMD-31427"/>
<dbReference type="EMDB" id="EMD-31448"/>
<dbReference type="EMDB" id="EMD-31449"/>
<dbReference type="EMDB" id="EMD-31452"/>
<dbReference type="EMDB" id="EMD-31453"/>
<dbReference type="EMDB" id="EMD-31456"/>
<dbReference type="EMDB" id="EMD-31457"/>
<dbReference type="EMDB" id="EMD-31458"/>
<dbReference type="EMDB" id="EMD-31461"/>
<dbReference type="EMDB" id="EMD-31479"/>
<dbReference type="EMDB" id="EMD-31480"/>
<dbReference type="EMDB" id="EMD-31481"/>
<dbReference type="EMDB" id="EMD-31493"/>
<dbReference type="EMDB" id="EMD-31494"/>
<dbReference type="EMDB" id="EMD-31500"/>
<dbReference type="EMDB" id="EMD-31501"/>
<dbReference type="EMDB" id="EMD-31738"/>
<dbReference type="EMDB" id="EMD-31739"/>
<dbReference type="EMDB" id="EMD-31740"/>
<dbReference type="EMDB" id="EMD-31918"/>
<dbReference type="EMDB" id="EMD-31922"/>
<dbReference type="EMDB" id="EMD-31923"/>
<dbReference type="EMDB" id="EMD-31962"/>
<dbReference type="EMDB" id="EMD-31979"/>
<dbReference type="EMDB" id="EMD-32006"/>
<dbReference type="EMDB" id="EMD-32007"/>
<dbReference type="EMDB" id="EMD-32008"/>
<dbReference type="EMDB" id="EMD-32009"/>
<dbReference type="EMDB" id="EMD-32018"/>
<dbReference type="EMDB" id="EMD-32020"/>
<dbReference type="EMDB" id="EMD-32021"/>
<dbReference type="EMDB" id="EMD-32022"/>
<dbReference type="EMDB" id="EMD-32127"/>
<dbReference type="EMDB" id="EMD-32128"/>
<dbReference type="EMDB" id="EMD-32129"/>
<dbReference type="EMDB" id="EMD-32130"/>
<dbReference type="EMDB" id="EMD-32131"/>
<dbReference type="EMDB" id="EMD-32132"/>
<dbReference type="EMDB" id="EMD-32136"/>
<dbReference type="EMDB" id="EMD-32138"/>
<dbReference type="EMDB" id="EMD-32243"/>
<dbReference type="EMDB" id="EMD-32244"/>
<dbReference type="EMDB" id="EMD-32245"/>
<dbReference type="EMDB" id="EMD-32246"/>
<dbReference type="EMDB" id="EMD-32247"/>
<dbReference type="EMDB" id="EMD-32268"/>
<dbReference type="EMDB" id="EMD-32297"/>
<dbReference type="EMDB" id="EMD-32298"/>
<dbReference type="EMDB" id="EMD-32313"/>
<dbReference type="EMDB" id="EMD-32314"/>
<dbReference type="EMDB" id="EMD-32315"/>
<dbReference type="EMDB" id="EMD-32316"/>
<dbReference type="EMDB" id="EMD-32331"/>
<dbReference type="EMDB" id="EMD-32342"/>
<dbReference type="EMDB" id="EMD-32424"/>
<dbReference type="EMDB" id="EMD-32425"/>
<dbReference type="EMDB" id="EMD-32461"/>
<dbReference type="EMDB" id="EMD-32543"/>
<dbReference type="EMDB" id="EMD-32565"/>
<dbReference type="EMDB" id="EMD-32817"/>
<dbReference type="EMDB" id="EMD-32818"/>
<dbReference type="EMDB" id="EMD-32819"/>
<dbReference type="EMDB" id="EMD-32820"/>
<dbReference type="EMDB" id="EMD-32824"/>
<dbReference type="EMDB" id="EMD-32836"/>
<dbReference type="EMDB" id="EMD-32837"/>
<dbReference type="EMDB" id="EMD-32838"/>
<dbReference type="EMDB" id="EMD-32850"/>
<dbReference type="EMDB" id="EMD-32858"/>
<dbReference type="EMDB" id="EMD-32859"/>
<dbReference type="EMDB" id="EMD-32860"/>
<dbReference type="EMDB" id="EMD-32861"/>
<dbReference type="EMDB" id="EMD-32862"/>
<dbReference type="EMDB" id="EMD-32881"/>
<dbReference type="EMDB" id="EMD-32882"/>
<dbReference type="EMDB" id="EMD-32883"/>
<dbReference type="EMDB" id="EMD-32884"/>
<dbReference type="EMDB" id="EMD-32887"/>
<dbReference type="EMDB" id="EMD-32890"/>
<dbReference type="EMDB" id="EMD-32904"/>
<dbReference type="EMDB" id="EMD-32905"/>
<dbReference type="EMDB" id="EMD-32932"/>
<dbReference type="EMDB" id="EMD-32964"/>
<dbReference type="EMDB" id="EMD-32965"/>
<dbReference type="EMDB" id="EMD-32966"/>
<dbReference type="EMDB" id="EMD-32972"/>
<dbReference type="EMDB" id="EMD-33014"/>
<dbReference type="EMDB" id="EMD-33069"/>
<dbReference type="EMDB" id="EMD-33070"/>
<dbReference type="EMDB" id="EMD-33071"/>
<dbReference type="EMDB" id="EMD-33085"/>
<dbReference type="EMDB" id="EMD-33086"/>
<dbReference type="EMDB" id="EMD-33103"/>
<dbReference type="EMDB" id="EMD-33107"/>
<dbReference type="EMDB" id="EMD-33108"/>
<dbReference type="EMDB" id="EMD-33229"/>
<dbReference type="EMDB" id="EMD-33230"/>
<dbReference type="EMDB" id="EMD-33231"/>
<dbReference type="EMDB" id="EMD-33241"/>
<dbReference type="EMDB" id="EMD-33247"/>
<dbReference type="EMDB" id="EMD-33248"/>
<dbReference type="EMDB" id="EMD-33249"/>
<dbReference type="EMDB" id="EMD-33250"/>
<dbReference type="EMDB" id="EMD-33302"/>
<dbReference type="EMDB" id="EMD-33303"/>
<dbReference type="EMDB" id="EMD-33304"/>
<dbReference type="EMDB" id="EMD-33359"/>
<dbReference type="EMDB" id="EMD-33360"/>
<dbReference type="EMDB" id="EMD-33361"/>
<dbReference type="EMDB" id="EMD-33364"/>
<dbReference type="EMDB" id="EMD-33365"/>
<dbReference type="EMDB" id="EMD-33366"/>
<dbReference type="EMDB" id="EMD-33442"/>
<dbReference type="EMDB" id="EMD-33443"/>
<dbReference type="EMDB" id="EMD-33444"/>
<dbReference type="EMDB" id="EMD-33445"/>
<dbReference type="EMDB" id="EMD-33446"/>
<dbReference type="EMDB" id="EMD-33452"/>
<dbReference type="EMDB" id="EMD-33479"/>
<dbReference type="EMDB" id="EMD-33480"/>
<dbReference type="EMDB" id="EMD-33481"/>
<dbReference type="EMDB" id="EMD-33482"/>
<dbReference type="EMDB" id="EMD-33483"/>
<dbReference type="EMDB" id="EMD-33491"/>
<dbReference type="EMDB" id="EMD-33492"/>
<dbReference type="EMDB" id="EMD-33503"/>
<dbReference type="EMDB" id="EMD-33504"/>
<dbReference type="EMDB" id="EMD-33512"/>
<dbReference type="EMDB" id="EMD-33513"/>
<dbReference type="EMDB" id="EMD-33525"/>
<dbReference type="EMDB" id="EMD-33526"/>
<dbReference type="EMDB" id="EMD-33562"/>
<dbReference type="EMDB" id="EMD-33585"/>
<dbReference type="EMDB" id="EMD-33586"/>
<dbReference type="EMDB" id="EMD-33587"/>
<dbReference type="EMDB" id="EMD-33594"/>
<dbReference type="EMDB" id="EMD-33633"/>
<dbReference type="EMDB" id="EMD-33634"/>
<dbReference type="EMDB" id="EMD-33635"/>
<dbReference type="EMDB" id="EMD-33636"/>
<dbReference type="EMDB" id="EMD-33682"/>
<dbReference type="EMDB" id="EMD-33708"/>
<dbReference type="EMDB" id="EMD-33710"/>
<dbReference type="EMDB" id="EMD-33747"/>
<dbReference type="EMDB" id="EMD-33749"/>
<dbReference type="EMDB" id="EMD-33753"/>
<dbReference type="EMDB" id="EMD-33755"/>
<dbReference type="EMDB" id="EMD-33785"/>
<dbReference type="EMDB" id="EMD-33786"/>
<dbReference type="EMDB" id="EMD-33888"/>
<dbReference type="EMDB" id="EMD-33889"/>
<dbReference type="EMDB" id="EMD-33891"/>
<dbReference type="EMDB" id="EMD-33984"/>
<dbReference type="EMDB" id="EMD-33985"/>
<dbReference type="EMDB" id="EMD-33995"/>
<dbReference type="EMDB" id="EMD-34073"/>
<dbReference type="EMDB" id="EMD-34276"/>
<dbReference type="EMDB" id="EMD-34277"/>
<dbReference type="EMDB" id="EMD-34278"/>
<dbReference type="EMDB" id="EMD-34279"/>
<dbReference type="EMDB" id="EMD-34371"/>
<dbReference type="EMDB" id="EMD-34413"/>
<dbReference type="EMDB" id="EMD-34414"/>
<dbReference type="EMDB" id="EMD-34437"/>
<dbReference type="EMDB" id="EMD-34478"/>
<dbReference type="EMDB" id="EMD-34479"/>
<dbReference type="EMDB" id="EMD-34480"/>
<dbReference type="EMDB" id="EMD-34549"/>
<dbReference type="EMDB" id="EMD-34619"/>
<dbReference type="EMDB" id="EMD-34663"/>
<dbReference type="EMDB" id="EMD-34667"/>
<dbReference type="EMDB" id="EMD-34676"/>
<dbReference type="EMDB" id="EMD-34677"/>
<dbReference type="EMDB" id="EMD-34833"/>
<dbReference type="EMDB" id="EMD-34902"/>
<dbReference type="EMDB" id="EMD-34903"/>
<dbReference type="EMDB" id="EMD-34908"/>
<dbReference type="EMDB" id="EMD-34914"/>
<dbReference type="EMDB" id="EMD-34915"/>
<dbReference type="EMDB" id="EMD-34916"/>
<dbReference type="EMDB" id="EMD-34925"/>
<dbReference type="EMDB" id="EMD-34943"/>
<dbReference type="EMDB" id="EMD-34947"/>
<dbReference type="EMDB" id="EMD-34948"/>
<dbReference type="EMDB" id="EMD-34950"/>
<dbReference type="EMDB" id="EMD-34951"/>
<dbReference type="EMDB" id="EMD-34984"/>
<dbReference type="EMDB" id="EMD-34993"/>
<dbReference type="EMDB" id="EMD-35010"/>
<dbReference type="EMDB" id="EMD-35044"/>
<dbReference type="EMDB" id="EMD-35135"/>
<dbReference type="EMDB" id="EMD-35234"/>
<dbReference type="EMDB" id="EMD-35235"/>
<dbReference type="EMDB" id="EMD-35257"/>
<dbReference type="EMDB" id="EMD-35259"/>
<dbReference type="EMDB" id="EMD-35263"/>
<dbReference type="EMDB" id="EMD-35275"/>
<dbReference type="EMDB" id="EMD-35282"/>
<dbReference type="EMDB" id="EMD-35292"/>
<dbReference type="EMDB" id="EMD-35297"/>
<dbReference type="EMDB" id="EMD-35298"/>
<dbReference type="EMDB" id="EMD-35345"/>
<dbReference type="EMDB" id="EMD-35346"/>
<dbReference type="EMDB" id="EMD-35351"/>
<dbReference type="EMDB" id="EMD-35356"/>
<dbReference type="EMDB" id="EMD-35357"/>
<dbReference type="EMDB" id="EMD-35358"/>
<dbReference type="EMDB" id="EMD-35359"/>
<dbReference type="EMDB" id="EMD-35360"/>
<dbReference type="EMDB" id="EMD-35378"/>
<dbReference type="EMDB" id="EMD-35380"/>
<dbReference type="EMDB" id="EMD-35463"/>
<dbReference type="EMDB" id="EMD-35483"/>
<dbReference type="EMDB" id="EMD-35484"/>
<dbReference type="EMDB" id="EMD-35485"/>
<dbReference type="EMDB" id="EMD-35511"/>
<dbReference type="EMDB" id="EMD-35512"/>
<dbReference type="EMDB" id="EMD-35516"/>
<dbReference type="EMDB" id="EMD-35601"/>
<dbReference type="EMDB" id="EMD-35615"/>
<dbReference type="EMDB" id="EMD-35616"/>
<dbReference type="EMDB" id="EMD-35657"/>
<dbReference type="EMDB" id="EMD-35658"/>
<dbReference type="EMDB" id="EMD-35683"/>
<dbReference type="EMDB" id="EMD-35684"/>
<dbReference type="EMDB" id="EMD-35685"/>
<dbReference type="EMDB" id="EMD-35686"/>
<dbReference type="EMDB" id="EMD-35687"/>
<dbReference type="EMDB" id="EMD-35705"/>
<dbReference type="EMDB" id="EMD-35714"/>
<dbReference type="EMDB" id="EMD-35724"/>
<dbReference type="EMDB" id="EMD-35725"/>
<dbReference type="EMDB" id="EMD-35726"/>
<dbReference type="EMDB" id="EMD-35761"/>
<dbReference type="EMDB" id="EMD-35762"/>
<dbReference type="EMDB" id="EMD-35763"/>
<dbReference type="EMDB" id="EMD-35764"/>
<dbReference type="EMDB" id="EMD-35817"/>
<dbReference type="EMDB" id="EMD-35822"/>
<dbReference type="EMDB" id="EMD-35830"/>
<dbReference type="EMDB" id="EMD-35831"/>
<dbReference type="EMDB" id="EMD-35833"/>
<dbReference type="EMDB" id="EMD-35838"/>
<dbReference type="EMDB" id="EMD-35913"/>
<dbReference type="EMDB" id="EMD-35914"/>
<dbReference type="EMDB" id="EMD-35915"/>
<dbReference type="EMDB" id="EMD-35940"/>
<dbReference type="EMDB" id="EMD-35941"/>
<dbReference type="EMDB" id="EMD-35942"/>
<dbReference type="EMDB" id="EMD-35943"/>
<dbReference type="EMDB" id="EMD-35944"/>
<dbReference type="EMDB" id="EMD-36001"/>
<dbReference type="EMDB" id="EMD-36005"/>
<dbReference type="EMDB" id="EMD-36006"/>
<dbReference type="EMDB" id="EMD-36007"/>
<dbReference type="EMDB" id="EMD-36010"/>
<dbReference type="EMDB" id="EMD-36011"/>
<dbReference type="EMDB" id="EMD-36012"/>
<dbReference type="EMDB" id="EMD-36111"/>
<dbReference type="EMDB" id="EMD-36174"/>
<dbReference type="EMDB" id="EMD-36176"/>
<dbReference type="EMDB" id="EMD-36177"/>
<dbReference type="EMDB" id="EMD-36186"/>
<dbReference type="EMDB" id="EMD-36189"/>
<dbReference type="EMDB" id="EMD-36193"/>
<dbReference type="EMDB" id="EMD-36229"/>
<dbReference type="EMDB" id="EMD-36232"/>
<dbReference type="EMDB" id="EMD-36233"/>
<dbReference type="EMDB" id="EMD-36261"/>
<dbReference type="EMDB" id="EMD-36266"/>
<dbReference type="EMDB" id="EMD-36280"/>
<dbReference type="EMDB" id="EMD-36300"/>
<dbReference type="EMDB" id="EMD-36312"/>
<dbReference type="EMDB" id="EMD-36317"/>
<dbReference type="EMDB" id="EMD-36318"/>
<dbReference type="EMDB" id="EMD-36364"/>
<dbReference type="EMDB" id="EMD-36367"/>
<dbReference type="EMDB" id="EMD-36399"/>
<dbReference type="EMDB" id="EMD-36400"/>
<dbReference type="EMDB" id="EMD-36401"/>
<dbReference type="EMDB" id="EMD-36402"/>
<dbReference type="EMDB" id="EMD-36403"/>
<dbReference type="EMDB" id="EMD-36404"/>
<dbReference type="EMDB" id="EMD-36405"/>
<dbReference type="EMDB" id="EMD-36409"/>
<dbReference type="EMDB" id="EMD-36484"/>
<dbReference type="EMDB" id="EMD-36486"/>
<dbReference type="EMDB" id="EMD-36593"/>
<dbReference type="EMDB" id="EMD-36625"/>
<dbReference type="EMDB" id="EMD-36626"/>
<dbReference type="EMDB" id="EMD-36627"/>
<dbReference type="EMDB" id="EMD-36634"/>
<dbReference type="EMDB" id="EMD-36712"/>
<dbReference type="EMDB" id="EMD-36714"/>
<dbReference type="EMDB" id="EMD-36715"/>
<dbReference type="EMDB" id="EMD-36716"/>
<dbReference type="EMDB" id="EMD-36736"/>
<dbReference type="EMDB" id="EMD-36750"/>
<dbReference type="EMDB" id="EMD-36755"/>
<dbReference type="EMDB" id="EMD-36842"/>
<dbReference type="EMDB" id="EMD-36869"/>
<dbReference type="EMDB" id="EMD-36887"/>
<dbReference type="EMDB" id="EMD-36888"/>
<dbReference type="EMDB" id="EMD-36889"/>
<dbReference type="EMDB" id="EMD-36890"/>
<dbReference type="EMDB" id="EMD-36923"/>
<dbReference type="EMDB" id="EMD-36924"/>
<dbReference type="EMDB" id="EMD-36925"/>
<dbReference type="EMDB" id="EMD-36951"/>
<dbReference type="EMDB" id="EMD-36990"/>
<dbReference type="EMDB" id="EMD-37207"/>
<dbReference type="EMDB" id="EMD-37208"/>
<dbReference type="EMDB" id="EMD-37209"/>
<dbReference type="EMDB" id="EMD-37220"/>
<dbReference type="EMDB" id="EMD-37224"/>
<dbReference type="EMDB" id="EMD-37236"/>
<dbReference type="EMDB" id="EMD-37237"/>
<dbReference type="EMDB" id="EMD-37347"/>
<dbReference type="EMDB" id="EMD-37348"/>
<dbReference type="EMDB" id="EMD-37349"/>
<dbReference type="EMDB" id="EMD-37350"/>
<dbReference type="EMDB" id="EMD-37351"/>
<dbReference type="EMDB" id="EMD-37356"/>
<dbReference type="EMDB" id="EMD-37357"/>
<dbReference type="EMDB" id="EMD-37429"/>
<dbReference type="EMDB" id="EMD-37430"/>
<dbReference type="EMDB" id="EMD-37431"/>
<dbReference type="EMDB" id="EMD-37432"/>
<dbReference type="EMDB" id="EMD-37433"/>
<dbReference type="EMDB" id="EMD-37434"/>
<dbReference type="EMDB" id="EMD-37435"/>
<dbReference type="EMDB" id="EMD-37436"/>
<dbReference type="EMDB" id="EMD-37437"/>
<dbReference type="EMDB" id="EMD-37507"/>
<dbReference type="EMDB" id="EMD-37591"/>
<dbReference type="EMDB" id="EMD-37686"/>
<dbReference type="EMDB" id="EMD-37707"/>
<dbReference type="EMDB" id="EMD-37724"/>
<dbReference type="EMDB" id="EMD-37771"/>
<dbReference type="EMDB" id="EMD-37823"/>
<dbReference type="EMDB" id="EMD-37824"/>
<dbReference type="EMDB" id="EMD-37881"/>
<dbReference type="EMDB" id="EMD-37888"/>
<dbReference type="EMDB" id="EMD-37889"/>
<dbReference type="EMDB" id="EMD-37890"/>
<dbReference type="EMDB" id="EMD-37891"/>
<dbReference type="EMDB" id="EMD-37892"/>
<dbReference type="EMDB" id="EMD-37893"/>
<dbReference type="EMDB" id="EMD-37894"/>
<dbReference type="EMDB" id="EMD-38015"/>
<dbReference type="EMDB" id="EMD-38039"/>
<dbReference type="EMDB" id="EMD-38095"/>
<dbReference type="EMDB" id="EMD-38096"/>
<dbReference type="EMDB" id="EMD-38148"/>
<dbReference type="EMDB" id="EMD-38150"/>
<dbReference type="EMDB" id="EMD-38328"/>
<dbReference type="EMDB" id="EMD-38329"/>
<dbReference type="EMDB" id="EMD-38331"/>
<dbReference type="EMDB" id="EMD-38332"/>
<dbReference type="EMDB" id="EMD-38385"/>
<dbReference type="EMDB" id="EMD-38386"/>
<dbReference type="EMDB" id="EMD-38387"/>
<dbReference type="EMDB" id="EMD-38388"/>
<dbReference type="EMDB" id="EMD-38399"/>
<dbReference type="EMDB" id="EMD-38400"/>
<dbReference type="EMDB" id="EMD-38401"/>
<dbReference type="EMDB" id="EMD-38402"/>
<dbReference type="EMDB" id="EMD-38403"/>
<dbReference type="EMDB" id="EMD-38481"/>
<dbReference type="EMDB" id="EMD-38527"/>
<dbReference type="EMDB" id="EMD-38528"/>
<dbReference type="EMDB" id="EMD-38529"/>
<dbReference type="EMDB" id="EMD-38530"/>
<dbReference type="EMDB" id="EMD-38531"/>
<dbReference type="EMDB" id="EMD-38574"/>
<dbReference type="EMDB" id="EMD-38575"/>
<dbReference type="EMDB" id="EMD-38580"/>
<dbReference type="EMDB" id="EMD-38582"/>
<dbReference type="EMDB" id="EMD-38583"/>
<dbReference type="EMDB" id="EMD-38584"/>
<dbReference type="EMDB" id="EMD-38586"/>
<dbReference type="EMDB" id="EMD-38587"/>
<dbReference type="EMDB" id="EMD-38588"/>
<dbReference type="EMDB" id="EMD-38702"/>
<dbReference type="EMDB" id="EMD-38704"/>
<dbReference type="EMDB" id="EMD-38705"/>
<dbReference type="EMDB" id="EMD-38740"/>
<dbReference type="EMDB" id="EMD-38741"/>
<dbReference type="EMDB" id="EMD-38743"/>
<dbReference type="EMDB" id="EMD-38744"/>
<dbReference type="EMDB" id="EMD-38747"/>
<dbReference type="EMDB" id="EMD-38748"/>
<dbReference type="EMDB" id="EMD-38749"/>
<dbReference type="EMDB" id="EMD-38759"/>
<dbReference type="EMDB" id="EMD-38761"/>
<dbReference type="EMDB" id="EMD-38762"/>
<dbReference type="EMDB" id="EMD-38764"/>
<dbReference type="EMDB" id="EMD-38766"/>
<dbReference type="EMDB" id="EMD-38769"/>
<dbReference type="EMDB" id="EMD-38776"/>
<dbReference type="EMDB" id="EMD-38794"/>
<dbReference type="EMDB" id="EMD-38795"/>
<dbReference type="EMDB" id="EMD-38796"/>
<dbReference type="EMDB" id="EMD-38797"/>
<dbReference type="EMDB" id="EMD-38798"/>
<dbReference type="EMDB" id="EMD-38800"/>
<dbReference type="EMDB" id="EMD-38809"/>
<dbReference type="EMDB" id="EMD-38909"/>
<dbReference type="EMDB" id="EMD-38927"/>
<dbReference type="EMDB" id="EMD-38928"/>
<dbReference type="EMDB" id="EMD-38929"/>
<dbReference type="EMDB" id="EMD-38964"/>
<dbReference type="EMDB" id="EMD-38965"/>
<dbReference type="EMDB" id="EMD-39313"/>
<dbReference type="EMDB" id="EMD-39376"/>
<dbReference type="EMDB" id="EMD-39412"/>
<dbReference type="EMDB" id="EMD-39413"/>
<dbReference type="EMDB" id="EMD-39414"/>
<dbReference type="EMDB" id="EMD-39415"/>
<dbReference type="EMDB" id="EMD-39416"/>
<dbReference type="EMDB" id="EMD-39417"/>
<dbReference type="EMDB" id="EMD-39418"/>
<dbReference type="EMDB" id="EMD-39419"/>
<dbReference type="EMDB" id="EMD-39420"/>
<dbReference type="EMDB" id="EMD-39542"/>
<dbReference type="EMDB" id="EMD-39582"/>
<dbReference type="EMDB" id="EMD-39583"/>
<dbReference type="EMDB" id="EMD-39584"/>
<dbReference type="EMDB" id="EMD-39621"/>
<dbReference type="EMDB" id="EMD-39622"/>
<dbReference type="EMDB" id="EMD-39623"/>
<dbReference type="EMDB" id="EMD-39816"/>
<dbReference type="EMDB" id="EMD-39946"/>
<dbReference type="EMDB" id="EMD-40000"/>
<dbReference type="EMDB" id="EMD-40001"/>
<dbReference type="EMDB" id="EMD-40002"/>
<dbReference type="EMDB" id="EMD-40004"/>
<dbReference type="EMDB" id="EMD-40005"/>
<dbReference type="EMDB" id="EMD-40052"/>
<dbReference type="EMDB" id="EMD-40096"/>
<dbReference type="EMDB" id="EMD-40097"/>
<dbReference type="EMDB" id="EMD-40098"/>
<dbReference type="EMDB" id="EMD-40099"/>
<dbReference type="EMDB" id="EMD-40100"/>
<dbReference type="EMDB" id="EMD-40101"/>
<dbReference type="EMDB" id="EMD-40102"/>
<dbReference type="EMDB" id="EMD-40103"/>
<dbReference type="EMDB" id="EMD-40104"/>
<dbReference type="EMDB" id="EMD-40105"/>
<dbReference type="EMDB" id="EMD-40106"/>
<dbReference type="EMDB" id="EMD-40107"/>
<dbReference type="EMDB" id="EMD-40108"/>
<dbReference type="EMDB" id="EMD-40109"/>
<dbReference type="EMDB" id="EMD-40110"/>
<dbReference type="EMDB" id="EMD-40111"/>
<dbReference type="EMDB" id="EMD-40112"/>
<dbReference type="EMDB" id="EMD-40113"/>
<dbReference type="EMDB" id="EMD-40114"/>
<dbReference type="EMDB" id="EMD-40115"/>
<dbReference type="EMDB" id="EMD-40116"/>
<dbReference type="EMDB" id="EMD-40117"/>
<dbReference type="EMDB" id="EMD-40118"/>
<dbReference type="EMDB" id="EMD-40119"/>
<dbReference type="EMDB" id="EMD-40121"/>
<dbReference type="EMDB" id="EMD-40122"/>
<dbReference type="EMDB" id="EMD-40123"/>
<dbReference type="EMDB" id="EMD-40124"/>
<dbReference type="EMDB" id="EMD-40125"/>
<dbReference type="EMDB" id="EMD-40126"/>
<dbReference type="EMDB" id="EMD-40127"/>
<dbReference type="EMDB" id="EMD-40128"/>
<dbReference type="EMDB" id="EMD-40129"/>
<dbReference type="EMDB" id="EMD-40130"/>
<dbReference type="EMDB" id="EMD-40131"/>
<dbReference type="EMDB" id="EMD-40132"/>
<dbReference type="EMDB" id="EMD-40133"/>
<dbReference type="EMDB" id="EMD-40134"/>
<dbReference type="EMDB" id="EMD-40135"/>
<dbReference type="EMDB" id="EMD-40136"/>
<dbReference type="EMDB" id="EMD-40137"/>
<dbReference type="EMDB" id="EMD-40138"/>
<dbReference type="EMDB" id="EMD-40139"/>
<dbReference type="EMDB" id="EMD-40140"/>
<dbReference type="EMDB" id="EMD-40141"/>
<dbReference type="EMDB" id="EMD-40142"/>
<dbReference type="EMDB" id="EMD-40143"/>
<dbReference type="EMDB" id="EMD-40144"/>
<dbReference type="EMDB" id="EMD-40145"/>
<dbReference type="EMDB" id="EMD-40146"/>
<dbReference type="EMDB" id="EMD-40147"/>
<dbReference type="EMDB" id="EMD-40148"/>
<dbReference type="EMDB" id="EMD-40149"/>
<dbReference type="EMDB" id="EMD-40150"/>
<dbReference type="EMDB" id="EMD-40151"/>
<dbReference type="EMDB" id="EMD-40152"/>
<dbReference type="EMDB" id="EMD-40153"/>
<dbReference type="EMDB" id="EMD-40154"/>
<dbReference type="EMDB" id="EMD-40155"/>
<dbReference type="EMDB" id="EMD-40157"/>
<dbReference type="EMDB" id="EMD-40158"/>
<dbReference type="EMDB" id="EMD-40159"/>
<dbReference type="EMDB" id="EMD-40160"/>
<dbReference type="EMDB" id="EMD-40161"/>
<dbReference type="EMDB" id="EMD-40163"/>
<dbReference type="EMDB" id="EMD-40164"/>
<dbReference type="EMDB" id="EMD-40165"/>
<dbReference type="EMDB" id="EMD-40166"/>
<dbReference type="EMDB" id="EMD-40167"/>
<dbReference type="EMDB" id="EMD-40168"/>
<dbReference type="EMDB" id="EMD-40169"/>
<dbReference type="EMDB" id="EMD-40170"/>
<dbReference type="EMDB" id="EMD-40171"/>
<dbReference type="EMDB" id="EMD-40172"/>
<dbReference type="EMDB" id="EMD-40173"/>
<dbReference type="EMDB" id="EMD-40174"/>
<dbReference type="EMDB" id="EMD-40175"/>
<dbReference type="EMDB" id="EMD-40176"/>
<dbReference type="EMDB" id="EMD-40270"/>
<dbReference type="EMDB" id="EMD-40450"/>
<dbReference type="EMDB" id="EMD-40572"/>
<dbReference type="EMDB" id="EMD-40603"/>
<dbReference type="EMDB" id="EMD-40915"/>
<dbReference type="EMDB" id="EMD-40916"/>
<dbReference type="EMDB" id="EMD-40917"/>
<dbReference type="EMDB" id="EMD-41007"/>
<dbReference type="EMDB" id="EMD-41008"/>
<dbReference type="EMDB" id="EMD-41010"/>
<dbReference type="EMDB" id="EMD-41013"/>
<dbReference type="EMDB" id="EMD-41144"/>
<dbReference type="EMDB" id="EMD-41267"/>
<dbReference type="EMDB" id="EMD-41268"/>
<dbReference type="EMDB" id="EMD-41729"/>
<dbReference type="EMDB" id="EMD-41766"/>
<dbReference type="EMDB" id="EMD-41776"/>
<dbReference type="EMDB" id="EMD-41829"/>
<dbReference type="EMDB" id="EMD-41840"/>
<dbReference type="EMDB" id="EMD-41888"/>
<dbReference type="EMDB" id="EMD-41889"/>
<dbReference type="EMDB" id="EMD-41890"/>
<dbReference type="EMDB" id="EMD-41891"/>
<dbReference type="EMDB" id="EMD-41994"/>
<dbReference type="EMDB" id="EMD-41996"/>
<dbReference type="EMDB" id="EMD-41997"/>
<dbReference type="EMDB" id="EMD-42000"/>
<dbReference type="EMDB" id="EMD-42001"/>
<dbReference type="EMDB" id="EMD-42004"/>
<dbReference type="EMDB" id="EMD-42008"/>
<dbReference type="EMDB" id="EMD-42023"/>
<dbReference type="EMDB" id="EMD-42241"/>
<dbReference type="EMDB" id="EMD-42245"/>
<dbReference type="EMDB" id="EMD-42268"/>
<dbReference type="EMDB" id="EMD-42408"/>
<dbReference type="EMDB" id="EMD-42409"/>
<dbReference type="EMDB" id="EMD-42410"/>
<dbReference type="EMDB" id="EMD-42411"/>
<dbReference type="EMDB" id="EMD-42412"/>
<dbReference type="EMDB" id="EMD-42413"/>
<dbReference type="EMDB" id="EMD-42414"/>
<dbReference type="EMDB" id="EMD-42415"/>
<dbReference type="EMDB" id="EMD-42416"/>
<dbReference type="EMDB" id="EMD-42417"/>
<dbReference type="EMDB" id="EMD-42418"/>
<dbReference type="EMDB" id="EMD-42419"/>
<dbReference type="EMDB" id="EMD-42420"/>
<dbReference type="EMDB" id="EMD-42421"/>
<dbReference type="EMDB" id="EMD-42422"/>
<dbReference type="EMDB" id="EMD-42423"/>
<dbReference type="EMDB" id="EMD-42424"/>
<dbReference type="EMDB" id="EMD-42425"/>
<dbReference type="EMDB" id="EMD-42426"/>
<dbReference type="EMDB" id="EMD-42427"/>
<dbReference type="EMDB" id="EMD-42476"/>
<dbReference type="EMDB" id="EMD-42538"/>
<dbReference type="EMDB" id="EMD-42587"/>
<dbReference type="EMDB" id="EMD-42676"/>
<dbReference type="EMDB" id="EMD-42786"/>
<dbReference type="EMDB" id="EMD-42789"/>
<dbReference type="EMDB" id="EMD-42791"/>
<dbReference type="EMDB" id="EMD-42817"/>
<dbReference type="EMDB" id="EMD-42999"/>
<dbReference type="EMDB" id="EMD-43236"/>
<dbReference type="EMDB" id="EMD-43556"/>
<dbReference type="EMDB" id="EMD-43557"/>
<dbReference type="EMDB" id="EMD-43558"/>
<dbReference type="EMDB" id="EMD-4358"/>
<dbReference type="EMDB" id="EMD-43647"/>
<dbReference type="EMDB" id="EMD-43650"/>
<dbReference type="EMDB" id="EMD-43811"/>
<dbReference type="EMDB" id="EMD-43825"/>
<dbReference type="EMDB" id="EMD-43877"/>
<dbReference type="EMDB" id="EMD-4390"/>
<dbReference type="EMDB" id="EMD-43901"/>
<dbReference type="EMDB" id="EMD-43966"/>
<dbReference type="EMDB" id="EMD-43990"/>
<dbReference type="EMDB" id="EMD-44199"/>
<dbReference type="EMDB" id="EMD-44247"/>
<dbReference type="EMDB" id="EMD-44549"/>
<dbReference type="EMDB" id="EMD-44550"/>
<dbReference type="EMDB" id="EMD-44560"/>
<dbReference type="EMDB" id="EMD-44597"/>
<dbReference type="EMDB" id="EMD-44642"/>
<dbReference type="EMDB" id="EMD-44643"/>
<dbReference type="EMDB" id="EMD-44812"/>
<dbReference type="EMDB" id="EMD-46585"/>
<dbReference type="EMDB" id="EMD-47113"/>
<dbReference type="EMDB" id="EMD-47114"/>
<dbReference type="EMDB" id="EMD-51284"/>
<dbReference type="EMDB" id="EMD-51288"/>
<dbReference type="EMDB" id="EMD-51700"/>
<dbReference type="EMDB" id="EMD-60051"/>
<dbReference type="EMDB" id="EMD-60053"/>
<dbReference type="EMDB" id="EMD-60054"/>
<dbReference type="EMDB" id="EMD-60056"/>
<dbReference type="EMDB" id="EMD-60072"/>
<dbReference type="EMDB" id="EMD-60141"/>
<dbReference type="EMDB" id="EMD-60142"/>
<dbReference type="EMDB" id="EMD-60144"/>
<dbReference type="EMDB" id="EMD-60353"/>
<dbReference type="EMDB" id="EMD-60354"/>
<dbReference type="EMDB" id="EMD-60384"/>
<dbReference type="EMDB" id="EMD-60392"/>
<dbReference type="EMDB" id="EMD-60399"/>
<dbReference type="EMDB" id="EMD-60417"/>
<dbReference type="EMDB" id="EMD-60423"/>
<dbReference type="EMDB" id="EMD-60426"/>
<dbReference type="EMDB" id="EMD-60427"/>
<dbReference type="EMDB" id="EMD-60537"/>
<dbReference type="EMDB" id="EMD-60538"/>
<dbReference type="EMDB" id="EMD-60608"/>
<dbReference type="EMDB" id="EMD-60626"/>
<dbReference type="EMDB" id="EMD-60795"/>
<dbReference type="EMDB" id="EMD-60857"/>
<dbReference type="EMDB" id="EMD-60859"/>
<dbReference type="EMDB" id="EMD-60917"/>
<dbReference type="EMDB" id="EMD-60918"/>
<dbReference type="EMDB" id="EMD-60927"/>
<dbReference type="EMDB" id="EMD-60930"/>
<dbReference type="EMDB" id="EMD-60990"/>
<dbReference type="EMDB" id="EMD-60994"/>
<dbReference type="EMDB" id="EMD-61031"/>
<dbReference type="EMDB" id="EMD-61032"/>
<dbReference type="EMDB" id="EMD-61033"/>
<dbReference type="EMDB" id="EMD-61104"/>
<dbReference type="EMDB" id="EMD-61567"/>
<dbReference type="EMDB" id="EMD-61838"/>
<dbReference type="EMDB" id="EMD-61971"/>
<dbReference type="EMDB" id="EMD-61972"/>
<dbReference type="EMDB" id="EMD-61991"/>
<dbReference type="EMDB" id="EMD-61992"/>
<dbReference type="EMDB" id="EMD-62793"/>
<dbReference type="EMDB" id="EMD-62798"/>
<dbReference type="EMDB" id="EMD-7039"/>
<dbReference type="EMDB" id="EMD-7835"/>
<dbReference type="EMDB" id="EMD-7868"/>
<dbReference type="EMDB" id="EMD-7869"/>
<dbReference type="EMDB" id="EMD-8623"/>
<dbReference type="EMDB" id="EMD-8978"/>
<dbReference type="EMDB" id="EMD-9376"/>
<dbReference type="EMDB" id="EMD-9382"/>
<dbReference type="SMR" id="P62873"/>
<dbReference type="BioGRID" id="109044">
    <property type="interactions" value="311"/>
</dbReference>
<dbReference type="ComplexPortal" id="CPX-8432">
    <property type="entry name" value="GPR88-Gi1 signaling complex"/>
</dbReference>
<dbReference type="CORUM" id="P62873"/>
<dbReference type="DIP" id="DIP-599N"/>
<dbReference type="FunCoup" id="P62873">
    <property type="interactions" value="2536"/>
</dbReference>
<dbReference type="IntAct" id="P62873">
    <property type="interactions" value="151"/>
</dbReference>
<dbReference type="MINT" id="P62873"/>
<dbReference type="STRING" id="9606.ENSP00000367872"/>
<dbReference type="BindingDB" id="P62873"/>
<dbReference type="ChEMBL" id="CHEMBL3883319"/>
<dbReference type="TCDB" id="8.A.92.1.1">
    <property type="family name" value="the g-protein AlphaBetaGama complex (gpc) family"/>
</dbReference>
<dbReference type="GlyCosmos" id="P62873">
    <property type="glycosylation" value="2 sites, 1 glycan"/>
</dbReference>
<dbReference type="GlyGen" id="P62873">
    <property type="glycosylation" value="2 sites, 1 O-linked glycan (2 sites)"/>
</dbReference>
<dbReference type="iPTMnet" id="P62873"/>
<dbReference type="MetOSite" id="P62873"/>
<dbReference type="PhosphoSitePlus" id="P62873"/>
<dbReference type="SwissPalm" id="P62873"/>
<dbReference type="BioMuta" id="GNB1"/>
<dbReference type="DMDM" id="51317302"/>
<dbReference type="OGP" id="P62873"/>
<dbReference type="REPRODUCTION-2DPAGE" id="IPI00026268"/>
<dbReference type="jPOST" id="P62873"/>
<dbReference type="MassIVE" id="P62873"/>
<dbReference type="PaxDb" id="9606-ENSP00000481878"/>
<dbReference type="PeptideAtlas" id="P62873"/>
<dbReference type="ProteomicsDB" id="57441">
    <molecule id="P62873-1"/>
</dbReference>
<dbReference type="Pumba" id="P62873"/>
<dbReference type="ABCD" id="P62873">
    <property type="antibodies" value="1 sequenced antibody"/>
</dbReference>
<dbReference type="Antibodypedia" id="26613">
    <property type="antibodies" value="247 antibodies from 32 providers"/>
</dbReference>
<dbReference type="DNASU" id="2782"/>
<dbReference type="Ensembl" id="ENST00000378609.9">
    <molecule id="P62873-1"/>
    <property type="protein sequence ID" value="ENSP00000367872.3"/>
    <property type="gene ID" value="ENSG00000078369.19"/>
</dbReference>
<dbReference type="Ensembl" id="ENST00000610897.4">
    <molecule id="P62873-1"/>
    <property type="protein sequence ID" value="ENSP00000481878.1"/>
    <property type="gene ID" value="ENSG00000078369.19"/>
</dbReference>
<dbReference type="Ensembl" id="ENST00000703692.1">
    <molecule id="P62873-1"/>
    <property type="protein sequence ID" value="ENSP00000515427.1"/>
    <property type="gene ID" value="ENSG00000078369.19"/>
</dbReference>
<dbReference type="Ensembl" id="ENST00000703693.1">
    <molecule id="P62873-1"/>
    <property type="protein sequence ID" value="ENSP00000515428.1"/>
    <property type="gene ID" value="ENSG00000078369.19"/>
</dbReference>
<dbReference type="Ensembl" id="ENST00000703694.1">
    <molecule id="P62873-1"/>
    <property type="protein sequence ID" value="ENSP00000515429.1"/>
    <property type="gene ID" value="ENSG00000078369.19"/>
</dbReference>
<dbReference type="Ensembl" id="ENST00000703696.1">
    <molecule id="P62873-1"/>
    <property type="protein sequence ID" value="ENSP00000515431.1"/>
    <property type="gene ID" value="ENSG00000078369.19"/>
</dbReference>
<dbReference type="Ensembl" id="ENST00000703697.1">
    <molecule id="P62873-1"/>
    <property type="protein sequence ID" value="ENSP00000515432.1"/>
    <property type="gene ID" value="ENSG00000078369.19"/>
</dbReference>
<dbReference type="Ensembl" id="ENST00000703699.1">
    <molecule id="P62873-1"/>
    <property type="protein sequence ID" value="ENSP00000515433.1"/>
    <property type="gene ID" value="ENSG00000078369.19"/>
</dbReference>
<dbReference type="Ensembl" id="ENST00000703700.1">
    <molecule id="P62873-1"/>
    <property type="protein sequence ID" value="ENSP00000515434.1"/>
    <property type="gene ID" value="ENSG00000078369.19"/>
</dbReference>
<dbReference type="Ensembl" id="ENST00000703701.1">
    <molecule id="P62873-1"/>
    <property type="protein sequence ID" value="ENSP00000515435.1"/>
    <property type="gene ID" value="ENSG00000078369.19"/>
</dbReference>
<dbReference type="Ensembl" id="ENST00000703702.1">
    <molecule id="P62873-1"/>
    <property type="protein sequence ID" value="ENSP00000515436.1"/>
    <property type="gene ID" value="ENSG00000078369.19"/>
</dbReference>
<dbReference type="Ensembl" id="ENST00000703703.1">
    <molecule id="P62873-1"/>
    <property type="protein sequence ID" value="ENSP00000515437.1"/>
    <property type="gene ID" value="ENSG00000078369.19"/>
</dbReference>
<dbReference type="Ensembl" id="ENST00000703704.1">
    <molecule id="P62873-1"/>
    <property type="protein sequence ID" value="ENSP00000515438.1"/>
    <property type="gene ID" value="ENSG00000078369.19"/>
</dbReference>
<dbReference type="Ensembl" id="ENST00000703706.1">
    <molecule id="P62873-1"/>
    <property type="protein sequence ID" value="ENSP00000515440.1"/>
    <property type="gene ID" value="ENSG00000078369.19"/>
</dbReference>
<dbReference type="Ensembl" id="ENST00000703708.1">
    <molecule id="P62873-1"/>
    <property type="protein sequence ID" value="ENSP00000515442.1"/>
    <property type="gene ID" value="ENSG00000078369.19"/>
</dbReference>
<dbReference type="Ensembl" id="ENST00000703709.1">
    <molecule id="P62873-1"/>
    <property type="protein sequence ID" value="ENSP00000515443.1"/>
    <property type="gene ID" value="ENSG00000078369.19"/>
</dbReference>
<dbReference type="Ensembl" id="ENST00000703710.1">
    <molecule id="P62873-1"/>
    <property type="protein sequence ID" value="ENSP00000515444.1"/>
    <property type="gene ID" value="ENSG00000078369.19"/>
</dbReference>
<dbReference type="Ensembl" id="ENST00000703711.1">
    <molecule id="P62873-1"/>
    <property type="protein sequence ID" value="ENSP00000515445.1"/>
    <property type="gene ID" value="ENSG00000078369.19"/>
</dbReference>
<dbReference type="GeneID" id="2782"/>
<dbReference type="KEGG" id="hsa:2782"/>
<dbReference type="MANE-Select" id="ENST00000378609.9">
    <property type="protein sequence ID" value="ENSP00000367872.3"/>
    <property type="RefSeq nucleotide sequence ID" value="NM_002074.5"/>
    <property type="RefSeq protein sequence ID" value="NP_002065.1"/>
</dbReference>
<dbReference type="UCSC" id="uc001aif.5">
    <molecule id="P62873-1"/>
    <property type="organism name" value="human"/>
</dbReference>
<dbReference type="AGR" id="HGNC:4396"/>
<dbReference type="CTD" id="2782"/>
<dbReference type="DisGeNET" id="2782"/>
<dbReference type="GeneCards" id="GNB1"/>
<dbReference type="GeneReviews" id="GNB1"/>
<dbReference type="HGNC" id="HGNC:4396">
    <property type="gene designation" value="GNB1"/>
</dbReference>
<dbReference type="HPA" id="ENSG00000078369">
    <property type="expression patterns" value="Tissue enriched (retina)"/>
</dbReference>
<dbReference type="MalaCards" id="GNB1"/>
<dbReference type="MIM" id="139380">
    <property type="type" value="gene"/>
</dbReference>
<dbReference type="MIM" id="616973">
    <property type="type" value="phenotype"/>
</dbReference>
<dbReference type="neXtProt" id="NX_P62873"/>
<dbReference type="OpenTargets" id="ENSG00000078369"/>
<dbReference type="Orphanet" id="488613">
    <property type="disease" value="Global developmental delay-neuro-ophthalmological abnormalities-seizures-intellectual disability syndrome"/>
</dbReference>
<dbReference type="PharmGKB" id="PA28776"/>
<dbReference type="VEuPathDB" id="HostDB:ENSG00000078369"/>
<dbReference type="eggNOG" id="KOG0286">
    <property type="taxonomic scope" value="Eukaryota"/>
</dbReference>
<dbReference type="GeneTree" id="ENSGT01000000214413"/>
<dbReference type="InParanoid" id="P62873"/>
<dbReference type="OMA" id="PLDSQWV"/>
<dbReference type="OrthoDB" id="10255630at2759"/>
<dbReference type="PAN-GO" id="P62873">
    <property type="GO annotations" value="4 GO annotations based on evolutionary models"/>
</dbReference>
<dbReference type="PhylomeDB" id="P62873"/>
<dbReference type="TreeFam" id="TF106149"/>
<dbReference type="PathwayCommons" id="P62873"/>
<dbReference type="Reactome" id="R-HSA-1296041">
    <property type="pathway name" value="Activation of G protein gated Potassium channels"/>
</dbReference>
<dbReference type="Reactome" id="R-HSA-163359">
    <property type="pathway name" value="Glucagon signaling in metabolic regulation"/>
</dbReference>
<dbReference type="Reactome" id="R-HSA-202040">
    <property type="pathway name" value="G-protein activation"/>
</dbReference>
<dbReference type="Reactome" id="R-HSA-2485179">
    <property type="pathway name" value="Activation of the phototransduction cascade"/>
</dbReference>
<dbReference type="Reactome" id="R-HSA-2514859">
    <property type="pathway name" value="Inactivation, recovery and regulation of the phototransduction cascade"/>
</dbReference>
<dbReference type="Reactome" id="R-HSA-381676">
    <property type="pathway name" value="Glucagon-like Peptide-1 (GLP1) regulates insulin secretion"/>
</dbReference>
<dbReference type="Reactome" id="R-HSA-381753">
    <property type="pathway name" value="Olfactory Signaling Pathway"/>
</dbReference>
<dbReference type="Reactome" id="R-HSA-381771">
    <property type="pathway name" value="Synthesis, secretion, and inactivation of Glucagon-like Peptide-1 (GLP-1)"/>
</dbReference>
<dbReference type="Reactome" id="R-HSA-392170">
    <property type="pathway name" value="ADP signalling through P2Y purinoceptor 12"/>
</dbReference>
<dbReference type="Reactome" id="R-HSA-392451">
    <property type="pathway name" value="G beta:gamma signalling through PI3Kgamma"/>
</dbReference>
<dbReference type="Reactome" id="R-HSA-392851">
    <property type="pathway name" value="Prostacyclin signalling through prostacyclin receptor"/>
</dbReference>
<dbReference type="Reactome" id="R-HSA-400042">
    <property type="pathway name" value="Adrenaline,noradrenaline inhibits insulin secretion"/>
</dbReference>
<dbReference type="Reactome" id="R-HSA-4086398">
    <property type="pathway name" value="Ca2+ pathway"/>
</dbReference>
<dbReference type="Reactome" id="R-HSA-416476">
    <property type="pathway name" value="G alpha (q) signalling events"/>
</dbReference>
<dbReference type="Reactome" id="R-HSA-416482">
    <property type="pathway name" value="G alpha (12/13) signalling events"/>
</dbReference>
<dbReference type="Reactome" id="R-HSA-418217">
    <property type="pathway name" value="G beta:gamma signalling through PLC beta"/>
</dbReference>
<dbReference type="Reactome" id="R-HSA-418555">
    <property type="pathway name" value="G alpha (s) signalling events"/>
</dbReference>
<dbReference type="Reactome" id="R-HSA-418592">
    <property type="pathway name" value="ADP signalling through P2Y purinoceptor 1"/>
</dbReference>
<dbReference type="Reactome" id="R-HSA-418594">
    <property type="pathway name" value="G alpha (i) signalling events"/>
</dbReference>
<dbReference type="Reactome" id="R-HSA-418597">
    <property type="pathway name" value="G alpha (z) signalling events"/>
</dbReference>
<dbReference type="Reactome" id="R-HSA-420092">
    <property type="pathway name" value="Glucagon-type ligand receptors"/>
</dbReference>
<dbReference type="Reactome" id="R-HSA-428930">
    <property type="pathway name" value="Thromboxane signalling through TP receptor"/>
</dbReference>
<dbReference type="Reactome" id="R-HSA-432040">
    <property type="pathway name" value="Vasopressin regulates renal water homeostasis via Aquaporins"/>
</dbReference>
<dbReference type="Reactome" id="R-HSA-456926">
    <property type="pathway name" value="Thrombin signalling through proteinase activated receptors (PARs)"/>
</dbReference>
<dbReference type="Reactome" id="R-HSA-500657">
    <property type="pathway name" value="Presynaptic function of Kainate receptors"/>
</dbReference>
<dbReference type="Reactome" id="R-HSA-6814122">
    <property type="pathway name" value="Cooperation of PDCL (PhLP1) and TRiC/CCT in G-protein beta folding"/>
</dbReference>
<dbReference type="Reactome" id="R-HSA-8964315">
    <property type="pathway name" value="G beta:gamma signalling through BTK"/>
</dbReference>
<dbReference type="Reactome" id="R-HSA-8964616">
    <property type="pathway name" value="G beta:gamma signalling through CDC42"/>
</dbReference>
<dbReference type="Reactome" id="R-HSA-9009391">
    <property type="pathway name" value="Extra-nuclear estrogen signaling"/>
</dbReference>
<dbReference type="Reactome" id="R-HSA-9634597">
    <property type="pathway name" value="GPER1 signaling"/>
</dbReference>
<dbReference type="Reactome" id="R-HSA-9660821">
    <property type="pathway name" value="ADORA2B mediated anti-inflammatory cytokines production"/>
</dbReference>
<dbReference type="Reactome" id="R-HSA-9717207">
    <property type="pathway name" value="Sensory perception of sweet, bitter, and umami (glutamate) taste"/>
</dbReference>
<dbReference type="Reactome" id="R-HSA-9856530">
    <property type="pathway name" value="High laminar flow shear stress activates signaling by PIEZO1 and PECAM1:CDH5:KDR in endothelial cells"/>
</dbReference>
<dbReference type="Reactome" id="R-HSA-997272">
    <property type="pathway name" value="Inhibition of voltage gated Ca2+ channels via Gbeta/gamma subunits"/>
</dbReference>
<dbReference type="SignaLink" id="P62873"/>
<dbReference type="SIGNOR" id="P62873"/>
<dbReference type="BioGRID-ORCS" id="2782">
    <property type="hits" value="52 hits in 1165 CRISPR screens"/>
</dbReference>
<dbReference type="CD-CODE" id="FB4E32DD">
    <property type="entry name" value="Presynaptic clusters and postsynaptic densities"/>
</dbReference>
<dbReference type="ChiTaRS" id="GNB1">
    <property type="organism name" value="human"/>
</dbReference>
<dbReference type="EvolutionaryTrace" id="P62873"/>
<dbReference type="GeneWiki" id="GNB1"/>
<dbReference type="GenomeRNAi" id="2782"/>
<dbReference type="Pharos" id="P62873">
    <property type="development level" value="Tbio"/>
</dbReference>
<dbReference type="PRO" id="PR:P62873"/>
<dbReference type="Proteomes" id="UP000005640">
    <property type="component" value="Chromosome 1"/>
</dbReference>
<dbReference type="RNAct" id="P62873">
    <property type="molecule type" value="protein"/>
</dbReference>
<dbReference type="Bgee" id="ENSG00000078369">
    <property type="expression patterns" value="Expressed in cortical plate and 211 other cell types or tissues"/>
</dbReference>
<dbReference type="ExpressionAtlas" id="P62873">
    <property type="expression patterns" value="baseline and differential"/>
</dbReference>
<dbReference type="GO" id="GO:0005737">
    <property type="term" value="C:cytoplasm"/>
    <property type="evidence" value="ECO:0000318"/>
    <property type="project" value="GO_Central"/>
</dbReference>
<dbReference type="GO" id="GO:0005829">
    <property type="term" value="C:cytosol"/>
    <property type="evidence" value="ECO:0000304"/>
    <property type="project" value="Reactome"/>
</dbReference>
<dbReference type="GO" id="GO:0070062">
    <property type="term" value="C:extracellular exosome"/>
    <property type="evidence" value="ECO:0007005"/>
    <property type="project" value="UniProtKB"/>
</dbReference>
<dbReference type="GO" id="GO:1903561">
    <property type="term" value="C:extracellular vesicle"/>
    <property type="evidence" value="ECO:0007005"/>
    <property type="project" value="UniProtKB"/>
</dbReference>
<dbReference type="GO" id="GO:0005834">
    <property type="term" value="C:heterotrimeric G-protein complex"/>
    <property type="evidence" value="ECO:0000314"/>
    <property type="project" value="UniProtKB"/>
</dbReference>
<dbReference type="GO" id="GO:0005765">
    <property type="term" value="C:lysosomal membrane"/>
    <property type="evidence" value="ECO:0007005"/>
    <property type="project" value="UniProtKB"/>
</dbReference>
<dbReference type="GO" id="GO:0016020">
    <property type="term" value="C:membrane"/>
    <property type="evidence" value="ECO:0000250"/>
    <property type="project" value="BHF-UCL"/>
</dbReference>
<dbReference type="GO" id="GO:0097381">
    <property type="term" value="C:photoreceptor disc membrane"/>
    <property type="evidence" value="ECO:0000304"/>
    <property type="project" value="Reactome"/>
</dbReference>
<dbReference type="GO" id="GO:0005886">
    <property type="term" value="C:plasma membrane"/>
    <property type="evidence" value="ECO:0000304"/>
    <property type="project" value="Reactome"/>
</dbReference>
<dbReference type="GO" id="GO:0045202">
    <property type="term" value="C:synapse"/>
    <property type="evidence" value="ECO:0007669"/>
    <property type="project" value="Ensembl"/>
</dbReference>
<dbReference type="GO" id="GO:0003924">
    <property type="term" value="F:GTPase activity"/>
    <property type="evidence" value="ECO:0000314"/>
    <property type="project" value="MGI"/>
</dbReference>
<dbReference type="GO" id="GO:0051020">
    <property type="term" value="F:GTPase binding"/>
    <property type="evidence" value="ECO:0000353"/>
    <property type="project" value="UniProtKB"/>
</dbReference>
<dbReference type="GO" id="GO:0044877">
    <property type="term" value="F:protein-containing complex binding"/>
    <property type="evidence" value="ECO:0000314"/>
    <property type="project" value="MGI"/>
</dbReference>
<dbReference type="GO" id="GO:0030159">
    <property type="term" value="F:signaling receptor complex adaptor activity"/>
    <property type="evidence" value="ECO:0000318"/>
    <property type="project" value="GO_Central"/>
</dbReference>
<dbReference type="GO" id="GO:0007191">
    <property type="term" value="P:adenylate cyclase-activating dopamine receptor signaling pathway"/>
    <property type="evidence" value="ECO:0000250"/>
    <property type="project" value="BHF-UCL"/>
</dbReference>
<dbReference type="GO" id="GO:0008283">
    <property type="term" value="P:cell population proliferation"/>
    <property type="evidence" value="ECO:0007669"/>
    <property type="project" value="Ensembl"/>
</dbReference>
<dbReference type="GO" id="GO:0071870">
    <property type="term" value="P:cellular response to catecholamine stimulus"/>
    <property type="evidence" value="ECO:0000250"/>
    <property type="project" value="BHF-UCL"/>
</dbReference>
<dbReference type="GO" id="GO:0071380">
    <property type="term" value="P:cellular response to prostaglandin E stimulus"/>
    <property type="evidence" value="ECO:0000250"/>
    <property type="project" value="BHF-UCL"/>
</dbReference>
<dbReference type="GO" id="GO:0007213">
    <property type="term" value="P:G protein-coupled acetylcholine receptor signaling pathway"/>
    <property type="evidence" value="ECO:0000304"/>
    <property type="project" value="ProtInc"/>
</dbReference>
<dbReference type="GO" id="GO:0007186">
    <property type="term" value="P:G protein-coupled receptor signaling pathway"/>
    <property type="evidence" value="ECO:0000318"/>
    <property type="project" value="GO_Central"/>
</dbReference>
<dbReference type="GO" id="GO:0007200">
    <property type="term" value="P:phospholipase C-activating G protein-coupled receptor signaling pathway"/>
    <property type="evidence" value="ECO:0007669"/>
    <property type="project" value="Ensembl"/>
</dbReference>
<dbReference type="GO" id="GO:0007265">
    <property type="term" value="P:Ras protein signal transduction"/>
    <property type="evidence" value="ECO:0000304"/>
    <property type="project" value="ProtInc"/>
</dbReference>
<dbReference type="GO" id="GO:0060041">
    <property type="term" value="P:retina development in camera-type eye"/>
    <property type="evidence" value="ECO:0007669"/>
    <property type="project" value="Ensembl"/>
</dbReference>
<dbReference type="GO" id="GO:0050909">
    <property type="term" value="P:sensory perception of taste"/>
    <property type="evidence" value="ECO:0007669"/>
    <property type="project" value="Ensembl"/>
</dbReference>
<dbReference type="GO" id="GO:0007165">
    <property type="term" value="P:signal transduction"/>
    <property type="evidence" value="ECO:0000304"/>
    <property type="project" value="ProtInc"/>
</dbReference>
<dbReference type="CDD" id="cd00200">
    <property type="entry name" value="WD40"/>
    <property type="match status" value="1"/>
</dbReference>
<dbReference type="FunFam" id="2.130.10.10:FF:000007">
    <property type="entry name" value="Guanine nucleotide-binding protein G(I)/G(S)/G(T) subunit beta-1"/>
    <property type="match status" value="1"/>
</dbReference>
<dbReference type="Gene3D" id="2.130.10.10">
    <property type="entry name" value="YVTN repeat-like/Quinoprotein amine dehydrogenase"/>
    <property type="match status" value="1"/>
</dbReference>
<dbReference type="InterPro" id="IPR020472">
    <property type="entry name" value="G-protein_beta_WD-40_rep"/>
</dbReference>
<dbReference type="InterPro" id="IPR001632">
    <property type="entry name" value="Gprotein_B"/>
</dbReference>
<dbReference type="InterPro" id="IPR016346">
    <property type="entry name" value="Guanine_nucleotide-bd_bsu"/>
</dbReference>
<dbReference type="InterPro" id="IPR015943">
    <property type="entry name" value="WD40/YVTN_repeat-like_dom_sf"/>
</dbReference>
<dbReference type="InterPro" id="IPR019775">
    <property type="entry name" value="WD40_repeat_CS"/>
</dbReference>
<dbReference type="InterPro" id="IPR036322">
    <property type="entry name" value="WD40_repeat_dom_sf"/>
</dbReference>
<dbReference type="InterPro" id="IPR001680">
    <property type="entry name" value="WD40_rpt"/>
</dbReference>
<dbReference type="PANTHER" id="PTHR19850">
    <property type="entry name" value="GUANINE NUCLEOTIDE-BINDING PROTEIN BETA G PROTEIN BETA"/>
    <property type="match status" value="1"/>
</dbReference>
<dbReference type="Pfam" id="PF25391">
    <property type="entry name" value="WD40_Gbeta"/>
    <property type="match status" value="1"/>
</dbReference>
<dbReference type="PIRSF" id="PIRSF002394">
    <property type="entry name" value="GN-bd_beta"/>
    <property type="match status" value="1"/>
</dbReference>
<dbReference type="PRINTS" id="PR00319">
    <property type="entry name" value="GPROTEINB"/>
</dbReference>
<dbReference type="PRINTS" id="PR00320">
    <property type="entry name" value="GPROTEINBRPT"/>
</dbReference>
<dbReference type="SMART" id="SM00320">
    <property type="entry name" value="WD40"/>
    <property type="match status" value="7"/>
</dbReference>
<dbReference type="SUPFAM" id="SSF50978">
    <property type="entry name" value="WD40 repeat-like"/>
    <property type="match status" value="1"/>
</dbReference>
<dbReference type="PROSITE" id="PS00678">
    <property type="entry name" value="WD_REPEATS_1"/>
    <property type="match status" value="3"/>
</dbReference>
<dbReference type="PROSITE" id="PS50082">
    <property type="entry name" value="WD_REPEATS_2"/>
    <property type="match status" value="6"/>
</dbReference>
<dbReference type="PROSITE" id="PS50294">
    <property type="entry name" value="WD_REPEATS_REGION"/>
    <property type="match status" value="1"/>
</dbReference>
<organism>
    <name type="scientific">Homo sapiens</name>
    <name type="common">Human</name>
    <dbReference type="NCBI Taxonomy" id="9606"/>
    <lineage>
        <taxon>Eukaryota</taxon>
        <taxon>Metazoa</taxon>
        <taxon>Chordata</taxon>
        <taxon>Craniata</taxon>
        <taxon>Vertebrata</taxon>
        <taxon>Euteleostomi</taxon>
        <taxon>Mammalia</taxon>
        <taxon>Eutheria</taxon>
        <taxon>Euarchontoglires</taxon>
        <taxon>Primates</taxon>
        <taxon>Haplorrhini</taxon>
        <taxon>Catarrhini</taxon>
        <taxon>Hominidae</taxon>
        <taxon>Homo</taxon>
    </lineage>
</organism>
<comment type="function">
    <text evidence="10 11 12 14 15 16 17 18 19 20 21 22 23 24 25">Guanine nucleotide-binding proteins (G proteins) are involved as a modulator or transducer in various transmembrane signaling systems (PubMed:29925951, PubMed:33762731, PubMed:34239069, PubMed:35610220, PubMed:35714614, PubMed:35835867, PubMed:36087581, PubMed:36989299, PubMed:37327704, PubMed:37935376, PubMed:37935377, PubMed:37963465, PubMed:37991948, PubMed:38168118, PubMed:38552625). The beta and gamma chains are required for the GTPase activity, for replacement of GDP by GTP, and for G protein-effector interaction (PubMed:29925951, PubMed:33762731, PubMed:34239069, PubMed:35610220, PubMed:35714614, PubMed:35835867, PubMed:36087581, PubMed:36989299, PubMed:37327704, PubMed:37935376, PubMed:37935377, PubMed:37963465, PubMed:38168118, PubMed:38552625).</text>
</comment>
<comment type="subunit">
    <text evidence="2 3 4 5 10 11 12 13 14 15 16 17 18 19 20 21 22 24 25 26 27">G proteins are composed of 3 units, alpha, beta and gamma (PubMed:29925951, PubMed:33762731, PubMed:34239069, PubMed:35610220, PubMed:35714614, PubMed:35835867, PubMed:36087581, PubMed:36989299, PubMed:37327704, PubMed:37935376, PubMed:37935377, PubMed:37963465, PubMed:38168118, PubMed:38552625). The heterodimer formed by GNB1 and GNG2 interacts with ARHGEF5 (PubMed:19713215). The heterodimer formed by GNB1 and GNG2 interacts with GRK2 (By similarity). Forms a complex with GNAO1 and GNG3 (PubMed:34685729). Interacts with ARHGEF18 and RASD2 (PubMed:14512443, PubMed:19255495). Forms complexes with TAS2R14 and G-proteins; these complexes play a role in the perception of bitterness (PubMed:38600377, PubMed:38776963). Component of the TAS2R14-GNAI1 complex, consisting of TAS2R14, GNAI1, GNB1 and GNG2 (PubMed:38600377, PubMed:38776963). Component of the TAS2R14-GNAT3 complex, consisting of TAS2R14, GNAT3, GNB1 and GNG2 (PubMed:38600377, PubMed:38776963). Component of the TAS2R14-GNAS2 complex, consisting of TAS2R14, GNAS2, GNB1 and GNG2 (PubMed:38776963).</text>
</comment>
<comment type="interaction">
    <interactant intactId="EBI-357130">
        <id>P62873</id>
    </interactant>
    <interactant intactId="EBI-11962928">
        <id>Q9UI47-2</id>
        <label>CTNNA3</label>
    </interactant>
    <organismsDiffer>false</organismsDiffer>
    <experiments>3</experiments>
</comment>
<comment type="interaction">
    <interactant intactId="EBI-357130">
        <id>P62873</id>
    </interactant>
    <interactant intactId="EBI-23669343">
        <id>Q92782-2</id>
        <label>DPF1</label>
    </interactant>
    <organismsDiffer>false</organismsDiffer>
    <experiments>3</experiments>
</comment>
<comment type="interaction">
    <interactant intactId="EBI-357130">
        <id>P62873</id>
    </interactant>
    <interactant intactId="EBI-353997">
        <id>P04899</id>
        <label>GNAI2</label>
    </interactant>
    <organismsDiffer>false</organismsDiffer>
    <experiments>3</experiments>
</comment>
<comment type="interaction">
    <interactant intactId="EBI-357130">
        <id>P62873</id>
    </interactant>
    <interactant intactId="EBI-602681">
        <id>P59768</id>
        <label>GNG2</label>
    </interactant>
    <organismsDiffer>false</organismsDiffer>
    <experiments>10</experiments>
</comment>
<comment type="interaction">
    <interactant intactId="EBI-357130">
        <id>P62873</id>
    </interactant>
    <interactant intactId="EBI-10220734">
        <id>P63218</id>
        <label>GNG5</label>
    </interactant>
    <organismsDiffer>false</organismsDiffer>
    <experiments>4</experiments>
</comment>
<comment type="interaction">
    <interactant intactId="EBI-357130">
        <id>P62873</id>
    </interactant>
    <interactant intactId="EBI-466029">
        <id>P42858</id>
        <label>HTT</label>
    </interactant>
    <organismsDiffer>false</organismsDiffer>
    <experiments>10</experiments>
</comment>
<comment type="interaction">
    <interactant intactId="EBI-357130">
        <id>P62873</id>
    </interactant>
    <interactant intactId="EBI-489611">
        <id>P19878</id>
        <label>NCF2</label>
    </interactant>
    <organismsDiffer>false</organismsDiffer>
    <experiments>2</experiments>
</comment>
<comment type="interaction">
    <interactant intactId="EBI-357130">
        <id>P62873</id>
    </interactant>
    <interactant intactId="EBI-395883">
        <id>P07237</id>
        <label>P4HB</label>
    </interactant>
    <organismsDiffer>false</organismsDiffer>
    <experiments>3</experiments>
</comment>
<comment type="interaction">
    <interactant intactId="EBI-357130">
        <id>P62873</id>
    </interactant>
    <interactant intactId="EBI-357275">
        <id>Q99471</id>
        <label>PFDN5</label>
    </interactant>
    <organismsDiffer>false</organismsDiffer>
    <experiments>2</experiments>
</comment>
<comment type="interaction">
    <interactant intactId="EBI-357130">
        <id>P62873</id>
    </interactant>
    <interactant intactId="EBI-2107455">
        <id>Q08AM6</id>
        <label>VAC14</label>
    </interactant>
    <organismsDiffer>false</organismsDiffer>
    <experiments>3</experiments>
</comment>
<comment type="alternative products">
    <event type="alternative splicing"/>
    <isoform>
        <id>P62873-1</id>
        <name>1</name>
        <sequence type="displayed"/>
    </isoform>
    <isoform>
        <id>P62873-2</id>
        <name>2</name>
        <sequence type="described" ref="VSP_055232"/>
    </isoform>
</comment>
<comment type="PTM">
    <text evidence="1">Phosphorylation at His-266 by NDKB contributes to G protein activation by increasing the high energetic phosphate transfer onto GDP.</text>
</comment>
<comment type="disease" evidence="6 7 8 9">
    <disease id="DI-04731">
        <name>Intellectual developmental disorder, autosomal dominant 42</name>
        <acronym>MRD42</acronym>
        <description>A disorder characterized by significantly below average general intellectual functioning associated with impairments in adaptive behavior and manifested during the developmental period. MRD42 patients manifest global developmental delay commonly accompanied by hypotonia, seizures of various types, ophthalmological manifestations, and poor growth.</description>
        <dbReference type="MIM" id="616973"/>
    </disease>
    <text>The disease is caused by variants affecting the gene represented in this entry.</text>
</comment>
<comment type="similarity">
    <text evidence="31">Belongs to the WD repeat G protein beta family.</text>
</comment>
<name>GBB1_HUMAN</name>
<evidence type="ECO:0000250" key="1"/>
<evidence type="ECO:0000250" key="2">
    <source>
        <dbReference type="UniProtKB" id="P62871"/>
    </source>
</evidence>
<evidence type="ECO:0000269" key="3">
    <source>
    </source>
</evidence>
<evidence type="ECO:0000269" key="4">
    <source>
    </source>
</evidence>
<evidence type="ECO:0000269" key="5">
    <source>
    </source>
</evidence>
<evidence type="ECO:0000269" key="6">
    <source>
    </source>
</evidence>
<evidence type="ECO:0000269" key="7">
    <source>
    </source>
</evidence>
<evidence type="ECO:0000269" key="8">
    <source>
    </source>
</evidence>
<evidence type="ECO:0000269" key="9">
    <source>
    </source>
</evidence>
<evidence type="ECO:0000269" key="10">
    <source>
    </source>
</evidence>
<evidence type="ECO:0000269" key="11">
    <source>
    </source>
</evidence>
<evidence type="ECO:0000269" key="12">
    <source>
    </source>
</evidence>
<evidence type="ECO:0000269" key="13">
    <source>
    </source>
</evidence>
<evidence type="ECO:0000269" key="14">
    <source>
    </source>
</evidence>
<evidence type="ECO:0000269" key="15">
    <source>
    </source>
</evidence>
<evidence type="ECO:0000269" key="16">
    <source>
    </source>
</evidence>
<evidence type="ECO:0000269" key="17">
    <source>
    </source>
</evidence>
<evidence type="ECO:0000269" key="18">
    <source>
    </source>
</evidence>
<evidence type="ECO:0000269" key="19">
    <source>
    </source>
</evidence>
<evidence type="ECO:0000269" key="20">
    <source>
    </source>
</evidence>
<evidence type="ECO:0000269" key="21">
    <source>
    </source>
</evidence>
<evidence type="ECO:0000269" key="22">
    <source>
    </source>
</evidence>
<evidence type="ECO:0000269" key="23">
    <source>
    </source>
</evidence>
<evidence type="ECO:0000269" key="24">
    <source>
    </source>
</evidence>
<evidence type="ECO:0000269" key="25">
    <source>
    </source>
</evidence>
<evidence type="ECO:0000269" key="26">
    <source>
    </source>
</evidence>
<evidence type="ECO:0000269" key="27">
    <source>
    </source>
</evidence>
<evidence type="ECO:0000269" key="28">
    <source ref="8"/>
</evidence>
<evidence type="ECO:0000269" key="29">
    <source ref="9"/>
</evidence>
<evidence type="ECO:0000303" key="30">
    <source>
    </source>
</evidence>
<evidence type="ECO:0000305" key="31"/>
<evidence type="ECO:0000312" key="32">
    <source>
        <dbReference type="HGNC" id="HGNC:4396"/>
    </source>
</evidence>
<evidence type="ECO:0000312" key="33">
    <source>
        <dbReference type="PDB" id="8JSP"/>
    </source>
</evidence>
<evidence type="ECO:0007744" key="34">
    <source>
        <dbReference type="PDB" id="6G79"/>
    </source>
</evidence>
<evidence type="ECO:0007744" key="35">
    <source>
        <dbReference type="PDB" id="7DFL"/>
    </source>
</evidence>
<evidence type="ECO:0007744" key="36">
    <source>
        <dbReference type="PDB" id="7E2X"/>
    </source>
</evidence>
<evidence type="ECO:0007744" key="37">
    <source>
        <dbReference type="PDB" id="7E2Y"/>
    </source>
</evidence>
<evidence type="ECO:0007744" key="38">
    <source>
        <dbReference type="PDB" id="7E2Z"/>
    </source>
</evidence>
<evidence type="ECO:0007744" key="39">
    <source>
        <dbReference type="PDB" id="7E32"/>
    </source>
</evidence>
<evidence type="ECO:0007744" key="40">
    <source>
        <dbReference type="PDB" id="7E33"/>
    </source>
</evidence>
<evidence type="ECO:0007744" key="41">
    <source>
        <dbReference type="PDB" id="7EJX"/>
    </source>
</evidence>
<evidence type="ECO:0007744" key="42">
    <source>
        <dbReference type="PDB" id="7EPT"/>
    </source>
</evidence>
<evidence type="ECO:0007744" key="43">
    <source>
        <dbReference type="PDB" id="7EXD"/>
    </source>
</evidence>
<evidence type="ECO:0007744" key="44">
    <source>
        <dbReference type="PDB" id="7RAN"/>
    </source>
</evidence>
<evidence type="ECO:0007744" key="45">
    <source>
        <dbReference type="PDB" id="7SF7"/>
    </source>
</evidence>
<evidence type="ECO:0007744" key="46">
    <source>
        <dbReference type="PDB" id="7SF8"/>
    </source>
</evidence>
<evidence type="ECO:0007744" key="47">
    <source>
        <dbReference type="PDB" id="7SRR"/>
    </source>
</evidence>
<evidence type="ECO:0007744" key="48">
    <source>
        <dbReference type="PDB" id="7UM5"/>
    </source>
</evidence>
<evidence type="ECO:0007744" key="49">
    <source>
        <dbReference type="PDB" id="7UM6"/>
    </source>
</evidence>
<evidence type="ECO:0007744" key="50">
    <source>
        <dbReference type="PDB" id="7UM7"/>
    </source>
</evidence>
<evidence type="ECO:0007744" key="51">
    <source>
        <dbReference type="PDB" id="7WU2"/>
    </source>
</evidence>
<evidence type="ECO:0007744" key="52">
    <source>
        <dbReference type="PDB" id="7WU3"/>
    </source>
</evidence>
<evidence type="ECO:0007744" key="53">
    <source>
        <dbReference type="PDB" id="7WUI"/>
    </source>
</evidence>
<evidence type="ECO:0007744" key="54">
    <source>
        <dbReference type="PDB" id="7WUQ"/>
    </source>
</evidence>
<evidence type="ECO:0007744" key="55">
    <source>
        <dbReference type="PDB" id="7WZ4"/>
    </source>
</evidence>
<evidence type="ECO:0007744" key="56">
    <source>
        <dbReference type="PDB" id="7X5H"/>
    </source>
</evidence>
<evidence type="ECO:0007744" key="57">
    <source>
        <dbReference type="PDB" id="7XKD"/>
    </source>
</evidence>
<evidence type="ECO:0007744" key="58">
    <source>
        <dbReference type="PDB" id="7XKF"/>
    </source>
</evidence>
<evidence type="ECO:0007744" key="59">
    <source>
        <dbReference type="PDB" id="7XT8"/>
    </source>
</evidence>
<evidence type="ECO:0007744" key="60">
    <source>
        <dbReference type="PDB" id="7XT9"/>
    </source>
</evidence>
<evidence type="ECO:0007744" key="61">
    <source>
        <dbReference type="PDB" id="7YS6"/>
    </source>
</evidence>
<evidence type="ECO:0007744" key="62">
    <source>
        <dbReference type="PDB" id="8JLN"/>
    </source>
</evidence>
<evidence type="ECO:0007744" key="63">
    <source>
        <dbReference type="PDB" id="8JLO"/>
    </source>
</evidence>
<evidence type="ECO:0007744" key="64">
    <source>
        <dbReference type="PDB" id="8JLP"/>
    </source>
</evidence>
<evidence type="ECO:0007744" key="65">
    <source>
        <dbReference type="PDB" id="8JLQ"/>
    </source>
</evidence>
<evidence type="ECO:0007744" key="66">
    <source>
        <dbReference type="PDB" id="8JLR"/>
    </source>
</evidence>
<evidence type="ECO:0007744" key="67">
    <source>
        <dbReference type="PDB" id="8JLZ"/>
    </source>
</evidence>
<evidence type="ECO:0007744" key="68">
    <source>
        <dbReference type="PDB" id="8JSO"/>
    </source>
</evidence>
<evidence type="ECO:0007744" key="69">
    <source>
        <dbReference type="PDB" id="8JT6"/>
    </source>
</evidence>
<evidence type="ECO:0007744" key="70">
    <source>
        <dbReference type="PDB" id="8UHB"/>
    </source>
</evidence>
<evidence type="ECO:0007744" key="71">
    <source>
        <dbReference type="PDB" id="8UQO"/>
    </source>
</evidence>
<evidence type="ECO:0007744" key="72">
    <source>
        <dbReference type="PDB" id="8VY7"/>
    </source>
</evidence>
<evidence type="ECO:0007744" key="73">
    <source>
        <dbReference type="PDB" id="8VY9"/>
    </source>
</evidence>
<evidence type="ECO:0007744" key="74">
    <source>
        <dbReference type="PDB" id="8W87"/>
    </source>
</evidence>
<evidence type="ECO:0007744" key="75">
    <source>
        <dbReference type="PDB" id="8W88"/>
    </source>
</evidence>
<evidence type="ECO:0007744" key="76">
    <source>
        <dbReference type="PDB" id="8W89"/>
    </source>
</evidence>
<evidence type="ECO:0007744" key="77">
    <source>
        <dbReference type="PDB" id="8W8B"/>
    </source>
</evidence>
<evidence type="ECO:0007744" key="78">
    <source>
        <dbReference type="PDB" id="8WC8"/>
    </source>
</evidence>
<evidence type="ECO:0007744" key="79">
    <source>
        <dbReference type="PDB" id="8WCA"/>
    </source>
</evidence>
<evidence type="ECO:0007744" key="80">
    <source>
        <dbReference type="PDB" id="8XQL"/>
    </source>
</evidence>
<evidence type="ECO:0007744" key="81">
    <source>
        <dbReference type="PDB" id="8XQN"/>
    </source>
</evidence>
<evidence type="ECO:0007744" key="82">
    <source>
        <dbReference type="PDB" id="8XQO"/>
    </source>
</evidence>
<evidence type="ECO:0007744" key="83">
    <source>
        <dbReference type="PDB" id="8XQP"/>
    </source>
</evidence>
<evidence type="ECO:0007744" key="84">
    <source>
        <dbReference type="PDB" id="8XQR"/>
    </source>
</evidence>
<evidence type="ECO:0007744" key="85">
    <source>
        <dbReference type="PDB" id="8XQS"/>
    </source>
</evidence>
<evidence type="ECO:0007744" key="86">
    <source>
        <dbReference type="PDB" id="8XQT"/>
    </source>
</evidence>
<evidence type="ECO:0007744" key="87">
    <source>
        <dbReference type="PDB" id="8YKY"/>
    </source>
</evidence>
<evidence type="ECO:0007744" key="88">
    <source>
    </source>
</evidence>
<evidence type="ECO:0007744" key="89">
    <source>
    </source>
</evidence>
<evidence type="ECO:0007744" key="90">
    <source>
    </source>
</evidence>
<evidence type="ECO:0007744" key="91">
    <source>
    </source>
</evidence>
<evidence type="ECO:0007829" key="92">
    <source>
        <dbReference type="PDB" id="6CRK"/>
    </source>
</evidence>
<evidence type="ECO:0007829" key="93">
    <source>
        <dbReference type="PDB" id="6WZG"/>
    </source>
</evidence>
<evidence type="ECO:0007829" key="94">
    <source>
        <dbReference type="PDB" id="7S8M"/>
    </source>
</evidence>
<evidence type="ECO:0007829" key="95">
    <source>
        <dbReference type="PDB" id="7Y66"/>
    </source>
</evidence>
<evidence type="ECO:0007829" key="96">
    <source>
        <dbReference type="PDB" id="8F0J"/>
    </source>
</evidence>
<evidence type="ECO:0007829" key="97">
    <source>
        <dbReference type="PDB" id="8F0K"/>
    </source>
</evidence>
<evidence type="ECO:0007829" key="98">
    <source>
        <dbReference type="PDB" id="8GEC"/>
    </source>
</evidence>
<evidence type="ECO:0007829" key="99">
    <source>
        <dbReference type="PDB" id="8HQN"/>
    </source>
</evidence>
<evidence type="ECO:0007829" key="100">
    <source>
        <dbReference type="PDB" id="8IOD"/>
    </source>
</evidence>
<evidence type="ECO:0007829" key="101">
    <source>
        <dbReference type="PDB" id="8J20"/>
    </source>
</evidence>
<evidence type="ECO:0007829" key="102">
    <source>
        <dbReference type="PDB" id="8J21"/>
    </source>
</evidence>
<evidence type="ECO:0007829" key="103">
    <source>
        <dbReference type="PDB" id="8JR9"/>
    </source>
</evidence>
<evidence type="ECO:0007829" key="104">
    <source>
        <dbReference type="PDB" id="8ZJD"/>
    </source>
</evidence>
<proteinExistence type="evidence at protein level"/>
<accession>P62873</accession>
<accession>B1AJZ7</accession>
<accession>P04697</accession>
<accession>P04901</accession>
<accession>Q1RMY8</accession>
<feature type="initiator methionine" description="Removed" evidence="28 29 88 89 91">
    <location>
        <position position="1"/>
    </location>
</feature>
<feature type="chain" id="PRO_0000127687" description="Guanine nucleotide-binding protein G(I)/G(S)/G(T) subunit beta-1">
    <location>
        <begin position="2"/>
        <end position="340"/>
    </location>
</feature>
<feature type="repeat" description="WD 1" evidence="26 27 72 73 80 81 82 83 84 85 86 87">
    <location>
        <begin position="46"/>
        <end position="94"/>
    </location>
</feature>
<feature type="repeat" description="WD 2" evidence="26 27 72 73 80 81 82 83 84 85 86 87">
    <location>
        <begin position="95"/>
        <end position="140"/>
    </location>
</feature>
<feature type="repeat" description="WD 3" evidence="26 27 72 73 80 81 82 83 84 85 86 87">
    <location>
        <begin position="141"/>
        <end position="181"/>
    </location>
</feature>
<feature type="repeat" description="WD 4" evidence="26 27 72 73 80 81 82 83 84 85 86 87">
    <location>
        <begin position="182"/>
        <end position="223"/>
    </location>
</feature>
<feature type="repeat" description="WD 5" evidence="26 27 72 73 80 81 82 83 84 85 86 87">
    <location>
        <begin position="224"/>
        <end position="267"/>
    </location>
</feature>
<feature type="repeat" description="WD 6" evidence="26 27 72 73 80 81 82 83 84 85 86 87">
    <location>
        <begin position="268"/>
        <end position="309"/>
    </location>
</feature>
<feature type="repeat" description="WD 7" evidence="26 27 72 73 80 81 82 83 84 85 86 87">
    <location>
        <begin position="310"/>
        <end position="340"/>
    </location>
</feature>
<feature type="modified residue" description="N-acetylserine" evidence="28 29 88 89 91">
    <location>
        <position position="2"/>
    </location>
</feature>
<feature type="modified residue" description="Phosphoserine" evidence="90">
    <location>
        <position position="2"/>
    </location>
</feature>
<feature type="modified residue" description="Phosphohistidine" evidence="2">
    <location>
        <position position="266"/>
    </location>
</feature>
<feature type="splice variant" id="VSP_055232" description="In isoform 2." evidence="30">
    <original>TGSWDSFLKIWN</original>
    <variation>SVLG</variation>
    <location>
        <begin position="329"/>
        <end position="340"/>
    </location>
</feature>
<feature type="sequence variant" id="VAR_078279" description="In MRD42; uncertain significance; no effect on protein abundance; no effect on complex formation with gamma subunit; no effect on trimer formation with alpha and gamma subunits; no effect on receptor-driven G protein activation; dbSNP:rs764997309." evidence="9">
    <original>L</original>
    <variation>F</variation>
    <location>
        <position position="30"/>
    </location>
</feature>
<feature type="sequence variant" id="VAR_078280" description="In MRD42; decreases receptor-driven G protein activation; no effect on protein abundance; no effect on complex formation with gamma subunit; decreases trimer formation with alpha and gamma subunit." evidence="9">
    <original>R</original>
    <variation>G</variation>
    <location>
        <position position="52"/>
    </location>
</feature>
<feature type="sequence variant" id="VAR_078281" description="In MRD42; decreases receptor-driven G protein activation; decreases protein abundance; decreases complex formation with gamma subunit; decreases trimer formation with alpha and gamma subunit." evidence="9">
    <original>G</original>
    <variation>V</variation>
    <location>
        <position position="64"/>
    </location>
</feature>
<feature type="sequence variant" id="VAR_076644" description="In MRD42; dbSNP:rs869312822." evidence="7">
    <original>D</original>
    <variation>E</variation>
    <location>
        <position position="76"/>
    </location>
</feature>
<feature type="sequence variant" id="VAR_076643" description="In MRD42; dbSNP:rs869312821." evidence="7">
    <original>D</original>
    <variation>G</variation>
    <location>
        <position position="76"/>
    </location>
</feature>
<feature type="sequence variant" id="VAR_076645" description="In MRD42; dbSNP:rs758432471." evidence="7">
    <original>G</original>
    <variation>S</variation>
    <location>
        <position position="77"/>
    </location>
</feature>
<feature type="sequence variant" id="VAR_076646" description="In MRD42; dbSNP:rs869312823." evidence="7">
    <original>K</original>
    <variation>R</variation>
    <location>
        <position position="78"/>
    </location>
</feature>
<feature type="sequence variant" id="VAR_076647" description="In MRD42; also found in patients with acute lymphoblastic T-cell leukemia; reduces interaction with GNAI2, GNAI3, GNA13 and GNA11; induces activation of PI3K-AKT-mTOR and MAPK pathways; dbSNP:rs752746786." evidence="6 7">
    <original>I</original>
    <variation>N</variation>
    <location>
        <position position="80"/>
    </location>
</feature>
<feature type="sequence variant" id="VAR_076648" description="In MRD42; also found in patient with hematologic malignancies; reduces interaction with GNAI2, GNAI3, GNA13 and GNA11; induces activation of PI3K-AKT-mTOR and MAPK pathways; dbSNP:rs752746786." evidence="6 7">
    <original>I</original>
    <variation>T</variation>
    <location>
        <position position="80"/>
    </location>
</feature>
<feature type="sequence variant" id="VAR_078282" description="In MRD42; uncertain significance; no effect on protein abundance; no effect on complex formation with gamma subunit; no effect on trimer formation with apha and gamma subunits; no effect on receptor-driven G protein activation." evidence="9">
    <original>H</original>
    <variation>R</variation>
    <location>
        <position position="91"/>
    </location>
</feature>
<feature type="sequence variant" id="VAR_078283" description="In MRD42; decreases receptor-driven G protein activation; increases trimer formation with alpha and gamma subunits; no effect on protein abundance; no effect on complex formation with gamma subunit." evidence="9">
    <original>A</original>
    <variation>T</variation>
    <location>
        <position position="92"/>
    </location>
</feature>
<feature type="sequence variant" id="VAR_078284" description="In MRD42; decreases receptor-driven G protein activation; decreases trimer formation with alpha and gamma subunit; no effect on protein abundance;no effect on complex formation with gamma subunit." evidence="9">
    <original>P</original>
    <variation>S</variation>
    <location>
        <position position="94"/>
    </location>
</feature>
<feature type="sequence variant" id="VAR_076649" description="In MRD42; dbSNP:rs869312824." evidence="7">
    <original>L</original>
    <variation>P</variation>
    <location>
        <position position="95"/>
    </location>
</feature>
<feature type="sequence variant" id="VAR_078285" description="In MRD42; decreases receptor-driven G protein activation; decreases trimer formation with alpha and gamma subunit; no effect on protein abundance; no effect on complex formation with gamma subunit." evidence="9">
    <original>R</original>
    <variation>L</variation>
    <location>
        <position position="96"/>
    </location>
</feature>
<feature type="sequence variant" id="VAR_076650" description="In MRD42; dbSNP:rs869312825." evidence="7">
    <original>M</original>
    <variation>V</variation>
    <location>
        <position position="101"/>
    </location>
</feature>
<feature type="sequence variant" id="VAR_078286" description="In MRD42; decreases receptor-driven G protein activation; decreases complex formation with gamma subunit; decreases trimer formation with alpha and gamma subunit; no effect on protein abundance." evidence="9">
    <original>A</original>
    <variation>T</variation>
    <location>
        <position position="106"/>
    </location>
</feature>
<feature type="sequence variant" id="VAR_078287" description="In MRD42; decreases receptor-driven G protein activation; no effect on protein abundance; no effect on complex formation with gamma subunit; no effect on trimer formation with alpha and gamma subunits; dbSNP:rs1553194162." evidence="8 9">
    <original>D</original>
    <variation>G</variation>
    <location>
        <position position="118"/>
    </location>
</feature>
<feature type="sequence variant" id="VAR_076651" description="In MRD42; dbSNP:rs869312826." evidence="7">
    <original>A</original>
    <variation>T</variation>
    <location>
        <position position="326"/>
    </location>
</feature>
<feature type="sequence variant" id="VAR_078288" description="In MRD42; uncertain significance; no effect on protein abundance; no effect on complex formation with gamma subunit; no effect on trimer formation with alpha and gamma subunits; no effect on receptor-driven G protein activation." evidence="9">
    <original>K</original>
    <variation>Q</variation>
    <location>
        <position position="337"/>
    </location>
</feature>
<feature type="helix" evidence="97">
    <location>
        <begin position="3"/>
        <end position="25"/>
    </location>
</feature>
<feature type="helix" evidence="97">
    <location>
        <begin position="30"/>
        <end position="33"/>
    </location>
</feature>
<feature type="turn" evidence="92">
    <location>
        <begin position="34"/>
        <end position="36"/>
    </location>
</feature>
<feature type="strand" evidence="97">
    <location>
        <begin position="46"/>
        <end position="52"/>
    </location>
</feature>
<feature type="strand" evidence="99">
    <location>
        <begin position="54"/>
        <end position="56"/>
    </location>
</feature>
<feature type="strand" evidence="97">
    <location>
        <begin position="58"/>
        <end position="63"/>
    </location>
</feature>
<feature type="strand" evidence="97">
    <location>
        <begin position="67"/>
        <end position="74"/>
    </location>
</feature>
<feature type="turn" evidence="97">
    <location>
        <begin position="75"/>
        <end position="77"/>
    </location>
</feature>
<feature type="strand" evidence="97">
    <location>
        <begin position="78"/>
        <end position="83"/>
    </location>
</feature>
<feature type="turn" evidence="97">
    <location>
        <begin position="84"/>
        <end position="86"/>
    </location>
</feature>
<feature type="strand" evidence="97">
    <location>
        <begin position="89"/>
        <end position="94"/>
    </location>
</feature>
<feature type="strand" evidence="97">
    <location>
        <begin position="96"/>
        <end position="98"/>
    </location>
</feature>
<feature type="strand" evidence="97">
    <location>
        <begin position="100"/>
        <end position="105"/>
    </location>
</feature>
<feature type="strand" evidence="97">
    <location>
        <begin position="109"/>
        <end position="116"/>
    </location>
</feature>
<feature type="strand" evidence="95">
    <location>
        <begin position="117"/>
        <end position="119"/>
    </location>
</feature>
<feature type="strand" evidence="97">
    <location>
        <begin position="121"/>
        <end position="126"/>
    </location>
</feature>
<feature type="strand" evidence="96">
    <location>
        <begin position="129"/>
        <end position="131"/>
    </location>
</feature>
<feature type="strand" evidence="97">
    <location>
        <begin position="134"/>
        <end position="139"/>
    </location>
</feature>
<feature type="strand" evidence="97">
    <location>
        <begin position="146"/>
        <end position="161"/>
    </location>
</feature>
<feature type="turn" evidence="94">
    <location>
        <begin position="162"/>
        <end position="164"/>
    </location>
</feature>
<feature type="strand" evidence="97">
    <location>
        <begin position="166"/>
        <end position="170"/>
    </location>
</feature>
<feature type="turn" evidence="97">
    <location>
        <begin position="171"/>
        <end position="174"/>
    </location>
</feature>
<feature type="strand" evidence="97">
    <location>
        <begin position="175"/>
        <end position="180"/>
    </location>
</feature>
<feature type="strand" evidence="97">
    <location>
        <begin position="187"/>
        <end position="192"/>
    </location>
</feature>
<feature type="turn" evidence="101">
    <location>
        <begin position="193"/>
        <end position="195"/>
    </location>
</feature>
<feature type="strand" evidence="97">
    <location>
        <begin position="196"/>
        <end position="203"/>
    </location>
</feature>
<feature type="strand" evidence="97">
    <location>
        <begin position="206"/>
        <end position="212"/>
    </location>
</feature>
<feature type="turn" evidence="97">
    <location>
        <begin position="213"/>
        <end position="215"/>
    </location>
</feature>
<feature type="strand" evidence="97">
    <location>
        <begin position="218"/>
        <end position="223"/>
    </location>
</feature>
<feature type="strand" evidence="98">
    <location>
        <begin position="225"/>
        <end position="227"/>
    </location>
</feature>
<feature type="strand" evidence="97">
    <location>
        <begin position="229"/>
        <end position="234"/>
    </location>
</feature>
<feature type="turn" evidence="102">
    <location>
        <begin position="235"/>
        <end position="237"/>
    </location>
</feature>
<feature type="strand" evidence="97">
    <location>
        <begin position="238"/>
        <end position="245"/>
    </location>
</feature>
<feature type="turn" evidence="100">
    <location>
        <begin position="246"/>
        <end position="248"/>
    </location>
</feature>
<feature type="strand" evidence="97">
    <location>
        <begin position="250"/>
        <end position="254"/>
    </location>
</feature>
<feature type="turn" evidence="97">
    <location>
        <begin position="255"/>
        <end position="258"/>
    </location>
</feature>
<feature type="strand" evidence="97">
    <location>
        <begin position="259"/>
        <end position="264"/>
    </location>
</feature>
<feature type="helix" evidence="104">
    <location>
        <begin position="267"/>
        <end position="269"/>
    </location>
</feature>
<feature type="strand" evidence="97">
    <location>
        <begin position="273"/>
        <end position="278"/>
    </location>
</feature>
<feature type="strand" evidence="97">
    <location>
        <begin position="280"/>
        <end position="289"/>
    </location>
</feature>
<feature type="strand" evidence="103">
    <location>
        <begin position="290"/>
        <end position="292"/>
    </location>
</feature>
<feature type="strand" evidence="97">
    <location>
        <begin position="294"/>
        <end position="298"/>
    </location>
</feature>
<feature type="turn" evidence="97">
    <location>
        <begin position="299"/>
        <end position="301"/>
    </location>
</feature>
<feature type="strand" evidence="97">
    <location>
        <begin position="304"/>
        <end position="308"/>
    </location>
</feature>
<feature type="strand" evidence="97">
    <location>
        <begin position="315"/>
        <end position="320"/>
    </location>
</feature>
<feature type="strand" evidence="93">
    <location>
        <begin position="322"/>
        <end position="325"/>
    </location>
</feature>
<feature type="strand" evidence="97">
    <location>
        <begin position="327"/>
        <end position="331"/>
    </location>
</feature>
<feature type="strand" evidence="97">
    <location>
        <begin position="334"/>
        <end position="340"/>
    </location>
</feature>
<gene>
    <name evidence="32" type="primary">GNB1</name>
</gene>
<protein>
    <recommendedName>
        <fullName>Guanine nucleotide-binding protein G(I)/G(S)/G(T) subunit beta-1</fullName>
    </recommendedName>
    <alternativeName>
        <fullName>Transducin beta chain 1</fullName>
    </alternativeName>
</protein>
<keyword id="KW-0002">3D-structure</keyword>
<keyword id="KW-0007">Acetylation</keyword>
<keyword id="KW-0025">Alternative splicing</keyword>
<keyword id="KW-0903">Direct protein sequencing</keyword>
<keyword id="KW-0225">Disease variant</keyword>
<keyword id="KW-0945">Host-virus interaction</keyword>
<keyword id="KW-0991">Intellectual disability</keyword>
<keyword id="KW-0597">Phosphoprotein</keyword>
<keyword id="KW-1267">Proteomics identification</keyword>
<keyword id="KW-1185">Reference proteome</keyword>
<keyword id="KW-0677">Repeat</keyword>
<keyword id="KW-0807">Transducer</keyword>
<keyword id="KW-0853">WD repeat</keyword>
<sequence length="340" mass="37377">MSELDQLRQEAEQLKNQIRDARKACADATLSQITNNIDPVGRIQMRTRRTLRGHLAKIYAMHWGTDSRLLVSASQDGKLIIWDSYTTNKVHAIPLRSSWVMTCAYAPSGNYVACGGLDNICSIYNLKTREGNVRVSRELAGHTGYLSCCRFLDDNQIVTSSGDTTCALWDIETGQQTTTFTGHTGDVMSLSLAPDTRLFVSGACDASAKLWDVREGMCRQTFTGHESDINAICFFPNGNAFATGSDDATCRLFDLRADQELMTYSHDNIICGITSVSFSKSGRLLLAGYDDFNCNVWDALKADRAGVLAGHDNRVSCLGVTDDGMAVATGSWDSFLKIWN</sequence>
<reference key="1">
    <citation type="journal article" date="1986" name="FEBS Lett.">
        <title>Beta-subunits of the human liver Gs/Gi signal-transducing proteins and those of bovine retinal rod cell transducin are identical.</title>
        <authorList>
            <person name="Codina J."/>
            <person name="Stengel D."/>
            <person name="Woo S.L.C."/>
            <person name="Birnbaumer L."/>
        </authorList>
    </citation>
    <scope>NUCLEOTIDE SEQUENCE [MRNA] (ISOFORM 1)</scope>
    <source>
        <tissue>Liver</tissue>
    </source>
</reference>
<reference key="2">
    <citation type="submission" date="2002-03" db="EMBL/GenBank/DDBJ databases">
        <title>cDNA clones of human proteins involved in signal transduction sequenced by the Guthrie cDNA resource center (www.cdna.org).</title>
        <authorList>
            <person name="Puhl H.L. III"/>
            <person name="Ikeda S.R."/>
            <person name="Aronstam R.S."/>
        </authorList>
    </citation>
    <scope>NUCLEOTIDE SEQUENCE [LARGE SCALE MRNA] (ISOFORM 1)</scope>
</reference>
<reference key="3">
    <citation type="submission" date="2003-05" db="EMBL/GenBank/DDBJ databases">
        <title>Cloning of human full-length CDSs in BD Creator(TM) system donor vector.</title>
        <authorList>
            <person name="Kalnine N."/>
            <person name="Chen X."/>
            <person name="Rolfs A."/>
            <person name="Halleck A."/>
            <person name="Hines L."/>
            <person name="Eisenstein S."/>
            <person name="Koundinya M."/>
            <person name="Raphael J."/>
            <person name="Moreira D."/>
            <person name="Kelley T."/>
            <person name="LaBaer J."/>
            <person name="Lin Y."/>
            <person name="Phelan M."/>
            <person name="Farmer A."/>
        </authorList>
    </citation>
    <scope>NUCLEOTIDE SEQUENCE [LARGE SCALE MRNA] (ISOFORM 1)</scope>
</reference>
<reference key="4">
    <citation type="submission" date="2004-06" db="EMBL/GenBank/DDBJ databases">
        <title>Cloning of human full open reading frames in Gateway(TM) system entry vector (pDONR201).</title>
        <authorList>
            <person name="Ebert L."/>
            <person name="Schick M."/>
            <person name="Neubert P."/>
            <person name="Schatten R."/>
            <person name="Henze S."/>
            <person name="Korn B."/>
        </authorList>
    </citation>
    <scope>NUCLEOTIDE SEQUENCE [LARGE SCALE MRNA] (ISOFORM 1)</scope>
</reference>
<reference key="5">
    <citation type="journal article" date="2006" name="Nature">
        <title>The DNA sequence and biological annotation of human chromosome 1.</title>
        <authorList>
            <person name="Gregory S.G."/>
            <person name="Barlow K.F."/>
            <person name="McLay K.E."/>
            <person name="Kaul R."/>
            <person name="Swarbreck D."/>
            <person name="Dunham A."/>
            <person name="Scott C.E."/>
            <person name="Howe K.L."/>
            <person name="Woodfine K."/>
            <person name="Spencer C.C.A."/>
            <person name="Jones M.C."/>
            <person name="Gillson C."/>
            <person name="Searle S."/>
            <person name="Zhou Y."/>
            <person name="Kokocinski F."/>
            <person name="McDonald L."/>
            <person name="Evans R."/>
            <person name="Phillips K."/>
            <person name="Atkinson A."/>
            <person name="Cooper R."/>
            <person name="Jones C."/>
            <person name="Hall R.E."/>
            <person name="Andrews T.D."/>
            <person name="Lloyd C."/>
            <person name="Ainscough R."/>
            <person name="Almeida J.P."/>
            <person name="Ambrose K.D."/>
            <person name="Anderson F."/>
            <person name="Andrew R.W."/>
            <person name="Ashwell R.I.S."/>
            <person name="Aubin K."/>
            <person name="Babbage A.K."/>
            <person name="Bagguley C.L."/>
            <person name="Bailey J."/>
            <person name="Beasley H."/>
            <person name="Bethel G."/>
            <person name="Bird C.P."/>
            <person name="Bray-Allen S."/>
            <person name="Brown J.Y."/>
            <person name="Brown A.J."/>
            <person name="Buckley D."/>
            <person name="Burton J."/>
            <person name="Bye J."/>
            <person name="Carder C."/>
            <person name="Chapman J.C."/>
            <person name="Clark S.Y."/>
            <person name="Clarke G."/>
            <person name="Clee C."/>
            <person name="Cobley V."/>
            <person name="Collier R.E."/>
            <person name="Corby N."/>
            <person name="Coville G.J."/>
            <person name="Davies J."/>
            <person name="Deadman R."/>
            <person name="Dunn M."/>
            <person name="Earthrowl M."/>
            <person name="Ellington A.G."/>
            <person name="Errington H."/>
            <person name="Frankish A."/>
            <person name="Frankland J."/>
            <person name="French L."/>
            <person name="Garner P."/>
            <person name="Garnett J."/>
            <person name="Gay L."/>
            <person name="Ghori M.R.J."/>
            <person name="Gibson R."/>
            <person name="Gilby L.M."/>
            <person name="Gillett W."/>
            <person name="Glithero R.J."/>
            <person name="Grafham D.V."/>
            <person name="Griffiths C."/>
            <person name="Griffiths-Jones S."/>
            <person name="Grocock R."/>
            <person name="Hammond S."/>
            <person name="Harrison E.S.I."/>
            <person name="Hart E."/>
            <person name="Haugen E."/>
            <person name="Heath P.D."/>
            <person name="Holmes S."/>
            <person name="Holt K."/>
            <person name="Howden P.J."/>
            <person name="Hunt A.R."/>
            <person name="Hunt S.E."/>
            <person name="Hunter G."/>
            <person name="Isherwood J."/>
            <person name="James R."/>
            <person name="Johnson C."/>
            <person name="Johnson D."/>
            <person name="Joy A."/>
            <person name="Kay M."/>
            <person name="Kershaw J.K."/>
            <person name="Kibukawa M."/>
            <person name="Kimberley A.M."/>
            <person name="King A."/>
            <person name="Knights A.J."/>
            <person name="Lad H."/>
            <person name="Laird G."/>
            <person name="Lawlor S."/>
            <person name="Leongamornlert D.A."/>
            <person name="Lloyd D.M."/>
            <person name="Loveland J."/>
            <person name="Lovell J."/>
            <person name="Lush M.J."/>
            <person name="Lyne R."/>
            <person name="Martin S."/>
            <person name="Mashreghi-Mohammadi M."/>
            <person name="Matthews L."/>
            <person name="Matthews N.S.W."/>
            <person name="McLaren S."/>
            <person name="Milne S."/>
            <person name="Mistry S."/>
            <person name="Moore M.J.F."/>
            <person name="Nickerson T."/>
            <person name="O'Dell C.N."/>
            <person name="Oliver K."/>
            <person name="Palmeiri A."/>
            <person name="Palmer S.A."/>
            <person name="Parker A."/>
            <person name="Patel D."/>
            <person name="Pearce A.V."/>
            <person name="Peck A.I."/>
            <person name="Pelan S."/>
            <person name="Phelps K."/>
            <person name="Phillimore B.J."/>
            <person name="Plumb R."/>
            <person name="Rajan J."/>
            <person name="Raymond C."/>
            <person name="Rouse G."/>
            <person name="Saenphimmachak C."/>
            <person name="Sehra H.K."/>
            <person name="Sheridan E."/>
            <person name="Shownkeen R."/>
            <person name="Sims S."/>
            <person name="Skuce C.D."/>
            <person name="Smith M."/>
            <person name="Steward C."/>
            <person name="Subramanian S."/>
            <person name="Sycamore N."/>
            <person name="Tracey A."/>
            <person name="Tromans A."/>
            <person name="Van Helmond Z."/>
            <person name="Wall M."/>
            <person name="Wallis J.M."/>
            <person name="White S."/>
            <person name="Whitehead S.L."/>
            <person name="Wilkinson J.E."/>
            <person name="Willey D.L."/>
            <person name="Williams H."/>
            <person name="Wilming L."/>
            <person name="Wray P.W."/>
            <person name="Wu Z."/>
            <person name="Coulson A."/>
            <person name="Vaudin M."/>
            <person name="Sulston J.E."/>
            <person name="Durbin R.M."/>
            <person name="Hubbard T."/>
            <person name="Wooster R."/>
            <person name="Dunham I."/>
            <person name="Carter N.P."/>
            <person name="McVean G."/>
            <person name="Ross M.T."/>
            <person name="Harrow J."/>
            <person name="Olson M.V."/>
            <person name="Beck S."/>
            <person name="Rogers J."/>
            <person name="Bentley D.R."/>
        </authorList>
    </citation>
    <scope>NUCLEOTIDE SEQUENCE [LARGE SCALE GENOMIC DNA]</scope>
</reference>
<reference key="6">
    <citation type="submission" date="2005-07" db="EMBL/GenBank/DDBJ databases">
        <authorList>
            <person name="Mural R.J."/>
            <person name="Istrail S."/>
            <person name="Sutton G.G."/>
            <person name="Florea L."/>
            <person name="Halpern A.L."/>
            <person name="Mobarry C.M."/>
            <person name="Lippert R."/>
            <person name="Walenz B."/>
            <person name="Shatkay H."/>
            <person name="Dew I."/>
            <person name="Miller J.R."/>
            <person name="Flanigan M.J."/>
            <person name="Edwards N.J."/>
            <person name="Bolanos R."/>
            <person name="Fasulo D."/>
            <person name="Halldorsson B.V."/>
            <person name="Hannenhalli S."/>
            <person name="Turner R."/>
            <person name="Yooseph S."/>
            <person name="Lu F."/>
            <person name="Nusskern D.R."/>
            <person name="Shue B.C."/>
            <person name="Zheng X.H."/>
            <person name="Zhong F."/>
            <person name="Delcher A.L."/>
            <person name="Huson D.H."/>
            <person name="Kravitz S.A."/>
            <person name="Mouchard L."/>
            <person name="Reinert K."/>
            <person name="Remington K.A."/>
            <person name="Clark A.G."/>
            <person name="Waterman M.S."/>
            <person name="Eichler E.E."/>
            <person name="Adams M.D."/>
            <person name="Hunkapiller M.W."/>
            <person name="Myers E.W."/>
            <person name="Venter J.C."/>
        </authorList>
    </citation>
    <scope>NUCLEOTIDE SEQUENCE [LARGE SCALE GENOMIC DNA]</scope>
</reference>
<reference key="7">
    <citation type="journal article" date="2004" name="Genome Res.">
        <title>The status, quality, and expansion of the NIH full-length cDNA project: the Mammalian Gene Collection (MGC).</title>
        <authorList>
            <consortium name="The MGC Project Team"/>
        </authorList>
    </citation>
    <scope>NUCLEOTIDE SEQUENCE [LARGE SCALE MRNA] (ISOFORMS 1 AND 2)</scope>
    <source>
        <tissue>Brain</tissue>
        <tissue>Muscle</tissue>
        <tissue>Uterus</tissue>
    </source>
</reference>
<reference key="8">
    <citation type="submission" date="2005-07" db="UniProtKB">
        <authorList>
            <person name="Bienvenut W.V."/>
            <person name="Quadroni M."/>
        </authorList>
    </citation>
    <scope>PROTEIN SEQUENCE OF 2-15; 58-89; 284-301 AND 305-314</scope>
    <scope>CLEAVAGE OF INITIATOR METHIONINE</scope>
    <scope>ACETYLATION AT SER-2</scope>
    <scope>IDENTIFICATION BY MASS SPECTROMETRY</scope>
    <source>
        <tissue>B-cell lymphoma</tissue>
        <tissue>Melanoma</tissue>
    </source>
</reference>
<reference key="9">
    <citation type="submission" date="2008-12" db="UniProtKB">
        <authorList>
            <person name="Bienvenut W.V."/>
            <person name="Lilla S."/>
            <person name="von Kriegsheim A."/>
            <person name="Lempens A."/>
            <person name="Kolch W."/>
        </authorList>
    </citation>
    <scope>PROTEIN SEQUENCE OF 2-8; 69-78 AND 90-96</scope>
    <scope>CLEAVAGE OF INITIATOR METHIONINE</scope>
    <scope>ACETYLATION AT SER-2</scope>
    <scope>IDENTIFICATION BY MASS SPECTROMETRY</scope>
    <source>
        <tissue>Ovarian carcinoma</tissue>
    </source>
</reference>
<reference key="10">
    <citation type="submission" date="2008-12" db="UniProtKB">
        <authorList>
            <person name="Lubec G."/>
            <person name="Chen W.-Q."/>
            <person name="Sun Y."/>
        </authorList>
    </citation>
    <scope>PROTEIN SEQUENCE OF 23-42; 58-78; 138-150; 198-209 AND 315-337</scope>
    <scope>IDENTIFICATION BY MASS SPECTROMETRY</scope>
    <source>
        <tissue>Fetal brain cortex</tissue>
    </source>
</reference>
<reference key="11">
    <citation type="journal article" date="2003" name="Circ. Res.">
        <title>G Protein betagamma subunits stimulate p114RhoGEF, a guanine nucleotide exchange factor for RhoA and Rac1: regulation of cell shape and reactive oxygen species production.</title>
        <authorList>
            <person name="Niu J."/>
            <person name="Profirovic J."/>
            <person name="Pan H."/>
            <person name="Vaiskunaite R."/>
            <person name="Voyno-Yasenetskaya T."/>
        </authorList>
    </citation>
    <scope>INTERACTION WITH ARHGEF18</scope>
</reference>
<reference key="12">
    <citation type="journal article" date="2009" name="Anal. Chem.">
        <title>Lys-N and trypsin cover complementary parts of the phosphoproteome in a refined SCX-based approach.</title>
        <authorList>
            <person name="Gauci S."/>
            <person name="Helbig A.O."/>
            <person name="Slijper M."/>
            <person name="Krijgsveld J."/>
            <person name="Heck A.J."/>
            <person name="Mohammed S."/>
        </authorList>
    </citation>
    <scope>ACETYLATION [LARGE SCALE ANALYSIS] AT SER-2</scope>
    <scope>CLEAVAGE OF INITIATOR METHIONINE [LARGE SCALE ANALYSIS]</scope>
    <scope>IDENTIFICATION BY MASS SPECTROMETRY [LARGE SCALE ANALYSIS]</scope>
</reference>
<reference key="13">
    <citation type="journal article" date="2009" name="Cell. Physiol. Biochem.">
        <title>The cationic region of Rhes mediates its interactions with specific Gbeta subunits.</title>
        <authorList>
            <person name="Hill C."/>
            <person name="Goddard A."/>
            <person name="Ladds G."/>
            <person name="Davey J."/>
        </authorList>
    </citation>
    <scope>INTERACTION WITH RASD2</scope>
</reference>
<reference key="14">
    <citation type="journal article" date="2009" name="J. Biol. Chem.">
        <title>Regulation of immature dendritic cell migration by RhoA guanine nucleotide exchange factor Arhgef5.</title>
        <authorList>
            <person name="Wang Z."/>
            <person name="Kumamoto Y."/>
            <person name="Wang P."/>
            <person name="Gan X."/>
            <person name="Lehmann D."/>
            <person name="Smrcka A.V."/>
            <person name="Cohn L."/>
            <person name="Iwasaki A."/>
            <person name="Li L."/>
            <person name="Wu D."/>
        </authorList>
    </citation>
    <scope>INTERACTION WITH ARHGEF5</scope>
</reference>
<reference key="15">
    <citation type="journal article" date="2011" name="BMC Syst. Biol.">
        <title>Initial characterization of the human central proteome.</title>
        <authorList>
            <person name="Burkard T.R."/>
            <person name="Planyavsky M."/>
            <person name="Kaupe I."/>
            <person name="Breitwieser F.P."/>
            <person name="Buerckstuemmer T."/>
            <person name="Bennett K.L."/>
            <person name="Superti-Furga G."/>
            <person name="Colinge J."/>
        </authorList>
    </citation>
    <scope>IDENTIFICATION BY MASS SPECTROMETRY [LARGE SCALE ANALYSIS]</scope>
</reference>
<reference key="16">
    <citation type="journal article" date="2012" name="Mol. Cell. Proteomics">
        <title>Comparative large-scale characterisation of plant vs. mammal proteins reveals similar and idiosyncratic N-alpha acetylation features.</title>
        <authorList>
            <person name="Bienvenut W.V."/>
            <person name="Sumpton D."/>
            <person name="Martinez A."/>
            <person name="Lilla S."/>
            <person name="Espagne C."/>
            <person name="Meinnel T."/>
            <person name="Giglione C."/>
        </authorList>
    </citation>
    <scope>ACETYLATION [LARGE SCALE ANALYSIS] AT SER-2</scope>
    <scope>CLEAVAGE OF INITIATOR METHIONINE [LARGE SCALE ANALYSIS]</scope>
    <scope>IDENTIFICATION BY MASS SPECTROMETRY [LARGE SCALE ANALYSIS]</scope>
</reference>
<reference key="17">
    <citation type="journal article" date="2013" name="J. Proteome Res.">
        <title>Toward a comprehensive characterization of a human cancer cell phosphoproteome.</title>
        <authorList>
            <person name="Zhou H."/>
            <person name="Di Palma S."/>
            <person name="Preisinger C."/>
            <person name="Peng M."/>
            <person name="Polat A.N."/>
            <person name="Heck A.J."/>
            <person name="Mohammed S."/>
        </authorList>
    </citation>
    <scope>PHOSPHORYLATION [LARGE SCALE ANALYSIS] AT SER-2</scope>
    <scope>IDENTIFICATION BY MASS SPECTROMETRY [LARGE SCALE ANALYSIS]</scope>
    <source>
        <tissue>Cervix carcinoma</tissue>
    </source>
</reference>
<reference key="18">
    <citation type="journal article" date="2015" name="Proteomics">
        <title>N-terminome analysis of the human mitochondrial proteome.</title>
        <authorList>
            <person name="Vaca Jacome A.S."/>
            <person name="Rabilloud T."/>
            <person name="Schaeffer-Reiss C."/>
            <person name="Rompais M."/>
            <person name="Ayoub D."/>
            <person name="Lane L."/>
            <person name="Bairoch A."/>
            <person name="Van Dorsselaer A."/>
            <person name="Carapito C."/>
        </authorList>
    </citation>
    <scope>ACETYLATION [LARGE SCALE ANALYSIS] AT SER-2</scope>
    <scope>CLEAVAGE OF INITIATOR METHIONINE [LARGE SCALE ANALYSIS]</scope>
    <scope>IDENTIFICATION BY MASS SPECTROMETRY [LARGE SCALE ANALYSIS]</scope>
</reference>
<reference key="19">
    <citation type="journal article" date="2016" name="Am. J. Hum. Genet.">
        <title>Germline de novo mutations in GNB1 cause severe neurodevelopmental disability, hypotonia, and seizures.</title>
        <authorList>
            <consortium name="University of Washington Center for Mendelian Genomics"/>
            <person name="Petrovski S."/>
            <person name="Kuery S."/>
            <person name="Myers C.T."/>
            <person name="Anyane-Yeboa K."/>
            <person name="Cogne B."/>
            <person name="Bialer M."/>
            <person name="Xia F."/>
            <person name="Hemati P."/>
            <person name="Riviello J."/>
            <person name="Mehaffey M."/>
            <person name="Besnard T."/>
            <person name="Becraft E."/>
            <person name="Wadley A."/>
            <person name="Politi A.R."/>
            <person name="Colombo S."/>
            <person name="Zhu X."/>
            <person name="Ren Z."/>
            <person name="Andrews I."/>
            <person name="Dudding-Byth T."/>
            <person name="Schneider A.L."/>
            <person name="Wallace G."/>
            <person name="Rosen A.B."/>
            <person name="Schelley S."/>
            <person name="Enns G.M."/>
            <person name="Corre P."/>
            <person name="Dalton J."/>
            <person name="Mercier S."/>
            <person name="Latypova X."/>
            <person name="Schmitt S."/>
            <person name="Guzman E."/>
            <person name="Moore C."/>
            <person name="Bier L."/>
            <person name="Heinzen E.L."/>
            <person name="Karachunski P."/>
            <person name="Shur N."/>
            <person name="Grebe T."/>
            <person name="Basinger A."/>
            <person name="Nguyen J.M."/>
            <person name="Bezieau S."/>
            <person name="Wierenga K."/>
            <person name="Bernstein J.A."/>
            <person name="Scheffer I.E."/>
            <person name="Rosenfeld J.A."/>
            <person name="Mefford H.C."/>
            <person name="Isidor B."/>
            <person name="Goldstein D.B."/>
        </authorList>
    </citation>
    <scope>INVOLVEMENT IN MRD42</scope>
    <scope>VARIANTS MRD42 GLU-76; GLY-76; SER-77; ARG-78; ASN-80; THR-80; PRO-95; VAL-101 AND THR-326</scope>
</reference>
<reference key="20">
    <citation type="journal article" date="2021" name="Cells">
        <title>Pediatric Encephalopathy: Clinical, Biochemical and Cellular Insights into the Role of Gln52 of GNAO1 and GNAI1 for the Dominant Disease.</title>
        <authorList>
            <person name="Solis G.P."/>
            <person name="Kozhanova T.V."/>
            <person name="Koval A."/>
            <person name="Zhilina S.S."/>
            <person name="Mescheryakova T.I."/>
            <person name="Abramov A.A."/>
            <person name="Ishmuratov E.V."/>
            <person name="Bolshakova E.S."/>
            <person name="Osipova K.V."/>
            <person name="Ayvazyan S.O."/>
            <person name="Lebon S."/>
            <person name="Kanivets I.V."/>
            <person name="Pyankov D.V."/>
            <person name="Troccaz S."/>
            <person name="Silachev D.N."/>
            <person name="Zavadenko N.N."/>
            <person name="Prityko A.G."/>
            <person name="Katanaev V.L."/>
        </authorList>
    </citation>
    <scope>INTERACTION WITH GNAO1 AND GNG3</scope>
</reference>
<reference key="21">
    <citation type="journal article" date="2008" name="Structure">
        <title>Structure of the parathyroid hormone receptor C terminus bound to the G-protein dimer Gbeta1gamma2.</title>
        <authorList>
            <person name="Johnston C.A."/>
            <person name="Kimple A.J."/>
            <person name="Giguere P.M."/>
            <person name="Siderovski D.P."/>
        </authorList>
    </citation>
    <scope>X-RAY CRYSTALLOGRAPHY (3.0 ANGSTROMS) IN COMPLEX WITH GNG2</scope>
    <scope>RETRACTED PAPER</scope>
</reference>
<reference key="22">
    <citation type="journal article" date="2011" name="Structure">
        <authorList>
            <person name="Johnston C.A."/>
            <person name="Kimple A.J."/>
            <person name="Giguere P.M."/>
            <person name="Siderovski D.P."/>
        </authorList>
    </citation>
    <scope>ERRATUM OF PUBMED:18611381</scope>
    <scope>RETRACTION NOTICE OF PUBMED:18611381</scope>
</reference>
<reference evidence="34" key="23">
    <citation type="journal article" date="2018" name="Nature">
        <title>Cryo-EM structure of the serotonin 5-HT1B receptor coupled to heterotrimeric Go.</title>
        <authorList>
            <person name="Garcia-Nafria J."/>
            <person name="Nehme R."/>
            <person name="Edwards P.C."/>
            <person name="Tate C.G."/>
        </authorList>
    </citation>
    <scope>STRUCTURE BY ELECTRON MICROSCOPY (3.78 ANGSTROMS) IN COMPLEX WITH HTR1B; GNAO1 AND GNG2</scope>
    <scope>FUNCTION</scope>
</reference>
<reference evidence="43" key="24">
    <citation type="journal article" date="2021" name="Cell Res.">
        <title>Structural basis for recognition of anti-migraine drug lasmiditan by the serotonin receptor 5-HT1F-G protein complex.</title>
        <authorList>
            <person name="Huang S."/>
            <person name="Xu P."/>
            <person name="Tan Y."/>
            <person name="You C."/>
            <person name="Zhang Y."/>
            <person name="Jiang Y."/>
            <person name="Xu H.E."/>
        </authorList>
    </citation>
    <scope>STRUCTURE BY ELECTRON MICROSCOPY (3.4 ANGSTROMS) IN COMPLEX WITH HTR1F; GNAI1 AND GNG2</scope>
    <scope>FUNCTION</scope>
</reference>
<reference evidence="36 37 38 39 40" key="25">
    <citation type="journal article" date="2021" name="Nature">
        <title>Structural insights into the lipid and ligand regulation of serotonin receptors.</title>
        <authorList>
            <person name="Xu P."/>
            <person name="Huang S."/>
            <person name="Zhang H."/>
            <person name="Mao C."/>
            <person name="Zhou X.E."/>
            <person name="Cheng X."/>
            <person name="Simon I.A."/>
            <person name="Shen D.D."/>
            <person name="Yen H.Y."/>
            <person name="Robinson C.V."/>
            <person name="Harpsoee K."/>
            <person name="Svensson B."/>
            <person name="Guo J."/>
            <person name="Jiang H."/>
            <person name="Gloriam D.E."/>
            <person name="Melcher K."/>
            <person name="Jiang Y."/>
            <person name="Zhang Y."/>
            <person name="Xu H.E."/>
        </authorList>
    </citation>
    <scope>STRUCTURE BY ELECTRON MICROSCOPY (3.0 ANGSTROMS) IN COMPLEX WITH GNB1; GNAI1; HTR1A; HTR1D AND HTR1E</scope>
    <scope>FUNCTION</scope>
</reference>
<reference evidence="35" key="26">
    <citation type="journal article" date="2021" name="Nat. Commun.">
        <title>Cryo-EM structure of the human histamine H1 receptor/Gq complex.</title>
        <authorList>
            <person name="Xia R."/>
            <person name="Wang N."/>
            <person name="Xu Z."/>
            <person name="Lu Y."/>
            <person name="Song J."/>
            <person name="Zhang A."/>
            <person name="Guo C."/>
            <person name="He Y."/>
        </authorList>
    </citation>
    <scope>STRUCTURE BY ELECTRON MICROSCOPY (3.30 ANGSTROMS) OF 2-340 IN COMPLEX WITH HRH1 AND GNG2</scope>
</reference>
<reference evidence="56" key="27">
    <citation type="journal article" date="2022" name="Cell Discov.">
        <title>Structural insights into the ligand binding and Gi coupling of serotonin receptor 5-HT5A.</title>
        <authorList>
            <person name="Tan Y."/>
            <person name="Xu P."/>
            <person name="Huang S."/>
            <person name="Yang G."/>
            <person name="Zhou F."/>
            <person name="He X."/>
            <person name="Ma H."/>
            <person name="Xu H.E."/>
            <person name="Jiang Y."/>
        </authorList>
    </citation>
    <scope>STRUCTURE BY ELECTRON MICROSCOPY (3.1 ANGSTROMS) IN COMPLEX WITH HTR5A; GNAI1 AND GNG2</scope>
    <scope>FUNCTION</scope>
</reference>
<reference evidence="59 60" key="28">
    <citation type="journal article" date="2022" name="Mol. Cell">
        <title>GPCRs steer Gi and Gs selectivity via TM5-TM6 switches as revealed by structures of serotonin receptors.</title>
        <authorList>
            <person name="Huang S."/>
            <person name="Xu P."/>
            <person name="Shen D.D."/>
            <person name="Simon I.A."/>
            <person name="Mao C."/>
            <person name="Tan Y."/>
            <person name="Zhang H."/>
            <person name="Harpsoee K."/>
            <person name="Li H."/>
            <person name="Zhang Y."/>
            <person name="You C."/>
            <person name="Yu X."/>
            <person name="Jiang Y."/>
            <person name="Zhang Y."/>
            <person name="Gloriam D.E."/>
            <person name="Xu H.E."/>
        </authorList>
    </citation>
    <scope>STRUCTURE BY ELECTRON MICROSCOPY (3.1 ANGSTROMS) IN COMPLEX WITH HTR4; HTR6; HTR7; GNB2 AND GNAS2</scope>
    <scope>FUNCTION</scope>
</reference>
<reference evidence="53 54" key="29">
    <citation type="journal article" date="2022" name="Nature">
        <title>Tethered peptide activation mechanism of the adhesion GPCRs ADGRG2 and ADGRG4.</title>
        <authorList>
            <person name="Xiao P."/>
            <person name="Guo S."/>
            <person name="Wen X."/>
            <person name="He Q.T."/>
            <person name="Lin H."/>
            <person name="Huang S.M."/>
            <person name="Gou L."/>
            <person name="Zhang C."/>
            <person name="Yang Z."/>
            <person name="Zhong Y.N."/>
            <person name="Yang C.C."/>
            <person name="Li Y."/>
            <person name="Gong Z."/>
            <person name="Tao X.N."/>
            <person name="Yang Z.S."/>
            <person name="Lu Y."/>
            <person name="Li S.L."/>
            <person name="He J.Y."/>
            <person name="Wang C."/>
            <person name="Zhang L."/>
            <person name="Kong L."/>
            <person name="Sun J.P."/>
            <person name="Yu X."/>
        </authorList>
    </citation>
    <scope>STRUCTURE BY ELECTRON MICROSCOPY (2.90 ANGSTROMS) OF 597-1009 IN COMPLEX WITH ADGRG2; GNAS AND GNG2</scope>
</reference>
<reference evidence="45 46" key="30">
    <citation type="journal article" date="2022" name="Nature">
        <title>The tethered peptide activation mechanism of adhesion GPCRs.</title>
        <authorList>
            <person name="Barros-Alvarez X."/>
            <person name="Nwokonko R.M."/>
            <person name="Vizurraga A."/>
            <person name="Matzov D."/>
            <person name="He F."/>
            <person name="Papasergi-Scott M.M."/>
            <person name="Robertson M.J."/>
            <person name="Panova O."/>
            <person name="Yardeni E.H."/>
            <person name="Seven A.B."/>
            <person name="Kwarcinski F.E."/>
            <person name="Su H."/>
            <person name="Peroto M.C."/>
            <person name="Meyerowitz J.G."/>
            <person name="Shalev-Benami M."/>
            <person name="Tall G.G."/>
            <person name="Skiniotis G."/>
        </authorList>
    </citation>
    <scope>STRUCTURE BY ELECTRON MICROSCOPY (2.70 ANGSTROMS) IN COMPLEX WITH ADGRG1; ADGRL3; GNA13 AND GNG2</scope>
</reference>
<reference evidence="42" key="31">
    <citation type="journal article" date="2022" name="Nature">
        <title>Structural basis for the tethered peptide activation of adhesion GPCRs.</title>
        <authorList>
            <person name="Ping Y.Q."/>
            <person name="Xiao P."/>
            <person name="Yang F."/>
            <person name="Zhao R.J."/>
            <person name="Guo S.C."/>
            <person name="Yan X."/>
            <person name="Wu X."/>
            <person name="Zhang C."/>
            <person name="Lu Y."/>
            <person name="Zhao F."/>
            <person name="Zhou F."/>
            <person name="Xi Y.T."/>
            <person name="Yin W."/>
            <person name="Liu F.Z."/>
            <person name="He D.F."/>
            <person name="Zhang D.L."/>
            <person name="Zhu Z.L."/>
            <person name="Jiang Y."/>
            <person name="Du L."/>
            <person name="Feng S.Q."/>
            <person name="Schoneberg T."/>
            <person name="Liebscher I."/>
            <person name="Xu H.E."/>
            <person name="Sun J.P."/>
        </authorList>
    </citation>
    <scope>STRUCTURE BY ELECTRON MICROSCOPY (3.00 ANGSTROMS) OF 545-827 IN COMPLEX WITH ADGRD1; GNAS AND GNG2</scope>
</reference>
<reference evidence="51 52" key="32">
    <citation type="journal article" date="2022" name="Nature">
        <title>Structural basis of tethered agonism of the adhesion GPCRs ADGRD1 and ADGRF1.</title>
        <authorList>
            <person name="Qu X."/>
            <person name="Qiu N."/>
            <person name="Wang M."/>
            <person name="Zhang B."/>
            <person name="Du J."/>
            <person name="Zhong Z."/>
            <person name="Xu W."/>
            <person name="Chu X."/>
            <person name="Ma L."/>
            <person name="Yi C."/>
            <person name="Han S."/>
            <person name="Shui W."/>
            <person name="Zhao Q."/>
            <person name="Wu B."/>
        </authorList>
    </citation>
    <scope>STRUCTURE BY ELECTRON MICROSCOPY (2.80 ANGSTROMS) OF 545-827 IN COMPLEX WITH ADGRF1; ADGRD1; GNAS AND GNG2</scope>
</reference>
<reference evidence="57 58" key="33">
    <citation type="journal article" date="2022" name="Nat. Chem. Biol.">
        <title>Structures of the ADGRG2-Gs complex in apo and ligand-bound forms.</title>
        <authorList>
            <person name="Lin H."/>
            <person name="Xiao P."/>
            <person name="Bu R.Q."/>
            <person name="Guo S."/>
            <person name="Yang Z."/>
            <person name="Yuan D."/>
            <person name="Zhu Z.L."/>
            <person name="Zhang C.X."/>
            <person name="He Q.T."/>
            <person name="Zhang C."/>
            <person name="Ping Y.Q."/>
            <person name="Zhao R.J."/>
            <person name="Ma C.S."/>
            <person name="Liu C.H."/>
            <person name="Zhang X.N."/>
            <person name="Jiang D."/>
            <person name="Huang S."/>
            <person name="Xi Y.T."/>
            <person name="Zhang D.L."/>
            <person name="Xue C.Y."/>
            <person name="Yang B.S."/>
            <person name="Li J.Y."/>
            <person name="Lin H.C."/>
            <person name="Zeng X.H."/>
            <person name="Zhao H."/>
            <person name="Xu W.M."/>
            <person name="Yi F."/>
            <person name="Liu Z."/>
            <person name="Sun J.P."/>
            <person name="Yu X."/>
        </authorList>
    </citation>
    <scope>STRUCTURE BY ELECTRON MICROSCOPY (2.40 ANGSTROMS) OF 614-891 IN COMPLEX WITH ADGRG2; GNAS AND GNG2</scope>
</reference>
<reference evidence="44" key="34">
    <citation type="journal article" date="2022" name="Nature">
        <title>Bespoke library docking for 5-HT2A receptor agonists with antidepressant activity.</title>
        <authorList>
            <person name="Kaplan A.L."/>
            <person name="Confair D.N."/>
            <person name="Kim K."/>
            <person name="Barros-Alvarez X."/>
            <person name="Rodriguiz R.M."/>
            <person name="Yang Y."/>
            <person name="Kweon O.S."/>
            <person name="Che T."/>
            <person name="McCorvy J.D."/>
            <person name="Kamber D.N."/>
            <person name="Phelan J.P."/>
            <person name="Martins L.C."/>
            <person name="Pogorelov V.M."/>
            <person name="DiBerto J.F."/>
            <person name="Slocum S.T."/>
            <person name="Huang X.P."/>
            <person name="Kumar J.M."/>
            <person name="Robertson M.J."/>
            <person name="Panova O."/>
            <person name="Seven A.B."/>
            <person name="Wetsel A.Q."/>
            <person name="Wetsel W.C."/>
            <person name="Irwin J.J."/>
            <person name="Skiniotis G."/>
            <person name="Shoichet B.K."/>
            <person name="Roth B.L."/>
            <person name="Ellman J.A."/>
        </authorList>
    </citation>
    <scope>STRUCTURE BY ELECTRON MICROSCOPY (3.45 ANGSTROMS) IN COMPLEX WITH HTR2A; GNAI2/GNAS CHIMERA; GNG2; STABILIZING ANTIBODY AND SYNTHETIC HTR2A TETRAHYDROPYRIDINE AGONIST</scope>
</reference>
<reference evidence="41 55" key="35">
    <citation type="journal article" date="2022" name="Nat. Commun.">
        <title>Activation and allosteric regulation of the orphan GPR88-Gi1 signaling complex.</title>
        <authorList>
            <person name="Chen G."/>
            <person name="Xu J."/>
            <person name="Inoue A."/>
            <person name="Schmidt M.F."/>
            <person name="Bai C."/>
            <person name="Lu Q."/>
            <person name="Gmeiner P."/>
            <person name="Liu Z."/>
            <person name="Du Y."/>
        </authorList>
    </citation>
    <scope>STRUCTURE BY ELECTRON MICROSCOPY (2.40 ANGSTROMS) OF 2-340 IN COMPLEX WITH GPR88; GNAI1; GNG2; GI-STABILIZING ANTIBODY SCFV16 AND SYNTHETIC AGONIST 2-PCCA</scope>
</reference>
<reference evidence="48 49 50" key="36">
    <citation type="journal article" date="2022" name="Nat. Struct. Mol. Biol.">
        <title>Inactive and active state structures template selective tools for the human 5-HT5A receptor.</title>
        <authorList>
            <person name="Zhang S."/>
            <person name="Chen H."/>
            <person name="Zhang C."/>
            <person name="Yang Y."/>
            <person name="Popov P."/>
            <person name="Liu J."/>
            <person name="Krumm B.E."/>
            <person name="Cao C."/>
            <person name="Kim K."/>
            <person name="Xiong Y."/>
            <person name="Katritch V."/>
            <person name="Shoichet B.K."/>
            <person name="Jin J."/>
            <person name="Fay J.F."/>
            <person name="Roth B.L."/>
        </authorList>
    </citation>
    <scope>STRUCTURE BY ELECTRON MICROSCOPY (2.73 ANGSTROMS) IN COMPLEX WITH HTR5A AND GNG2</scope>
    <scope>FUNCTION</scope>
</reference>
<reference evidence="47" key="37">
    <citation type="journal article" date="2022" name="Neuron">
        <title>Signaling snapshots of a serotonin receptor activated by the prototypical psychedelic LSD.</title>
        <authorList>
            <person name="Cao C."/>
            <person name="Barros-Alvarez X."/>
            <person name="Zhang S."/>
            <person name="Kim K."/>
            <person name="Daemgen M.A."/>
            <person name="Panova O."/>
            <person name="Suomivuori C.M."/>
            <person name="Fay J.F."/>
            <person name="Zhong X."/>
            <person name="Krumm B.E."/>
            <person name="Gumpper R.H."/>
            <person name="Seven A.B."/>
            <person name="Robertson M.J."/>
            <person name="Krogan N.J."/>
            <person name="Huettenhain R."/>
            <person name="Nichols D.E."/>
            <person name="Dror R.O."/>
            <person name="Skiniotis G."/>
            <person name="Roth B.L."/>
        </authorList>
    </citation>
    <scope>STRUCTURE BY ELECTRON MICROSCOPY (2.7 ANGSTROMS) IN COMPLEX WITH GNG2 AND HTR2B</scope>
    <scope>FUNCTION</scope>
</reference>
<reference key="38">
    <citation type="journal article" date="2022" name="Sci. Adv.">
        <title>Atypical structural snapshots of human cytomegalovirus GPCR interactions with host G proteins.</title>
        <authorList>
            <person name="Tsutsumi N."/>
            <person name="Maeda S."/>
            <person name="Qu Q."/>
            <person name="Voegele M."/>
            <person name="Jude K.M."/>
            <person name="Suomivuori C.M."/>
            <person name="Panova O."/>
            <person name="Waghray D."/>
            <person name="Kato H.E."/>
            <person name="Velasco A."/>
            <person name="Dror R.O."/>
            <person name="Skiniotis G."/>
            <person name="Kobilka B.K."/>
            <person name="Garcia K.C."/>
        </authorList>
    </citation>
    <scope>STRUCTURE BY ELECTRON MICROSCOPY (3.10 ANGSTROMS) OF 2-340 IN COMPLEX WITH GNAI1; GNG2 AND HHV-5 US27</scope>
    <scope>STRUCTURE BY ELECTRON MICROSCOPY (3.50 ANGSTROMS) OF 2-340 IN COMPLEX WITH GNA11; GNG2; CX3CL1 AND HHV-5 US28</scope>
</reference>
<reference evidence="67" key="39">
    <citation type="journal article" date="2023" name="Biochem. Biophys. Res. Commun.">
        <title>Structural insight into the selective agonist ST1936 binding of serotonin receptor 5-HT6.</title>
        <authorList>
            <person name="Pei Y."/>
            <person name="Wen X."/>
            <person name="Guo S.C."/>
            <person name="Yang Z.S."/>
            <person name="Zhang R."/>
            <person name="Xiao P."/>
            <person name="Sun J.P."/>
        </authorList>
    </citation>
    <scope>X-RAY CRYSTALLOGRAPHY (3.09 ANGSTROMS) IN COMPLEX WITH HTR6; GNG2 AND GNAS2</scope>
    <scope>FUNCTION</scope>
</reference>
<reference evidence="78 79" key="40">
    <citation type="journal article" date="2023" name="Cell">
        <title>Structural and signaling mechanisms of TAAR1 enabled preferential agonist design.</title>
        <authorList>
            <person name="Shang P."/>
            <person name="Rong N."/>
            <person name="Jiang J.J."/>
            <person name="Cheng J."/>
            <person name="Zhang M.H."/>
            <person name="Kang D."/>
            <person name="Qi L."/>
            <person name="Guo L."/>
            <person name="Yang G.M."/>
            <person name="Liu Q."/>
            <person name="Zhou Z."/>
            <person name="Li X.B."/>
            <person name="Zhu K.K."/>
            <person name="Meng Q.B."/>
            <person name="Han X."/>
            <person name="Yan W."/>
            <person name="Kong Y."/>
            <person name="Yang L."/>
            <person name="Wang X."/>
            <person name="Lei D."/>
            <person name="Feng X."/>
            <person name="Liu X."/>
            <person name="Yu X."/>
            <person name="Wang Y."/>
            <person name="Li Q."/>
            <person name="Shao Z.H."/>
            <person name="Yang F."/>
            <person name="Sun J.P."/>
        </authorList>
    </citation>
    <scope>STRUCTURE BY ELECTRON MICROSCOPY (2.9 ANGSTROMS) IN COMPLEX WITH GNAI1; TAAR1 AND GNG2</scope>
    <scope>FUNCTION</scope>
</reference>
<reference evidence="74 75 76 77" key="41">
    <citation type="journal article" date="2023" name="Nature">
        <title>Recognition of methamphetamine and other amines by trace amine receptor TAAR1.</title>
        <authorList>
            <person name="Liu H."/>
            <person name="Zheng Y."/>
            <person name="Wang Y."/>
            <person name="Wang Y."/>
            <person name="He X."/>
            <person name="Xu P."/>
            <person name="Huang S."/>
            <person name="Yuan Q."/>
            <person name="Zhang X."/>
            <person name="Wang L."/>
            <person name="Jiang K."/>
            <person name="Chen H."/>
            <person name="Li Z."/>
            <person name="Liu W."/>
            <person name="Wang S."/>
            <person name="Xu H.E."/>
            <person name="Xu F."/>
        </authorList>
    </citation>
    <scope>STRUCTURE BY ELECTRON MICROSCOPY (2.6 ANGSTROMS) IN COMPLEX WITH TAAR1; HTR1A; GNAI1 AND GNG2</scope>
    <scope>FUNCTION</scope>
</reference>
<reference evidence="33 62 63 64 65 66 68" key="42">
    <citation type="journal article" date="2023" name="Nature">
        <title>Ligand recognition and G-protein coupling of trace amine receptor TAAR1.</title>
        <authorList>
            <person name="Xu Z."/>
            <person name="Guo L."/>
            <person name="Yu J."/>
            <person name="Shen S."/>
            <person name="Wu C."/>
            <person name="Zhang W."/>
            <person name="Zhao C."/>
            <person name="Deng Y."/>
            <person name="Tian X."/>
            <person name="Feng Y."/>
            <person name="Hou H."/>
            <person name="Su L."/>
            <person name="Wang H."/>
            <person name="Guo S."/>
            <person name="Wang H."/>
            <person name="Wang K."/>
            <person name="Chen P."/>
            <person name="Zhao J."/>
            <person name="Zhang X."/>
            <person name="Yong X."/>
            <person name="Cheng L."/>
            <person name="Liu L."/>
            <person name="Yang S."/>
            <person name="Yang F."/>
            <person name="Wang X."/>
            <person name="Yu X."/>
            <person name="Xu Y."/>
            <person name="Sun J.P."/>
            <person name="Yan W."/>
            <person name="Shao Z."/>
        </authorList>
    </citation>
    <scope>STRUCTURE BY ELECTRON MICROSCOPY (2.84 ANGSTROMS) IN COMPLEX WITH TAAR1 AND GNG2</scope>
    <scope>FUNCTION</scope>
</reference>
<reference evidence="61" key="43">
    <citation type="journal article" date="2023" name="Proc. Natl. Acad. Sci. U.S.A.">
        <title>Structural insights into constitutive activity of 5-HT6 receptor.</title>
        <authorList>
            <person name="He L."/>
            <person name="Zhao Q."/>
            <person name="Qi J."/>
            <person name="Wang Y."/>
            <person name="Han W."/>
            <person name="Chen Z."/>
            <person name="Cong Y."/>
            <person name="Wang S."/>
        </authorList>
    </citation>
    <scope>STRUCTURE BY ELECTRON MICROSCOPY (3.3 ANGSTROMS) IN COMPLEX WITH HTR6 AND GNB2</scope>
    <scope>FUNCTION</scope>
</reference>
<reference evidence="71" key="44">
    <citation type="journal article" date="2023" name="Proc. Natl. Acad. Sci. U.S.A.">
        <title>The mechanism of Galphaq regulation of PLCbeta3-catalyzed PIP2 hydrolysis.</title>
        <authorList>
            <person name="Falzone M.E."/>
            <person name="MacKinnon R."/>
        </authorList>
    </citation>
    <scope>STRUCTURE BY ELECTRON MICROSCOPY (3.37 ANGSTROMS) OF 7-359 IN COMPLEX WITH GNAQ AND PLCB3</scope>
    <scope>FUNCTION</scope>
</reference>
<reference evidence="69" key="45">
    <citation type="journal article" date="2024" name="Cell">
        <title>Flexible scaffold-based cheminformatics approach for polypharmacological drug design.</title>
        <authorList>
            <person name="Chen Z."/>
            <person name="Yu J."/>
            <person name="Wang H."/>
            <person name="Xu P."/>
            <person name="Fan L."/>
            <person name="Sun F."/>
            <person name="Huang S."/>
            <person name="Zhang P."/>
            <person name="Huang H."/>
            <person name="Gu S."/>
            <person name="Zhang B."/>
            <person name="Zhou Y."/>
            <person name="Wan X."/>
            <person name="Pei G."/>
            <person name="Xu H.E."/>
            <person name="Cheng J."/>
            <person name="Wang S."/>
        </authorList>
    </citation>
    <scope>STRUCTURE BY ELECTRON MICROSCOPY (3.0 ANGSTROMS) IN COMPLEX WITH HTR1A; GNG2 AND GNAI1</scope>
    <scope>FUNCTION</scope>
</reference>
<reference evidence="70" key="46">
    <citation type="journal article" date="2024" name="Nat. Commun.">
        <title>Molecular basis of human trace amine-associated receptor 1 activation.</title>
        <authorList>
            <person name="Zilberg G."/>
            <person name="Parpounas A.K."/>
            <person name="Warren A.L."/>
            <person name="Yang S."/>
            <person name="Wacker D."/>
        </authorList>
    </citation>
    <scope>STRUCTURE BY ELECTRON MICROSCOPY (3.35 ANGSTROMS) IN COMPLEX WITH HTR1A; TAAR1; GNAI1 AND GNG2</scope>
    <scope>FUNCTION</scope>
</reference>
<reference evidence="72 73" key="47">
    <citation type="journal article" date="2024" name="Nature">
        <title>Bitter taste receptor activation by cholesterol and an intracellular tastant.</title>
        <authorList>
            <person name="Kim Y."/>
            <person name="Gumpper R.H."/>
            <person name="Liu Y."/>
            <person name="Kocak D.D."/>
            <person name="Xiong Y."/>
            <person name="Cao C."/>
            <person name="Deng Z."/>
            <person name="Krumm B.E."/>
            <person name="Jain M.K."/>
            <person name="Zhang S."/>
            <person name="Jin J."/>
            <person name="Roth B.L."/>
        </authorList>
    </citation>
    <scope>STRUCTURE BY ELECTRON MICROSCOPY (2.68 ANGSTROMS) OF 2-340 IN COMPLEXES WITH TAS2R14; G-PROTEINS; CHOLESTEROL AND AGONIST CMPD28.1</scope>
    <scope>SUBUNIT</scope>
    <scope>WD REPEATS</scope>
</reference>
<reference evidence="80 81 82 83 84 85 86 87" key="48">
    <citation type="journal article" date="2024" name="Nature">
        <title>Bitter taste TAS2R14 activation by intracellular tastants and cholesterol.</title>
        <authorList>
            <person name="Hu X."/>
            <person name="Ao W."/>
            <person name="Gao M."/>
            <person name="Wu L."/>
            <person name="Pei Y."/>
            <person name="Liu S."/>
            <person name="Wu Y."/>
            <person name="Zhao F."/>
            <person name="Sun Q."/>
            <person name="Liu J."/>
            <person name="Jiang L."/>
            <person name="Wang X."/>
            <person name="Li Y."/>
            <person name="Tan Q."/>
            <person name="Cheng J."/>
            <person name="Yang F."/>
            <person name="Yang C."/>
            <person name="Sun J."/>
            <person name="Hua T."/>
            <person name="Liu Z.J."/>
        </authorList>
    </citation>
    <scope>STRUCTURE BY ELECTRON MICROSCOPY (2.77 ANGSTROMS) IN COMPLEXES WITH TAS2R14; G-PROTEINS; ARISTOLOCHIC ACID; FLUFENAMIC ACID AND AGONIST CMPD28.1</scope>
    <scope>SUBUNIT</scope>
    <scope>WD REPEATS</scope>
</reference>
<reference key="49">
    <citation type="journal article" date="2015" name="Nat. Med.">
        <title>Mutations in G protein beta subunits promote transformation and kinase inhibitor resistance.</title>
        <authorList>
            <person name="Yoda A."/>
            <person name="Adelmant G."/>
            <person name="Tamburini J."/>
            <person name="Chapuy B."/>
            <person name="Shindoh N."/>
            <person name="Yoda Y."/>
            <person name="Weigert O."/>
            <person name="Kopp N."/>
            <person name="Wu S.C."/>
            <person name="Kim S.S."/>
            <person name="Liu H."/>
            <person name="Tivey T."/>
            <person name="Christie A.L."/>
            <person name="Elpek K.G."/>
            <person name="Card J."/>
            <person name="Gritsman K."/>
            <person name="Gotlib J."/>
            <person name="Deininger M.W."/>
            <person name="Makishima H."/>
            <person name="Turley S.J."/>
            <person name="Javidi-Sharifi N."/>
            <person name="Maciejewski J.P."/>
            <person name="Jaiswal S."/>
            <person name="Ebert B.L."/>
            <person name="Rodig S.J."/>
            <person name="Tyner J.W."/>
            <person name="Marto J.A."/>
            <person name="Weinstock D.M."/>
            <person name="Lane A.A."/>
        </authorList>
    </citation>
    <scope>CHARACTERIZATION OF VARIANTS MRD42 ASN-80 AND THR-80</scope>
</reference>
<reference key="50">
    <citation type="journal article" date="2016" name="Neurol. Genet.">
        <title>Novel GNB1 missense mutation in a patient with generalized dystonia, hypotonia, and intellectual disability.</title>
        <authorList>
            <person name="Steinruecke S."/>
            <person name="Lohmann K."/>
            <person name="Domingo A."/>
            <person name="Rolfs A."/>
            <person name="Baeumer T."/>
            <person name="Spiegler J."/>
            <person name="Hartmann C."/>
            <person name="Muenchau A."/>
        </authorList>
    </citation>
    <scope>VARIANT MRD42 GLY-118</scope>
</reference>
<reference key="51">
    <citation type="journal article" date="2017" name="Hum. Mol. Genet.">
        <title>Novel GNB1 mutations disrupt assembly and function of G protein heterotrimers and cause global developmental delay in humans.</title>
        <authorList>
            <person name="Lohmann K."/>
            <person name="Masuho I."/>
            <person name="Patil D.N."/>
            <person name="Baumann H."/>
            <person name="Hebert E."/>
            <person name="Steinruecke S."/>
            <person name="Trujillano D."/>
            <person name="Skamangas N.K."/>
            <person name="Dobricic V."/>
            <person name="Huening I."/>
            <person name="Gillessen-Kaesbach G."/>
            <person name="Westenberger A."/>
            <person name="Savic-Pavicevic D."/>
            <person name="Muenchau A."/>
            <person name="Oprea G."/>
            <person name="Klein C."/>
            <person name="Rolfs A."/>
            <person name="Martemyanov K.A."/>
        </authorList>
    </citation>
    <scope>VARIANTS MRD42 PHE-30; GLY-52; VAL-64; ARG-91; THR-92; SER-94; LEU-96; THR-106; GLY-118 AND GLN-337</scope>
    <scope>CHARACTERIZATION OF VARIANTS MRD42 PHE-30; GLY-52; VAL-64; ARG-91; THR-92; SER-94; LEU-96; THR-106; GLY-118 AND GLN-337</scope>
</reference>